<proteinExistence type="evidence at protein level"/>
<sequence length="4660" mass="519208">MERGAAAAAWMLLLAIAACLAPVSGQECGSGNFRCDNGYCIPASWRCDGTRDCLDDTDEIGCPPRSCGSGFFLCPAEGTCIPSSWVCDQDKDCSDGADEQQNCPGTTCSSQQLTCSNGQCVPIEYRCDHVSDCPDGSDERNCYYPTCDQLTCANGACYNTSQKCDHKVDCRDSSDEANCTTLCSQKEFQCGSGECILRAYVCDHDNDCEDNSDEHNCNYDTCGGHQFTCSNGQCINQNWVCDGDDDCQDSGDEDGCESNQRHHTCYPREWACPGSGRCISMDKVCDGVPDCPEGEDENNATSGRYCGTGLCSILNCEYQCHQTPYGGECFCPPGHIINSNDSRTCIDFDDCQIWGICDQKCESRQGRHQCLCEEGYILERGQHCKSNDSFSAASIIFSNGRDLLVGDLHGRNFRILAESKNRGIVMGVDFHYQKHRVFWTDPMQAKVFSTDINGLNTQEILNVSIDAPENLAVDWINNKLYLVETRVNRIDVVNLEGNQRVTLITENLGHPRGIALDPTVGYLFFSDWGSLSGQPKVERAFMDGSNRKDLVTTKLGWPAGITLDLVSKRVYWVDSRYDYIETVTYDGIQRKTVARGGSLVPHPFGISLFEEHVFFTDWTKMAVMKANKFTDTNPQVYHQSSLTPFGVTVYHALRQPNATNPCGNNNGGCAQICVLSHRTDNGGLGYRCKCEFGFELDADEHHCVAVKNFLLFSSQTAVRGIPFTLSTQEDVMVPVTGSPSFFVGIDFDAQHSTIFYSDLSKNIIYQQKIDGTGKEVITANRLQNVECLSFDWISRNLYWTDGGSKSVTVMKLADKSRRQIISNLNNPRSIVVHPAAGYMFLSDWFRPAKIMRAWSDGSHLMPIVNTSLGWPNGLAIDWSTSRLYWVDAFFDKIEHSNLDGLDRKRLGHVDQMTHPFGLTVFKDNVFLTDWRLGAIIRVRKSDGGDMTVVRRGISSIMHVKAYDADLQTGTNYCSQTTHPNGDCSHFCFPVPNFQRVCGCPYGMKLQRDQMTCEGDPAREPPTQQCGSSSFPCNNGKCVPSIFRCDGVDDCHDNSDEHQCGALNNTCSSSAFTCVHGGQCIPGQWRCDKQNDCLDGSDEQNCPTRSPSSTCPPTSFTCDNHMCIPKEWVCDTDNDCSDGSDEKNCQASGTCHPTQFRCPDHRCISPLYVCDGDKDCVDGSDEAGCVLNCTSSQFKCADGSSCINSRYRCDGVYDCKDNSDEAGCPTRPPGMCHPDEFQCQGDGTCIPNTWECDGHPDCIQGSDEHNGCVPKTCSPSHFLCDNGNCIYNSWVCDGDNDCRDMSDEKDCPTQPFHCPSSQWQCPGYSICVNLSALCDGVFDCPNGTDESPLCNQDSCLHFNGGCTHRCIQGPFGATCVCPIGYQLANDTKTCEDVNECDIPGFCSQHCVNMRGSFRCACDPEYTLESDGRTCKVTASENLLLVVASRDKIIMDNITAHTHNIYSLVQDVSFVVALDFDSVTGRVFWSDLLEGKTWSAFQNGTDKRVVHDSGLSLTEMIAVDWIGRNIYWTDYTLETIEVSKIDGSHRTVLISKNVTKPRGLALDPRMGDNVMFWSDWGHHPRIERASMDGTMRTVIVQEKIYWPCGLSIDYPNRLIYFMDAYLDYIEFCDYDGQNRRQVIASDLVLHHPHALTLFEDSVFWTDRGTHQVMQANKWHGRNQSVVMYSVPQPLGIIAIHPSRQPSSPNPCASATCSHLCLLSAQEPRHYSCACPSGWNLSDDSVNCVRGDQPFLISVRENVIFGISLDPEVKSNDAMVPISGIQHGYDVEFDDSEQFIYWVENPGEIHRVKTDGSNRTAFAPLSLLGSSLGLALDWVSRNIYYTTPASRSIEVLTLRGDTRYGKTLITNDGTPLGVGFPVGIAVDPARGKLYWSDHGTDSGVPAKIASANMDGTSLKILFTGNMEHLEVVTLDIQEQKLYWAVTSRGVIERGNVDGTERMILVHHLAHPWGLVVHGSFLYYSDEQYEVIERVDKSSGSNKVVFRDNIPYLRGLRVYHHRNAADSSNGCSNNPNACQQICLPVPGGMFSCACASGFKLSPDGRSCSPYNSFIVVSMLPAVRGFSLELSDHSEAMVPVAGQGRNVLHADVDVANGFIYWCDFSSSVRSSNGIRRIKPNGSNFTNIVTYGIGANGIRGVAVDWVAGNLYFTNAFVYETLIEVIRINTTYRRVLLKVSVDMPRHIVVDPKHRYLFWADYGQKPKIERSFLDCTNRTVLVSEGIVTPRGLAVDHDTGYIYWVDDSLDIIARIHRDGGESQVVRYGSRYPTPYGITVFGESIIWVDRNLRKVFQASKQPGNTDPPTVIRDSINLLRDVTIFDEHVQPLSPAELNNNPCLQSNGGCSHFCFALPELPTPKCGCAFGTLEDDGKNCATSREDFLIYSLNNSLRSLHFDPQDHNLPFQAISVEGMAIALDYDRRNNRIFFTQKLNPIRGQISYVNLYSGASSPTILLSNIGVTDGIAFDWINRRIYYSDFSNQTINSMAEDGSNRAVIARVSKPRAIVLDPCRGYMYWTDWGTNAKIERATLGGNFRVPIVNTSLVWPNGLTLDLETDLLYWADASLQKIERSTLTGSNREVVISTAFHSFGLTVYGQYIYWTDFYTKKIYRANKYDGSDLIAMTTRLPTQPSGISTVVKTQQQQCSNPCDQFNGGCSHICAPGPNGAECQCPHEGSWYLANDNKYCVVDTGARCNQFQFTCLNGRCISQDWKCDNDNDCGDGSDELPTVCAFHTCRSTAFTCANGRCVPYHYRCDFYNDCGDNSDEAGCLFRSCNSTTEFTCSNGRCIPLSYVCNGINNCHDNDTSDEKNCPPITCQPDFAKCQTTNICVPRAFLCDGDNDCGDGSDENPIYCASHTCRSNEFQCVSPHRCIPSYWFCDGEADCVDSSDEPDTCGHSLNSCSANQFHCDNGRCISSSWVCDGDNDCGDMSDEDQRHHCELQNCSSTEFTCINSRPPNRRCIPQHWVCDGDADCADALDELQNCTMRACSTGEFSCANGRCIRQSFRCDRRNDCGDYSDERGCSYPPCRDDQFTCQNGQCITKLYVCDEDNDCGDGSDEQEHLCHTPEPTCPPHQFRCDNGHCIEMGTVCNHVDDCSDNSDEKGCGINECQDSSISHCDHNCTDTITSFYCSCLPGYKLMSDKRTCVDIDECKETPQLCSQKCENVIGSYICKCAPGYIREPDGKSCRQNSNIEPYLVFSNRYYIRNLTIDGTSYSLILQGLGNVVALDFDRVEERLYWIDAEKQIIERMFLNKTNQETIISHRLRRAESLAVDWVSRKLYWLDAILDCLFVSDLEGRQRKMLAQHCVDANNTFCFENPRGIVLHPQRGYVYWADWGDHAYIARIGMDGTNKTVIISTKIEWPNAITIDYTNDLLYWADAHLGYIEFSDLEGHHRHTVYDGTLPHPFALTIFEDTVFWTDWNTRTVEKGNKYDGSGRVVLVNTTHKPFDIHVLHPYRQPIMSNPCATNNGGCSHLCLIKAGGRGFTCECPDDFQTVQLRDRTLCMPMCSSTQFLCGNNEKCIPIWWKCDGQKDCSDGSDESDLCPHRFCRLGQFQCRDGNCTSPQALCNARQDCADGSDEDRVLCEHHRCEANEWQCANKRCIPEYWQCDSVDDCLDNSDEDPSHCASRTCRPGQFKCNNGRCIPQSWKCDVDNDCGDYSDEPIHECMTAAYNCDNHTEFSCKTNYRCIPQWAVCNGFDDCRDNSDEQGCESVPCHPSGDFRCGNHHCIPLRWKCDGIDDCGDNSDEESCVPRECTESEFRCADQQCIPSRWVCDQENDCGDNSDERDCEMKTCHPEHFQCTSGHCVPKALACDGRADCLDASDESACPTRFPNGTYCPAAMFECKNHVCIQSFWICDGENDCVDGSDEEIHLCFNVPCESPQRFRCDNSRCIYGHQLCNGVDDCGDGSDEKEEHCRKPTHKPCTDTEYKCSNGNCVSQHYVCDNVDDCGDLSDETGCNLGENRTCAEKICEQNCTQLSNGGFICSCRPGFKPSTLDKNSCQDINECEEFGICPQSCRNSKGSYECFCVDGFKSMSTHYGERCAADGSPPLLLLPENVRIRKYNISSEKFSEYLEEEEHIQAIDYDWDPEGIGLSVVYYTVLSQGSQFGAIKRAYLPDFESGSNNPVREVDLGLKYLMQPDGLAVDWVGRHIYWSDAKSQRIEVATLDGRYRKWLITTQLDQPAAIAVNPKLGLMFWTDQGKQPKIESAWMNGEHRSVLASANLGWPNGLSIDYLNGDRIYWSDSKEDVIESIKYDGTDRRLIINDAMKPFSLDIFEDQLYWVAKEKGEVWRQNKFGKGNKEKLLVVNPWLTQVRIFHQLRYNQSVSNPCKQVCSHLCLLRPGGYSCACPQGSDFVTGSTVECDAASELPITMPSPCRCMHGGSCYFDENDLPKCKCSSGYSGEYCEIGLSRGIPPGTTMALLLTFAMVIIVGALVLVGFFHYRKTGSLLPSLPKLPSLSSLAKPSENGNGVTFRSGADVNMDIGVSPFGPETIIDRSMAMNEQFVMEVGKQPVIFENPMYAAKDSTSKVGLAVQGPSVSSQVTVPENVENQNYGRSIDPSEIVPEPKPASPGADETQGTKWNIFKRKPKQTTNFENPIYAEMDTEQKEAVAVAPPPSPSLPAKASKRSSTPGYTATEDTFKDTANLVKEDSDV</sequence>
<dbReference type="EMBL" id="AL845489">
    <property type="status" value="NOT_ANNOTATED_CDS"/>
    <property type="molecule type" value="Genomic_DNA"/>
</dbReference>
<dbReference type="EMBL" id="AK166702">
    <property type="protein sequence ID" value="BAE38957.1"/>
    <property type="molecule type" value="mRNA"/>
</dbReference>
<dbReference type="EMBL" id="Y08566">
    <property type="protein sequence ID" value="CAA69877.1"/>
    <property type="molecule type" value="mRNA"/>
</dbReference>
<dbReference type="EMBL" id="AF197160">
    <property type="protein sequence ID" value="AAF61488.1"/>
    <property type="molecule type" value="mRNA"/>
</dbReference>
<dbReference type="CCDS" id="CCDS38135.1"/>
<dbReference type="RefSeq" id="NP_001074557.1">
    <property type="nucleotide sequence ID" value="NM_001081088.2"/>
</dbReference>
<dbReference type="PDB" id="8EM4">
    <property type="method" value="EM"/>
    <property type="resolution" value="2.83 A"/>
    <property type="chains" value="A/B=1-4660"/>
</dbReference>
<dbReference type="PDB" id="8EM7">
    <property type="method" value="EM"/>
    <property type="resolution" value="2.97 A"/>
    <property type="chains" value="A/B=1-4660"/>
</dbReference>
<dbReference type="PDBsum" id="8EM4"/>
<dbReference type="PDBsum" id="8EM7"/>
<dbReference type="EMDB" id="EMD-28233"/>
<dbReference type="EMDB" id="EMD-28241"/>
<dbReference type="SMR" id="A2ARV4"/>
<dbReference type="BioGRID" id="200005">
    <property type="interactions" value="9"/>
</dbReference>
<dbReference type="CORUM" id="A2ARV4"/>
<dbReference type="FunCoup" id="A2ARV4">
    <property type="interactions" value="479"/>
</dbReference>
<dbReference type="IntAct" id="A2ARV4">
    <property type="interactions" value="9"/>
</dbReference>
<dbReference type="STRING" id="10090.ENSMUSP00000079752"/>
<dbReference type="TCDB" id="9.B.87.1.1">
    <property type="family name" value="the selenoprotein p receptor (selp-receptor) family"/>
</dbReference>
<dbReference type="GlyCosmos" id="A2ARV4">
    <property type="glycosylation" value="43 sites, 45 glycans"/>
</dbReference>
<dbReference type="GlyGen" id="A2ARV4">
    <property type="glycosylation" value="43 sites, 5 N-linked glycans (10 sites)"/>
</dbReference>
<dbReference type="iPTMnet" id="A2ARV4"/>
<dbReference type="PhosphoSitePlus" id="A2ARV4"/>
<dbReference type="jPOST" id="A2ARV4"/>
<dbReference type="PaxDb" id="10090-ENSMUSP00000079752"/>
<dbReference type="PeptideAtlas" id="A2ARV4"/>
<dbReference type="ProteomicsDB" id="252677"/>
<dbReference type="Antibodypedia" id="962">
    <property type="antibodies" value="358 antibodies from 35 providers"/>
</dbReference>
<dbReference type="Ensembl" id="ENSMUST00000080953.12">
    <property type="protein sequence ID" value="ENSMUSP00000079752.6"/>
    <property type="gene ID" value="ENSMUSG00000027070.15"/>
</dbReference>
<dbReference type="GeneID" id="14725"/>
<dbReference type="KEGG" id="mmu:14725"/>
<dbReference type="UCSC" id="uc008jyc.1">
    <property type="organism name" value="mouse"/>
</dbReference>
<dbReference type="AGR" id="MGI:95794"/>
<dbReference type="CTD" id="4036"/>
<dbReference type="MGI" id="MGI:95794">
    <property type="gene designation" value="Lrp2"/>
</dbReference>
<dbReference type="VEuPathDB" id="HostDB:ENSMUSG00000027070"/>
<dbReference type="eggNOG" id="KOG1215">
    <property type="taxonomic scope" value="Eukaryota"/>
</dbReference>
<dbReference type="GeneTree" id="ENSGT00940000157232"/>
<dbReference type="HOGENOM" id="CLU_000085_1_1_1"/>
<dbReference type="InParanoid" id="A2ARV4"/>
<dbReference type="OrthoDB" id="21182at2759"/>
<dbReference type="PhylomeDB" id="A2ARV4"/>
<dbReference type="TreeFam" id="TF315253"/>
<dbReference type="Reactome" id="R-MMU-8856825">
    <property type="pathway name" value="Cargo recognition for clathrin-mediated endocytosis"/>
</dbReference>
<dbReference type="Reactome" id="R-MMU-8856828">
    <property type="pathway name" value="Clathrin-mediated endocytosis"/>
</dbReference>
<dbReference type="Reactome" id="R-MMU-975634">
    <property type="pathway name" value="Retinoid metabolism and transport"/>
</dbReference>
<dbReference type="Reactome" id="R-MMU-9758890">
    <property type="pathway name" value="Transport of RCbl within the body"/>
</dbReference>
<dbReference type="BioGRID-ORCS" id="14725">
    <property type="hits" value="4 hits in 76 CRISPR screens"/>
</dbReference>
<dbReference type="ChiTaRS" id="Lrp2">
    <property type="organism name" value="mouse"/>
</dbReference>
<dbReference type="PRO" id="PR:A2ARV4"/>
<dbReference type="Proteomes" id="UP000000589">
    <property type="component" value="Chromosome 2"/>
</dbReference>
<dbReference type="RNAct" id="A2ARV4">
    <property type="molecule type" value="protein"/>
</dbReference>
<dbReference type="Bgee" id="ENSMUSG00000027070">
    <property type="expression patterns" value="Expressed in vestibular membrane of cochlear duct and 140 other cell types or tissues"/>
</dbReference>
<dbReference type="ExpressionAtlas" id="A2ARV4">
    <property type="expression patterns" value="baseline and differential"/>
</dbReference>
<dbReference type="GO" id="GO:0045177">
    <property type="term" value="C:apical part of cell"/>
    <property type="evidence" value="ECO:0000314"/>
    <property type="project" value="MGI"/>
</dbReference>
<dbReference type="GO" id="GO:0016324">
    <property type="term" value="C:apical plasma membrane"/>
    <property type="evidence" value="ECO:0000314"/>
    <property type="project" value="UniProtKB"/>
</dbReference>
<dbReference type="GO" id="GO:0030424">
    <property type="term" value="C:axon"/>
    <property type="evidence" value="ECO:0000314"/>
    <property type="project" value="UniProtKB"/>
</dbReference>
<dbReference type="GO" id="GO:0005903">
    <property type="term" value="C:brush border"/>
    <property type="evidence" value="ECO:0000314"/>
    <property type="project" value="MGI"/>
</dbReference>
<dbReference type="GO" id="GO:0031526">
    <property type="term" value="C:brush border membrane"/>
    <property type="evidence" value="ECO:0000314"/>
    <property type="project" value="MGI"/>
</dbReference>
<dbReference type="GO" id="GO:0005905">
    <property type="term" value="C:clathrin-coated pit"/>
    <property type="evidence" value="ECO:0000314"/>
    <property type="project" value="MGI"/>
</dbReference>
<dbReference type="GO" id="GO:0030425">
    <property type="term" value="C:dendrite"/>
    <property type="evidence" value="ECO:0000314"/>
    <property type="project" value="UniProtKB"/>
</dbReference>
<dbReference type="GO" id="GO:0030139">
    <property type="term" value="C:endocytic vesicle"/>
    <property type="evidence" value="ECO:0000314"/>
    <property type="project" value="MGI"/>
</dbReference>
<dbReference type="GO" id="GO:0005783">
    <property type="term" value="C:endoplasmic reticulum"/>
    <property type="evidence" value="ECO:0000314"/>
    <property type="project" value="MGI"/>
</dbReference>
<dbReference type="GO" id="GO:0005768">
    <property type="term" value="C:endosome"/>
    <property type="evidence" value="ECO:0000314"/>
    <property type="project" value="MGI"/>
</dbReference>
<dbReference type="GO" id="GO:0031904">
    <property type="term" value="C:endosome lumen"/>
    <property type="evidence" value="ECO:0007669"/>
    <property type="project" value="UniProtKB-SubCell"/>
</dbReference>
<dbReference type="GO" id="GO:0009897">
    <property type="term" value="C:external side of plasma membrane"/>
    <property type="evidence" value="ECO:0000314"/>
    <property type="project" value="UniProtKB"/>
</dbReference>
<dbReference type="GO" id="GO:0005794">
    <property type="term" value="C:Golgi apparatus"/>
    <property type="evidence" value="ECO:0000314"/>
    <property type="project" value="MGI"/>
</dbReference>
<dbReference type="GO" id="GO:0016020">
    <property type="term" value="C:membrane"/>
    <property type="evidence" value="ECO:0000314"/>
    <property type="project" value="MGI"/>
</dbReference>
<dbReference type="GO" id="GO:0005886">
    <property type="term" value="C:plasma membrane"/>
    <property type="evidence" value="ECO:0000314"/>
    <property type="project" value="MGI"/>
</dbReference>
<dbReference type="GO" id="GO:0043235">
    <property type="term" value="C:receptor complex"/>
    <property type="evidence" value="ECO:0000250"/>
    <property type="project" value="UniProtKB"/>
</dbReference>
<dbReference type="GO" id="GO:0005509">
    <property type="term" value="F:calcium ion binding"/>
    <property type="evidence" value="ECO:0000250"/>
    <property type="project" value="UniProtKB"/>
</dbReference>
<dbReference type="GO" id="GO:0051087">
    <property type="term" value="F:protein-folding chaperone binding"/>
    <property type="evidence" value="ECO:0007669"/>
    <property type="project" value="Ensembl"/>
</dbReference>
<dbReference type="GO" id="GO:0017124">
    <property type="term" value="F:SH3 domain binding"/>
    <property type="evidence" value="ECO:0007669"/>
    <property type="project" value="UniProtKB-KW"/>
</dbReference>
<dbReference type="GO" id="GO:0035904">
    <property type="term" value="P:aorta development"/>
    <property type="evidence" value="ECO:0000315"/>
    <property type="project" value="MGI"/>
</dbReference>
<dbReference type="GO" id="GO:0008283">
    <property type="term" value="P:cell population proliferation"/>
    <property type="evidence" value="ECO:0000315"/>
    <property type="project" value="MGI"/>
</dbReference>
<dbReference type="GO" id="GO:0060982">
    <property type="term" value="P:coronary artery morphogenesis"/>
    <property type="evidence" value="ECO:0000315"/>
    <property type="project" value="UniProtKB"/>
</dbReference>
<dbReference type="GO" id="GO:0060976">
    <property type="term" value="P:coronary vasculature development"/>
    <property type="evidence" value="ECO:0000315"/>
    <property type="project" value="MGI"/>
</dbReference>
<dbReference type="GO" id="GO:1904888">
    <property type="term" value="P:cranial skeletal system development"/>
    <property type="evidence" value="ECO:0000315"/>
    <property type="project" value="MGI"/>
</dbReference>
<dbReference type="GO" id="GO:0034311">
    <property type="term" value="P:diol metabolic process"/>
    <property type="evidence" value="ECO:0000315"/>
    <property type="project" value="MGI"/>
</dbReference>
<dbReference type="GO" id="GO:1904447">
    <property type="term" value="P:folate import across plasma membrane"/>
    <property type="evidence" value="ECO:0000315"/>
    <property type="project" value="UniProtKB"/>
</dbReference>
<dbReference type="GO" id="GO:0030900">
    <property type="term" value="P:forebrain development"/>
    <property type="evidence" value="ECO:0000315"/>
    <property type="project" value="MGI"/>
</dbReference>
<dbReference type="GO" id="GO:0010467">
    <property type="term" value="P:gene expression"/>
    <property type="evidence" value="ECO:0000315"/>
    <property type="project" value="MGI"/>
</dbReference>
<dbReference type="GO" id="GO:0007507">
    <property type="term" value="P:heart development"/>
    <property type="evidence" value="ECO:0000315"/>
    <property type="project" value="MGI"/>
</dbReference>
<dbReference type="GO" id="GO:0001822">
    <property type="term" value="P:kidney development"/>
    <property type="evidence" value="ECO:0000315"/>
    <property type="project" value="MGI"/>
</dbReference>
<dbReference type="GO" id="GO:0008584">
    <property type="term" value="P:male gonad development"/>
    <property type="evidence" value="ECO:0000315"/>
    <property type="project" value="UniProtKB"/>
</dbReference>
<dbReference type="GO" id="GO:0030001">
    <property type="term" value="P:metal ion transport"/>
    <property type="evidence" value="ECO:0000250"/>
    <property type="project" value="UniProtKB"/>
</dbReference>
<dbReference type="GO" id="GO:0043066">
    <property type="term" value="P:negative regulation of apoptotic process"/>
    <property type="evidence" value="ECO:0007669"/>
    <property type="project" value="Ensembl"/>
</dbReference>
<dbReference type="GO" id="GO:0030514">
    <property type="term" value="P:negative regulation of BMP signaling pathway"/>
    <property type="evidence" value="ECO:0000315"/>
    <property type="project" value="UniProtKB"/>
</dbReference>
<dbReference type="GO" id="GO:0001843">
    <property type="term" value="P:neural tube closure"/>
    <property type="evidence" value="ECO:0000315"/>
    <property type="project" value="UniProtKB"/>
</dbReference>
<dbReference type="GO" id="GO:0140058">
    <property type="term" value="P:neuron projection arborization"/>
    <property type="evidence" value="ECO:0000315"/>
    <property type="project" value="UniProtKB"/>
</dbReference>
<dbReference type="GO" id="GO:0003151">
    <property type="term" value="P:outflow tract morphogenesis"/>
    <property type="evidence" value="ECO:0000315"/>
    <property type="project" value="MGI"/>
</dbReference>
<dbReference type="GO" id="GO:0003148">
    <property type="term" value="P:outflow tract septum morphogenesis"/>
    <property type="evidence" value="ECO:0000315"/>
    <property type="project" value="UniProtKB"/>
</dbReference>
<dbReference type="GO" id="GO:0043491">
    <property type="term" value="P:phosphatidylinositol 3-kinase/protein kinase B signal transduction"/>
    <property type="evidence" value="ECO:0007669"/>
    <property type="project" value="Ensembl"/>
</dbReference>
<dbReference type="GO" id="GO:0050769">
    <property type="term" value="P:positive regulation of neurogenesis"/>
    <property type="evidence" value="ECO:0000315"/>
    <property type="project" value="UniProtKB"/>
</dbReference>
<dbReference type="GO" id="GO:0070447">
    <property type="term" value="P:positive regulation of oligodendrocyte progenitor proliferation"/>
    <property type="evidence" value="ECO:0000315"/>
    <property type="project" value="UniProtKB"/>
</dbReference>
<dbReference type="GO" id="GO:0015031">
    <property type="term" value="P:protein transport"/>
    <property type="evidence" value="ECO:0000314"/>
    <property type="project" value="ARUK-UCL"/>
</dbReference>
<dbReference type="GO" id="GO:0061156">
    <property type="term" value="P:pulmonary artery morphogenesis"/>
    <property type="evidence" value="ECO:0000315"/>
    <property type="project" value="UniProtKB"/>
</dbReference>
<dbReference type="GO" id="GO:0006898">
    <property type="term" value="P:receptor-mediated endocytosis"/>
    <property type="evidence" value="ECO:0000314"/>
    <property type="project" value="UniProtKB"/>
</dbReference>
<dbReference type="GO" id="GO:0044321">
    <property type="term" value="P:response to leptin"/>
    <property type="evidence" value="ECO:0000314"/>
    <property type="project" value="ARUK-UCL"/>
</dbReference>
<dbReference type="GO" id="GO:0003139">
    <property type="term" value="P:secondary heart field specification"/>
    <property type="evidence" value="ECO:0000315"/>
    <property type="project" value="UniProtKB"/>
</dbReference>
<dbReference type="GO" id="GO:0007605">
    <property type="term" value="P:sensory perception of sound"/>
    <property type="evidence" value="ECO:0000315"/>
    <property type="project" value="UniProtKB"/>
</dbReference>
<dbReference type="GO" id="GO:0060068">
    <property type="term" value="P:vagina development"/>
    <property type="evidence" value="ECO:0000315"/>
    <property type="project" value="UniProtKB"/>
</dbReference>
<dbReference type="GO" id="GO:0003223">
    <property type="term" value="P:ventricular compact myocardium morphogenesis"/>
    <property type="evidence" value="ECO:0000315"/>
    <property type="project" value="UniProtKB"/>
</dbReference>
<dbReference type="GO" id="GO:0003281">
    <property type="term" value="P:ventricular septum development"/>
    <property type="evidence" value="ECO:0000315"/>
    <property type="project" value="MGI"/>
</dbReference>
<dbReference type="GO" id="GO:0042359">
    <property type="term" value="P:vitamin D metabolic process"/>
    <property type="evidence" value="ECO:0000315"/>
    <property type="project" value="MGI"/>
</dbReference>
<dbReference type="CDD" id="cd00054">
    <property type="entry name" value="EGF_CA"/>
    <property type="match status" value="3"/>
</dbReference>
<dbReference type="CDD" id="cd00112">
    <property type="entry name" value="LDLa"/>
    <property type="match status" value="36"/>
</dbReference>
<dbReference type="FunFam" id="2.120.10.30:FF:000049">
    <property type="entry name" value="LDL receptor related protein 2"/>
    <property type="match status" value="1"/>
</dbReference>
<dbReference type="FunFam" id="4.10.400.10:FF:000151">
    <property type="entry name" value="LDL receptor related protein 2"/>
    <property type="match status" value="1"/>
</dbReference>
<dbReference type="FunFam" id="4.10.400.10:FF:000153">
    <property type="entry name" value="LDL receptor related protein 2"/>
    <property type="match status" value="1"/>
</dbReference>
<dbReference type="FunFam" id="2.10.25.10:FF:000009">
    <property type="entry name" value="Low-density lipoprotein receptor isoform 1"/>
    <property type="match status" value="1"/>
</dbReference>
<dbReference type="FunFam" id="4.10.400.10:FF:000134">
    <property type="entry name" value="Low-density lipoprotein RecePtor related"/>
    <property type="match status" value="1"/>
</dbReference>
<dbReference type="FunFam" id="4.10.400.10:FF:000001">
    <property type="entry name" value="Low-density lipoprotein receptor-related protein 1"/>
    <property type="match status" value="2"/>
</dbReference>
<dbReference type="FunFam" id="4.10.400.10:FF:000002">
    <property type="entry name" value="Low-density lipoprotein receptor-related protein 1"/>
    <property type="match status" value="3"/>
</dbReference>
<dbReference type="FunFam" id="4.10.400.10:FF:000011">
    <property type="entry name" value="Low-density lipoprotein receptor-related protein 1"/>
    <property type="match status" value="4"/>
</dbReference>
<dbReference type="FunFam" id="4.10.400.10:FF:000005">
    <property type="entry name" value="low-density lipoprotein receptor-related protein 1B"/>
    <property type="match status" value="1"/>
</dbReference>
<dbReference type="FunFam" id="2.10.25.10:FF:000805">
    <property type="entry name" value="Low-density lipoprotein receptor-related protein 2"/>
    <property type="match status" value="1"/>
</dbReference>
<dbReference type="FunFam" id="2.120.10.30:FF:000035">
    <property type="entry name" value="Low-density lipoprotein receptor-related protein 2"/>
    <property type="match status" value="1"/>
</dbReference>
<dbReference type="FunFam" id="2.120.10.30:FF:000040">
    <property type="entry name" value="Low-density lipoprotein receptor-related protein 2"/>
    <property type="match status" value="1"/>
</dbReference>
<dbReference type="FunFam" id="2.120.10.30:FF:000051">
    <property type="entry name" value="Low-density lipoprotein receptor-related protein 2"/>
    <property type="match status" value="1"/>
</dbReference>
<dbReference type="FunFam" id="2.120.10.30:FF:000056">
    <property type="entry name" value="Low-density lipoprotein receptor-related protein 2"/>
    <property type="match status" value="1"/>
</dbReference>
<dbReference type="FunFam" id="2.120.10.30:FF:000057">
    <property type="entry name" value="Low-density lipoprotein receptor-related protein 2"/>
    <property type="match status" value="1"/>
</dbReference>
<dbReference type="FunFam" id="2.120.10.30:FF:000058">
    <property type="entry name" value="Low-density lipoprotein receptor-related protein 2"/>
    <property type="match status" value="1"/>
</dbReference>
<dbReference type="FunFam" id="4.10.400.10:FF:000034">
    <property type="entry name" value="Low-density lipoprotein receptor-related protein 2"/>
    <property type="match status" value="4"/>
</dbReference>
<dbReference type="FunFam" id="4.10.400.10:FF:000045">
    <property type="entry name" value="Low-density lipoprotein receptor-related protein 2"/>
    <property type="match status" value="2"/>
</dbReference>
<dbReference type="FunFam" id="4.10.400.10:FF:000108">
    <property type="entry name" value="Low-density lipoprotein receptor-related protein 2"/>
    <property type="match status" value="1"/>
</dbReference>
<dbReference type="FunFam" id="4.10.400.10:FF:000112">
    <property type="entry name" value="Low-density lipoprotein receptor-related protein 2"/>
    <property type="match status" value="1"/>
</dbReference>
<dbReference type="FunFam" id="4.10.400.10:FF:000147">
    <property type="entry name" value="Low-density lipoprotein receptor-related protein 2"/>
    <property type="match status" value="2"/>
</dbReference>
<dbReference type="FunFam" id="4.10.400.10:FF:000222">
    <property type="entry name" value="Low-density lipoprotein receptor-related protein 2"/>
    <property type="match status" value="1"/>
</dbReference>
<dbReference type="FunFam" id="4.10.400.10:FF:000078">
    <property type="entry name" value="low-density lipoprotein receptor-related protein 2"/>
    <property type="match status" value="1"/>
</dbReference>
<dbReference type="FunFam" id="4.10.400.10:FF:000121">
    <property type="entry name" value="low-density lipoprotein receptor-related protein 2"/>
    <property type="match status" value="1"/>
</dbReference>
<dbReference type="FunFam" id="2.120.10.30:FF:000008">
    <property type="entry name" value="Low-density lipoprotein receptor-related protein 4"/>
    <property type="match status" value="1"/>
</dbReference>
<dbReference type="FunFam" id="2.10.25.10:FF:000010">
    <property type="entry name" value="Pro-epidermal growth factor"/>
    <property type="match status" value="1"/>
</dbReference>
<dbReference type="Gene3D" id="2.10.25.10">
    <property type="entry name" value="Laminin"/>
    <property type="match status" value="7"/>
</dbReference>
<dbReference type="Gene3D" id="4.10.400.10">
    <property type="entry name" value="Low-density Lipoprotein Receptor"/>
    <property type="match status" value="36"/>
</dbReference>
<dbReference type="Gene3D" id="2.120.10.30">
    <property type="entry name" value="TolB, C-terminal domain"/>
    <property type="match status" value="8"/>
</dbReference>
<dbReference type="InterPro" id="IPR011042">
    <property type="entry name" value="6-blade_b-propeller_TolB-like"/>
</dbReference>
<dbReference type="InterPro" id="IPR026823">
    <property type="entry name" value="cEGF"/>
</dbReference>
<dbReference type="InterPro" id="IPR001881">
    <property type="entry name" value="EGF-like_Ca-bd_dom"/>
</dbReference>
<dbReference type="InterPro" id="IPR000742">
    <property type="entry name" value="EGF-like_dom"/>
</dbReference>
<dbReference type="InterPro" id="IPR000152">
    <property type="entry name" value="EGF-type_Asp/Asn_hydroxyl_site"/>
</dbReference>
<dbReference type="InterPro" id="IPR018097">
    <property type="entry name" value="EGF_Ca-bd_CS"/>
</dbReference>
<dbReference type="InterPro" id="IPR056588">
    <property type="entry name" value="EGF_LRP2"/>
</dbReference>
<dbReference type="InterPro" id="IPR009030">
    <property type="entry name" value="Growth_fac_rcpt_cys_sf"/>
</dbReference>
<dbReference type="InterPro" id="IPR036055">
    <property type="entry name" value="LDL_receptor-like_sf"/>
</dbReference>
<dbReference type="InterPro" id="IPR051221">
    <property type="entry name" value="LDLR-related"/>
</dbReference>
<dbReference type="InterPro" id="IPR023415">
    <property type="entry name" value="LDLR_class-A_CS"/>
</dbReference>
<dbReference type="InterPro" id="IPR000033">
    <property type="entry name" value="LDLR_classB_rpt"/>
</dbReference>
<dbReference type="InterPro" id="IPR002172">
    <property type="entry name" value="LDrepeatLR_classA_rpt"/>
</dbReference>
<dbReference type="InterPro" id="IPR049883">
    <property type="entry name" value="NOTCH1_EGF-like"/>
</dbReference>
<dbReference type="PANTHER" id="PTHR22722">
    <property type="entry name" value="LOW-DENSITY LIPOPROTEIN RECEPTOR-RELATED PROTEIN 2-RELATED"/>
    <property type="match status" value="1"/>
</dbReference>
<dbReference type="Pfam" id="PF12662">
    <property type="entry name" value="cEGF"/>
    <property type="match status" value="2"/>
</dbReference>
<dbReference type="Pfam" id="PF07645">
    <property type="entry name" value="EGF_CA"/>
    <property type="match status" value="1"/>
</dbReference>
<dbReference type="Pfam" id="PF24468">
    <property type="entry name" value="EGF_LRP2"/>
    <property type="match status" value="1"/>
</dbReference>
<dbReference type="Pfam" id="PF14670">
    <property type="entry name" value="FXa_inhibition"/>
    <property type="match status" value="2"/>
</dbReference>
<dbReference type="Pfam" id="PF00057">
    <property type="entry name" value="Ldl_recept_a"/>
    <property type="match status" value="34"/>
</dbReference>
<dbReference type="Pfam" id="PF00058">
    <property type="entry name" value="Ldl_recept_b"/>
    <property type="match status" value="17"/>
</dbReference>
<dbReference type="PRINTS" id="PR00261">
    <property type="entry name" value="LDLRECEPTOR"/>
</dbReference>
<dbReference type="SMART" id="SM00181">
    <property type="entry name" value="EGF"/>
    <property type="match status" value="25"/>
</dbReference>
<dbReference type="SMART" id="SM00179">
    <property type="entry name" value="EGF_CA"/>
    <property type="match status" value="9"/>
</dbReference>
<dbReference type="SMART" id="SM00192">
    <property type="entry name" value="LDLa"/>
    <property type="match status" value="36"/>
</dbReference>
<dbReference type="SMART" id="SM00135">
    <property type="entry name" value="LY"/>
    <property type="match status" value="37"/>
</dbReference>
<dbReference type="SUPFAM" id="SSF57196">
    <property type="entry name" value="EGF/Laminin"/>
    <property type="match status" value="6"/>
</dbReference>
<dbReference type="SUPFAM" id="SSF57184">
    <property type="entry name" value="Growth factor receptor domain"/>
    <property type="match status" value="2"/>
</dbReference>
<dbReference type="SUPFAM" id="SSF57424">
    <property type="entry name" value="LDL receptor-like module"/>
    <property type="match status" value="35"/>
</dbReference>
<dbReference type="SUPFAM" id="SSF63825">
    <property type="entry name" value="YWTD domain"/>
    <property type="match status" value="8"/>
</dbReference>
<dbReference type="PROSITE" id="PS00010">
    <property type="entry name" value="ASX_HYDROXYL"/>
    <property type="match status" value="4"/>
</dbReference>
<dbReference type="PROSITE" id="PS00022">
    <property type="entry name" value="EGF_1"/>
    <property type="match status" value="1"/>
</dbReference>
<dbReference type="PROSITE" id="PS01186">
    <property type="entry name" value="EGF_2"/>
    <property type="match status" value="8"/>
</dbReference>
<dbReference type="PROSITE" id="PS50026">
    <property type="entry name" value="EGF_3"/>
    <property type="match status" value="6"/>
</dbReference>
<dbReference type="PROSITE" id="PS01187">
    <property type="entry name" value="EGF_CA"/>
    <property type="match status" value="3"/>
</dbReference>
<dbReference type="PROSITE" id="PS01209">
    <property type="entry name" value="LDLRA_1"/>
    <property type="match status" value="31"/>
</dbReference>
<dbReference type="PROSITE" id="PS50068">
    <property type="entry name" value="LDLRA_2"/>
    <property type="match status" value="36"/>
</dbReference>
<dbReference type="PROSITE" id="PS51120">
    <property type="entry name" value="LDLRB"/>
    <property type="match status" value="36"/>
</dbReference>
<keyword id="KW-0002">3D-structure</keyword>
<keyword id="KW-0106">Calcium</keyword>
<keyword id="KW-1003">Cell membrane</keyword>
<keyword id="KW-0966">Cell projection</keyword>
<keyword id="KW-0168">Coated pit</keyword>
<keyword id="KW-1015">Disulfide bond</keyword>
<keyword id="KW-0245">EGF-like domain</keyword>
<keyword id="KW-0254">Endocytosis</keyword>
<keyword id="KW-0967">Endosome</keyword>
<keyword id="KW-0325">Glycoprotein</keyword>
<keyword id="KW-1009">Hearing</keyword>
<keyword id="KW-0472">Membrane</keyword>
<keyword id="KW-0479">Metal-binding</keyword>
<keyword id="KW-0524">Neurogenesis</keyword>
<keyword id="KW-0597">Phosphoprotein</keyword>
<keyword id="KW-0675">Receptor</keyword>
<keyword id="KW-1185">Reference proteome</keyword>
<keyword id="KW-0677">Repeat</keyword>
<keyword id="KW-0729">SH3-binding</keyword>
<keyword id="KW-0732">Signal</keyword>
<keyword id="KW-0812">Transmembrane</keyword>
<keyword id="KW-1133">Transmembrane helix</keyword>
<keyword id="KW-0813">Transport</keyword>
<evidence type="ECO:0000250" key="1">
    <source>
        <dbReference type="UniProtKB" id="C0HL13"/>
    </source>
</evidence>
<evidence type="ECO:0000250" key="2">
    <source>
        <dbReference type="UniProtKB" id="P98158"/>
    </source>
</evidence>
<evidence type="ECO:0000250" key="3">
    <source>
        <dbReference type="UniProtKB" id="P98164"/>
    </source>
</evidence>
<evidence type="ECO:0000255" key="4"/>
<evidence type="ECO:0000255" key="5">
    <source>
        <dbReference type="PROSITE-ProRule" id="PRU00076"/>
    </source>
</evidence>
<evidence type="ECO:0000255" key="6">
    <source>
        <dbReference type="PROSITE-ProRule" id="PRU00124"/>
    </source>
</evidence>
<evidence type="ECO:0000255" key="7">
    <source>
        <dbReference type="PROSITE-ProRule" id="PRU00461"/>
    </source>
</evidence>
<evidence type="ECO:0000256" key="8">
    <source>
        <dbReference type="SAM" id="MobiDB-lite"/>
    </source>
</evidence>
<evidence type="ECO:0000269" key="9">
    <source>
    </source>
</evidence>
<evidence type="ECO:0000269" key="10">
    <source>
    </source>
</evidence>
<evidence type="ECO:0000269" key="11">
    <source>
    </source>
</evidence>
<evidence type="ECO:0000269" key="12">
    <source>
    </source>
</evidence>
<evidence type="ECO:0000269" key="13">
    <source>
    </source>
</evidence>
<evidence type="ECO:0000269" key="14">
    <source>
    </source>
</evidence>
<evidence type="ECO:0000269" key="15">
    <source>
    </source>
</evidence>
<evidence type="ECO:0000269" key="16">
    <source>
    </source>
</evidence>
<evidence type="ECO:0000269" key="17">
    <source>
    </source>
</evidence>
<evidence type="ECO:0000269" key="18">
    <source>
    </source>
</evidence>
<evidence type="ECO:0000269" key="19">
    <source>
    </source>
</evidence>
<evidence type="ECO:0000269" key="20">
    <source>
    </source>
</evidence>
<evidence type="ECO:0000269" key="21">
    <source>
    </source>
</evidence>
<evidence type="ECO:0000269" key="22">
    <source>
    </source>
</evidence>
<evidence type="ECO:0000269" key="23">
    <source>
    </source>
</evidence>
<evidence type="ECO:0000269" key="24">
    <source>
    </source>
</evidence>
<evidence type="ECO:0000269" key="25">
    <source>
    </source>
</evidence>
<evidence type="ECO:0000269" key="26">
    <source>
    </source>
</evidence>
<evidence type="ECO:0000269" key="27">
    <source>
    </source>
</evidence>
<evidence type="ECO:0000269" key="28">
    <source>
    </source>
</evidence>
<evidence type="ECO:0000269" key="29">
    <source>
    </source>
</evidence>
<evidence type="ECO:0000269" key="30">
    <source>
    </source>
</evidence>
<evidence type="ECO:0000269" key="31">
    <source>
    </source>
</evidence>
<evidence type="ECO:0000269" key="32">
    <source>
    </source>
</evidence>
<evidence type="ECO:0000269" key="33">
    <source>
    </source>
</evidence>
<evidence type="ECO:0000269" key="34">
    <source>
    </source>
</evidence>
<evidence type="ECO:0000269" key="35">
    <source>
    </source>
</evidence>
<evidence type="ECO:0000305" key="36"/>
<evidence type="ECO:0007744" key="37">
    <source>
    </source>
</evidence>
<evidence type="ECO:0007829" key="38">
    <source>
        <dbReference type="PDB" id="8EM4"/>
    </source>
</evidence>
<evidence type="ECO:0007829" key="39">
    <source>
        <dbReference type="PDB" id="8EM7"/>
    </source>
</evidence>
<organism>
    <name type="scientific">Mus musculus</name>
    <name type="common">Mouse</name>
    <dbReference type="NCBI Taxonomy" id="10090"/>
    <lineage>
        <taxon>Eukaryota</taxon>
        <taxon>Metazoa</taxon>
        <taxon>Chordata</taxon>
        <taxon>Craniata</taxon>
        <taxon>Vertebrata</taxon>
        <taxon>Euteleostomi</taxon>
        <taxon>Mammalia</taxon>
        <taxon>Eutheria</taxon>
        <taxon>Euarchontoglires</taxon>
        <taxon>Glires</taxon>
        <taxon>Rodentia</taxon>
        <taxon>Myomorpha</taxon>
        <taxon>Muroidea</taxon>
        <taxon>Muridae</taxon>
        <taxon>Murinae</taxon>
        <taxon>Mus</taxon>
        <taxon>Mus</taxon>
    </lineage>
</organism>
<comment type="function">
    <text evidence="1 2 3 9 10 16 18 19 20 21 22 24 25 26 27 28 29 30 31 32 33 35">Multiligand endocytic receptor. Acts together with CUBN to mediate endocytosis of high-density lipoproteins (PubMed:10766831). Mediates receptor-mediated uptake of polybasic drugs such as aprotinin, aminoglycosides and polymyxin B (By similarity). In the kidney, mediates the tubular uptake and clearance of leptin (PubMed:22841573). Also mediates transport of leptin across the blood-brain barrier through endocytosis at the choroid plexus epithelium (By similarity). Endocytosis of leptin in neuronal cells is required for hypothalamic leptin signaling and leptin-mediated regulation of feeding and body weight (PubMed:24825475). Mediates endocytosis and subsequent lysosomal degradation of CST3 in kidney proximal tubule cells (PubMed:17462596). Mediates renal uptake of 25-hydroxyvitamin D3 in complex with the vitamin D3 transporter GC/DBP (PubMed:10052453). Mediates renal uptake of metallothionein-bound heavy metals (By similarity). Together with CUBN, mediates renal reabsorption of myoglobin (By similarity). Mediates renal uptake and subsequent lysosomal degradation of APOM (By similarity). Plays a role in kidney selenium homeostasis by mediating renal endocytosis of selenoprotein SEPP1 (PubMed:18174160). Mediates renal uptake of the antiapoptotic protein BIRC5/survivin which may be important for functional integrity of the kidney (PubMed:23825075). Mediates renal uptake of matrix metalloproteinase MMP2 in complex with metalloproteinase inhibitor TIMP1 (PubMed:28659595). Mediates endocytosis of Sonic hedgehog protein N-product (ShhN), the active product of SHH (By similarity). Also mediates ShhN transcytosis (By similarity). In the embryonic neuroepithelium, mediates endocytic uptake and degradation of BMP4, is required for correct SHH localization in the ventral neural tube and plays a role in patterning of the ventral telencephalon (PubMed:15623804). Required at the onset of neurulation to sequester SHH on the apical surface of neuroepithelial cells of the rostral diencephalon ventral midline and to control PTCH1-dependent uptake and intracellular trafficking of SHH (PubMed:22340494). During neurulation, required in neuroepithelial cells for uptake of folate bound to the folate receptor FOLR1 which is necessary for neural tube closure (PubMed:24639464). In the adult brain, negatively regulates BMP signaling in the subependymal zone which enables neurogenesis to proceed (PubMed:20460439). In astrocytes, mediates endocytosis of ALB which is required for the synthesis of the neurotrophic factor oleic acid (By similarity). Involved in neurite branching (PubMed:20637285). During optic nerve development, required for SHH-mediated migration and proliferation of oligodendrocyte precursor cells (PubMed:22354480). Mediates endocytic uptake and clearance of SHH in the retinal margin which protects retinal progenitor cells from mitogenic stimuli and keeps them quiescent (PubMed:26439398). Plays a role in reproductive organ development by mediating uptake in reproductive tissues of androgen and estrogen bound to the sex hormone binding protein SHBG (PubMed:16143106). Mediates endocytosis of angiotensin-2 (By similarity). Also mediates endocytosis of angiotensin 1-7 (By similarity). Binds to the complex composed of beta-amyloid protein 40 and CLU/APOJ and mediates its endocytosis and lysosomal degradation (By similarity). Required for embryonic heart development (PubMed:26822476). Required for normal hearing, possibly through interaction with estrogen in the inner ear (PubMed:17846082).</text>
</comment>
<comment type="subunit">
    <text evidence="1 2 3 9 11 12 13 15 16 17 19 22 25">Binds plasminogen, extracellular matrix components, plasminogen activator-plasminogen activator inhibitor type I complex, apolipoprotein E-enriched beta-VLDL, lipoprotein lipase, lactoferrin, CLU/clusterin and calcium. Forms a multimeric complex together with LRPAP1 (By similarity). Interacts (via PxLPxI/L motif) with ANKRA2 (via ankyrin repeats) (By similarity). Interacts with LRP2BP. Interacts (via NPXY motif) with DAB2; the interaction is not affected by tyrosine phosphorylation of the NPXY motif (PubMed:11247302). Interacts with MB (By similarity). Interacts with BMP4 (PubMed:15623804). Interacts with the Sonic hedgehog protein N-product which is the active product of SHH (PubMed:11964399). Interacts with CST3 in a calcium-dependent manner (By similarity). Interacts with the vitamin-D binding protein GC/DBP (PubMed:10052453). Interacts with sex hormone-binding protein SHBG (By similarity). Interacts with angiotensin-2 (PubMed:15467006). Also interacts with angiotensin 1-7 (PubMed:16380466). Interacts with APOM (PubMed:16099815). Interacts with selenoprotein SEPP1 (PubMed:18174160). Interacts with LEP (By similarity). Interacts with ALB (By similarity). Interacts with the antiapoptotic protein BIRC5/survivin (By similarity). Interacts with matrix metalloproteinase MMP2 in complex with metalloproteinase inhibitor TIMP1 (By similarity). In neurons, forms a trimeric complex with APP and APPB1/FE65 (PubMed:20637285). Interacts with LDLRAP1/ARH; mediates trafficking of LRP2 to the endocytic recycling compartment (By similarity). Does not interact with beta-amyloid protein 40 alone but interacts with the complex composed of beta-amyloid protein 40 and CLU/APOJ (By similarity). Interacts with MDK (PubMed:10772929).</text>
</comment>
<comment type="interaction">
    <interactant intactId="EBI-300875">
        <id>A2ARV4</id>
    </interactant>
    <interactant intactId="EBI-81680">
        <id>P97318</id>
        <label>Dab1</label>
    </interactant>
    <organismsDiffer>false</organismsDiffer>
    <experiments>2</experiments>
</comment>
<comment type="interaction">
    <interactant intactId="EBI-300875">
        <id>A2ARV4</id>
    </interactant>
    <interactant intactId="EBI-300895">
        <id>Q62108</id>
        <label>Dlg4</label>
    </interactant>
    <organismsDiffer>false</organismsDiffer>
    <experiments>2</experiments>
</comment>
<comment type="interaction">
    <interactant intactId="EBI-300875">
        <id>A2ARV4</id>
    </interactant>
    <interactant intactId="EBI-300855">
        <id>Q9Z0G0</id>
        <label>Gipc1</label>
    </interactant>
    <organismsDiffer>false</organismsDiffer>
    <experiments>2</experiments>
</comment>
<comment type="interaction">
    <interactant intactId="EBI-300875">
        <id>A2ARV4</id>
    </interactant>
    <interactant intactId="EBI-74515">
        <id>Q9WVI9</id>
        <label>Mapk8ip1</label>
    </interactant>
    <organismsDiffer>false</organismsDiffer>
    <experiments>2</experiments>
</comment>
<comment type="interaction">
    <interactant intactId="EBI-300875">
        <id>A2ARV4</id>
    </interactant>
    <interactant intactId="EBI-74576">
        <id>Q9ERE9</id>
        <label>Mapk8ip2</label>
    </interactant>
    <organismsDiffer>false</organismsDiffer>
    <experiments>2</experiments>
</comment>
<comment type="interaction">
    <interactant intactId="EBI-300875">
        <id>A2ARV4</id>
    </interactant>
    <interactant intactId="EBI-300910">
        <id>Q9D6K5</id>
        <label>Synj2bp</label>
    </interactant>
    <organismsDiffer>false</organismsDiffer>
    <experiments>2</experiments>
</comment>
<comment type="subcellular location">
    <subcellularLocation>
        <location evidence="18 24 26 27">Apical cell membrane</location>
        <topology evidence="4">Single-pass type I membrane protein</topology>
    </subcellularLocation>
    <subcellularLocation>
        <location evidence="2">Endosome lumen</location>
    </subcellularLocation>
    <subcellularLocation>
        <location evidence="26">Membrane</location>
        <location evidence="26">Coated pit</location>
    </subcellularLocation>
    <subcellularLocation>
        <location evidence="25">Cell projection</location>
        <location evidence="25">Dendrite</location>
    </subcellularLocation>
    <subcellularLocation>
        <location evidence="25">Cell projection</location>
        <location evidence="25">Axon</location>
    </subcellularLocation>
    <text evidence="2">Localizes to brush border membranes in the kidney. In the endolymphatic sac of the inner ear, located in the lumen of endosomes as a soluble form.</text>
</comment>
<comment type="tissue specificity">
    <text evidence="18 21 24 25 27">In the inner ear, strongly expressed in the marginal cells of the stria vascularis (at protein level) (PubMed:17846082). In the female reproductive tract, expressed on the luminal side of the uterine epithelium (at protein level) (PubMed:16143106). In the adult brain, expressed in ependymal cells of the lateral ventricles where expression is restricted to the ependyma that faces the stem cell niche (at protein level) (PubMed:20460439). Expressed in neurons throughout the brain including in the hippocampus, limbic cortices and cerebellum (at protein level) (PubMed:20637285). In the developing optic nerve, expressed exclusively in astrocytes at 14.5 dpc, 16.5 dpc and 18.5 dpc (at protein level) (PubMed:22354480).</text>
</comment>
<comment type="developmental stage">
    <text evidence="18 26 27">In the developing optic nerve, more strongly expressed at 14.5 dpc and 16.5 dpc than at 18.5 dpc (at protein level) (PubMed:22354480). In the embryo, expression is detected from 7.5 dpc on the apical side of the developing neural plate and persists throughout later stages of development (PubMed:22340494). After neural tube closure at 9.5 dpc, becomes progressively restricted to the midline region (PubMed:22340494). During the estrus cycle, expression is highest in metestrus II and diestrus (PubMed:16143106).</text>
</comment>
<comment type="induction">
    <text evidence="28">Down-regulated in the kidney by cannabinoids, such as endocannabinoid anandamide and synthetic cannabinoid HU-210.</text>
</comment>
<comment type="domain">
    <text evidence="2">Two overlapping PxLPxI/L motifs mediate interaction with ankyrin repeats of ANKRA2.</text>
</comment>
<comment type="domain">
    <text evidence="2">The cytoplasmic domain is required for sorting to the apical cell membrane.</text>
</comment>
<comment type="PTM">
    <text evidence="2">A fraction undergoes proteolytic cleavage of the extracellular domain at the cell membrane to generate a cytoplasmic tail fragment. This is internalized into the early endosome from where it trafficks in an LDLRAP1/ARH-dependent manner to the endocytic recycling compartment (ERC). In the ERC, it is further cleaved by gamma-secretase to release a fragment which translocates to the nucleus and mediates transcriptional repression.</text>
</comment>
<comment type="PTM">
    <text evidence="34">N-glycosylation is required for ligand binding. Contains core-fucosylated N-glycans in kidney proximal convoluted tubules (PCTs) and hybrid-type N-glycans in proximal straight tubules (PSTs). Interacts with ligands in a glycoform-dependent manner. Retinol-binding protein and the vitamin D carrier GC/DBP are endocytosed primarily by PCTs, albumin is endocytosed equally by PCTs and PSTs, and the aminoglycoside kanamycin is endocytosed primarily by PSTs.</text>
</comment>
<comment type="disruption phenotype">
    <text evidence="9 14 16 17 18 20 21 24 26 29 30 32 33 35">Severe facial dysgenesis and impaired forebrain development around mid-gestation, absence of Shh expression and decreased cell proliferation in the ventral neural tube, and aberrant expression of morphogens Fgf8 and Bmp4 (PubMed:15623804). Reduced expression of homeobox protein Six3 at 8.0 dpc in the prospective forebrain and impaired Shh expression at the ventral midline with resulting midline formation defects and holoprosencephaly (PubMed:22340494). At 9.5 dpc, loss of Shh in the ventral anterior diencephalon and increased Bmp4 expression in the dorsal forebrain (PubMed:22340494). Increased Bmp4 expression and impaired proliferation of neural precursor cells in the subependymal zone of the brain which results in decreased numbers of neuroblasts reaching the olfactory bulb (PubMed:20460439). Compound heterozygotes display enlarged and exophthalmic eyes with thinning of the retina (PubMed:26439398). Severe cardiovascular abnormalities including aortic arch anomalies, persistent truncus arteriosus with coronary artery anomalies, ventricular septal defects, overriding of the tricuspid valve, marked thinning of the ventricular myocardium, and abnormal positioning of the neural crest cells and second heart field (PubMed:26822476). Impaired endocytosis of folate bound to the folate receptor FOLR1, reduced folate levels in embryos and impaired closure of the rostral neural tube (PubMed:24639464). High lethality at and after birth with survivors showing profound hearing loss, elevated lipofuscin granule levels and irregular apical surfaces in marginal cells of the stria vascularis, complete loss of potassium ion channel KCQN1 in basal and midbasal cochlear turns, and reduced estrogen uptake in the stria vascularis (PubMed:17846082). Survivors also display severe vitamin D deficiency and bone formation defects (PubMed:10052453). Failure of the vaginal cavity to open after birth in females and impaired testis descent in males with the left testis poorly developed and severely retarded in size (PubMed:16143106). Conditional knockout in the kidney results in reduced expression of CUBN in kidney cells and little or no uptake of myoglobin (PubMed:12724130). It also results in reduced uptake of Cst3 by kidney proximal tubule cells (PubMed:17462596). In addition, it causes pronounced urinary excretion of Apom, Birc5/survivin, and Mmp2 together with Timp1 (PubMed:16099815, PubMed:23825075, PubMed:28659595).</text>
</comment>
<comment type="similarity">
    <text evidence="36">Belongs to the LDLR family.</text>
</comment>
<name>LRP2_MOUSE</name>
<feature type="signal peptide" evidence="4">
    <location>
        <begin position="1"/>
        <end position="25"/>
    </location>
</feature>
<feature type="chain" id="PRO_0000309845" description="Low-density lipoprotein receptor-related protein 2">
    <location>
        <begin position="26"/>
        <end position="4660"/>
    </location>
</feature>
<feature type="topological domain" description="Extracellular" evidence="4">
    <location>
        <begin position="26"/>
        <end position="4425"/>
    </location>
</feature>
<feature type="transmembrane region" description="Helical" evidence="4">
    <location>
        <begin position="4426"/>
        <end position="4446"/>
    </location>
</feature>
<feature type="topological domain" description="Cytoplasmic" evidence="4">
    <location>
        <begin position="4447"/>
        <end position="4660"/>
    </location>
</feature>
<feature type="domain" description="LDL-receptor class A 1" evidence="6">
    <location>
        <begin position="27"/>
        <end position="63"/>
    </location>
</feature>
<feature type="domain" description="LDL-receptor class A 2" evidence="6">
    <location>
        <begin position="66"/>
        <end position="104"/>
    </location>
</feature>
<feature type="domain" description="LDL-receptor class A 3" evidence="6">
    <location>
        <begin position="107"/>
        <end position="143"/>
    </location>
</feature>
<feature type="domain" description="LDL-receptor class A 4" evidence="6">
    <location>
        <begin position="146"/>
        <end position="180"/>
    </location>
</feature>
<feature type="domain" description="LDL-receptor class A 5" evidence="6">
    <location>
        <begin position="182"/>
        <end position="218"/>
    </location>
</feature>
<feature type="domain" description="LDL-receptor class A 6" evidence="6">
    <location>
        <begin position="221"/>
        <end position="257"/>
    </location>
</feature>
<feature type="domain" description="LDL-receptor class A 7" evidence="6">
    <location>
        <begin position="264"/>
        <end position="307"/>
    </location>
</feature>
<feature type="repeat" description="LDL-receptor class B 1" evidence="7">
    <location>
        <begin position="435"/>
        <end position="477"/>
    </location>
</feature>
<feature type="repeat" description="LDL-receptor class B 2" evidence="7">
    <location>
        <begin position="478"/>
        <end position="520"/>
    </location>
</feature>
<feature type="repeat" description="LDL-receptor class B 3" evidence="7">
    <location>
        <begin position="521"/>
        <end position="567"/>
    </location>
</feature>
<feature type="repeat" description="LDL-receptor class B 4" evidence="7">
    <location>
        <begin position="568"/>
        <end position="612"/>
    </location>
</feature>
<feature type="repeat" description="LDL-receptor class B 5" evidence="7">
    <location>
        <begin position="752"/>
        <end position="794"/>
    </location>
</feature>
<feature type="repeat" description="LDL-receptor class B 6" evidence="7">
    <location>
        <begin position="795"/>
        <end position="836"/>
    </location>
</feature>
<feature type="repeat" description="LDL-receptor class B 7" evidence="7">
    <location>
        <begin position="837"/>
        <end position="880"/>
    </location>
</feature>
<feature type="repeat" description="LDL-receptor class B 8" evidence="7">
    <location>
        <begin position="881"/>
        <end position="924"/>
    </location>
</feature>
<feature type="domain" description="LDL-receptor class A 8" evidence="6">
    <location>
        <begin position="1024"/>
        <end position="1060"/>
    </location>
</feature>
<feature type="domain" description="LDL-receptor class A 9" evidence="6">
    <location>
        <begin position="1065"/>
        <end position="1102"/>
    </location>
</feature>
<feature type="domain" description="LDL-receptor class A 10" evidence="6">
    <location>
        <begin position="1109"/>
        <end position="1145"/>
    </location>
</feature>
<feature type="domain" description="LDL-receptor class A 11" evidence="6">
    <location>
        <begin position="1149"/>
        <end position="1185"/>
    </location>
</feature>
<feature type="domain" description="LDL-receptor class A 12" evidence="6">
    <location>
        <begin position="1187"/>
        <end position="1224"/>
    </location>
</feature>
<feature type="domain" description="LDL-receptor class A 13" evidence="6">
    <location>
        <begin position="1230"/>
        <end position="1268"/>
    </location>
</feature>
<feature type="domain" description="LDL-receptor class A 14" evidence="6">
    <location>
        <begin position="1271"/>
        <end position="1307"/>
    </location>
</feature>
<feature type="domain" description="LDL-receptor class A 15" evidence="6">
    <location>
        <begin position="1312"/>
        <end position="1350"/>
    </location>
</feature>
<feature type="domain" description="EGF-like 1" evidence="5">
    <location>
        <begin position="1350"/>
        <end position="1390"/>
    </location>
</feature>
<feature type="domain" description="EGF-like 2; calcium-binding" evidence="5">
    <location>
        <begin position="1391"/>
        <end position="1430"/>
    </location>
</feature>
<feature type="repeat" description="LDL-receptor class B 9" evidence="7">
    <location>
        <begin position="1479"/>
        <end position="1521"/>
    </location>
</feature>
<feature type="repeat" description="LDL-receptor class B 10" evidence="7">
    <location>
        <begin position="1522"/>
        <end position="1564"/>
    </location>
</feature>
<feature type="repeat" description="LDL-receptor class B 11" evidence="7">
    <location>
        <begin position="1567"/>
        <end position="1610"/>
    </location>
</feature>
<feature type="repeat" description="LDL-receptor class B 12" evidence="7">
    <location>
        <begin position="1611"/>
        <end position="1655"/>
    </location>
</feature>
<feature type="repeat" description="LDL-receptor class B 13" evidence="7">
    <location>
        <begin position="1656"/>
        <end position="1696"/>
    </location>
</feature>
<feature type="repeat" description="LDL-receptor class B 14" evidence="7">
    <location>
        <begin position="1791"/>
        <end position="1833"/>
    </location>
</feature>
<feature type="repeat" description="LDL-receptor class B 15" evidence="7">
    <location>
        <begin position="1834"/>
        <end position="1883"/>
    </location>
</feature>
<feature type="repeat" description="LDL-receptor class B 16" evidence="7">
    <location>
        <begin position="1884"/>
        <end position="1931"/>
    </location>
</feature>
<feature type="repeat" description="LDL-receptor class B 17" evidence="7">
    <location>
        <begin position="1932"/>
        <end position="1973"/>
    </location>
</feature>
<feature type="repeat" description="LDL-receptor class B 18" evidence="7">
    <location>
        <begin position="1974"/>
        <end position="2014"/>
    </location>
</feature>
<feature type="repeat" description="LDL-receptor class B 19" evidence="7">
    <location>
        <begin position="2108"/>
        <end position="2157"/>
    </location>
</feature>
<feature type="repeat" description="LDL-receptor class B 20" evidence="7">
    <location>
        <begin position="2158"/>
        <end position="2202"/>
    </location>
</feature>
<feature type="repeat" description="LDL-receptor class B 21" evidence="7">
    <location>
        <begin position="2203"/>
        <end position="2246"/>
    </location>
</feature>
<feature type="repeat" description="LDL-receptor class B 22" evidence="7">
    <location>
        <begin position="2247"/>
        <end position="2290"/>
    </location>
</feature>
<feature type="repeat" description="LDL-receptor class B 23" evidence="7">
    <location>
        <begin position="2291"/>
        <end position="2333"/>
    </location>
</feature>
<feature type="repeat" description="LDL-receptor class B 24" evidence="7">
    <location>
        <begin position="2432"/>
        <end position="2478"/>
    </location>
</feature>
<feature type="repeat" description="LDL-receptor class B 25" evidence="7">
    <location>
        <begin position="2479"/>
        <end position="2519"/>
    </location>
</feature>
<feature type="repeat" description="LDL-receptor class B 26" evidence="7">
    <location>
        <begin position="2520"/>
        <end position="2563"/>
    </location>
</feature>
<feature type="repeat" description="LDL-receptor class B 27" evidence="7">
    <location>
        <begin position="2564"/>
        <end position="2605"/>
    </location>
</feature>
<feature type="repeat" description="LDL-receptor class B 28" evidence="7">
    <location>
        <begin position="2606"/>
        <end position="2647"/>
    </location>
</feature>
<feature type="domain" description="LDL-receptor class A 16" evidence="6">
    <location>
        <begin position="2700"/>
        <end position="2738"/>
    </location>
</feature>
<feature type="domain" description="LDL-receptor class A 17" evidence="6">
    <location>
        <begin position="2741"/>
        <end position="2777"/>
    </location>
</feature>
<feature type="domain" description="LDL-receptor class A 18" evidence="6">
    <location>
        <begin position="2780"/>
        <end position="2819"/>
    </location>
</feature>
<feature type="domain" description="LDL-receptor class A 19" evidence="6">
    <location>
        <begin position="2822"/>
        <end position="2861"/>
    </location>
</feature>
<feature type="domain" description="LDL-receptor class A 20" evidence="6">
    <location>
        <begin position="2864"/>
        <end position="2902"/>
    </location>
</feature>
<feature type="domain" description="LDL-receptor class A 21" evidence="6">
    <location>
        <begin position="2907"/>
        <end position="2946"/>
    </location>
</feature>
<feature type="domain" description="LDL-receptor class A 22" evidence="6">
    <location>
        <begin position="2949"/>
        <end position="2991"/>
    </location>
</feature>
<feature type="domain" description="LDL-receptor class A 23" evidence="6">
    <location>
        <begin position="2994"/>
        <end position="3030"/>
    </location>
</feature>
<feature type="domain" description="LDL-receptor class A 24" evidence="6">
    <location>
        <begin position="3033"/>
        <end position="3071"/>
    </location>
</feature>
<feature type="domain" description="LDL-receptor class A 25" evidence="6">
    <location>
        <begin position="3076"/>
        <end position="3112"/>
    </location>
</feature>
<feature type="domain" description="EGF-like 3" evidence="5">
    <location>
        <begin position="3112"/>
        <end position="3153"/>
    </location>
</feature>
<feature type="domain" description="EGF-like 4; calcium-binding" evidence="5">
    <location>
        <begin position="3154"/>
        <end position="3194"/>
    </location>
</feature>
<feature type="repeat" description="LDL-receptor class B 29" evidence="7">
    <location>
        <begin position="3241"/>
        <end position="3283"/>
    </location>
</feature>
<feature type="repeat" description="LDL-receptor class B 30" evidence="7">
    <location>
        <begin position="3284"/>
        <end position="3326"/>
    </location>
</feature>
<feature type="repeat" description="LDL-receptor class B 31" evidence="7">
    <location>
        <begin position="3335"/>
        <end position="3378"/>
    </location>
</feature>
<feature type="repeat" description="LDL-receptor class B 32" evidence="7">
    <location>
        <begin position="3379"/>
        <end position="3421"/>
    </location>
</feature>
<feature type="repeat" description="LDL-receptor class B 33" evidence="7">
    <location>
        <begin position="3422"/>
        <end position="3462"/>
    </location>
</feature>
<feature type="domain" description="LDL-receptor class A 26" evidence="6">
    <location>
        <begin position="3513"/>
        <end position="3551"/>
    </location>
</feature>
<feature type="domain" description="LDL-receptor class A 27" evidence="6">
    <location>
        <begin position="3554"/>
        <end position="3592"/>
    </location>
</feature>
<feature type="domain" description="LDL-receptor class A 28" evidence="6">
    <location>
        <begin position="3595"/>
        <end position="3633"/>
    </location>
</feature>
<feature type="domain" description="LDL-receptor class A 29" evidence="6">
    <location>
        <begin position="3636"/>
        <end position="3674"/>
    </location>
</feature>
<feature type="domain" description="LDL-receptor class A 30" evidence="6">
    <location>
        <begin position="3679"/>
        <end position="3717"/>
    </location>
</feature>
<feature type="domain" description="LDL-receptor class A 31" evidence="6">
    <location>
        <begin position="3720"/>
        <end position="3757"/>
    </location>
</feature>
<feature type="domain" description="LDL-receptor class A 32" evidence="6">
    <location>
        <begin position="3760"/>
        <end position="3796"/>
    </location>
</feature>
<feature type="domain" description="LDL-receptor class A 33" evidence="6">
    <location>
        <begin position="3799"/>
        <end position="3835"/>
    </location>
</feature>
<feature type="domain" description="LDL-receptor class A 34" evidence="6">
    <location>
        <begin position="3843"/>
        <end position="3881"/>
    </location>
</feature>
<feature type="domain" description="LDL-receptor class A 35" evidence="6">
    <location>
        <begin position="3884"/>
        <end position="3923"/>
    </location>
</feature>
<feature type="domain" description="LDL-receptor class A 36" evidence="6">
    <location>
        <begin position="3929"/>
        <end position="3965"/>
    </location>
</feature>
<feature type="domain" description="EGF-like 5; calcium-binding" evidence="5">
    <location>
        <begin position="4009"/>
        <end position="4050"/>
    </location>
</feature>
<feature type="repeat" description="LDL-receptor class B 34" evidence="7">
    <location>
        <begin position="4156"/>
        <end position="4198"/>
    </location>
</feature>
<feature type="repeat" description="LDL-receptor class B 35" evidence="7">
    <location>
        <begin position="4199"/>
        <end position="4242"/>
    </location>
</feature>
<feature type="repeat" description="LDL-receptor class B 36" evidence="7">
    <location>
        <begin position="4244"/>
        <end position="4285"/>
    </location>
</feature>
<feature type="domain" description="EGF-like 6" evidence="5">
    <location>
        <begin position="4379"/>
        <end position="4413"/>
    </location>
</feature>
<feature type="region of interest" description="Disordered" evidence="8">
    <location>
        <begin position="4558"/>
        <end position="4660"/>
    </location>
</feature>
<feature type="region of interest" description="Interaction with DAB2" evidence="3">
    <location>
        <begin position="4597"/>
        <end position="4610"/>
    </location>
</feature>
<feature type="short sequence motif" description="SH3-binding" evidence="4">
    <location>
        <begin position="4454"/>
        <end position="4463"/>
    </location>
</feature>
<feature type="short sequence motif" description="PxLPxI/L motif 1; mediates interaction with ANKRA2" evidence="2">
    <location>
        <begin position="4457"/>
        <end position="4462"/>
    </location>
</feature>
<feature type="short sequence motif" description="PxLPxI/L motif 2; mediates interaction with ANKRA2" evidence="2">
    <location>
        <begin position="4460"/>
        <end position="4465"/>
    </location>
</feature>
<feature type="short sequence motif" description="Endocytosis signal" evidence="4">
    <location>
        <begin position="4522"/>
        <end position="4527"/>
    </location>
</feature>
<feature type="short sequence motif" description="NPXY motif">
    <location>
        <begin position="4603"/>
        <end position="4606"/>
    </location>
</feature>
<feature type="short sequence motif" description="SH2-binding" evidence="4">
    <location>
        <begin position="4606"/>
        <end position="4609"/>
    </location>
</feature>
<feature type="short sequence motif" description="SH3-binding" evidence="4">
    <location>
        <begin position="4619"/>
        <end position="4630"/>
    </location>
</feature>
<feature type="compositionally biased region" description="Low complexity" evidence="8">
    <location>
        <begin position="4627"/>
        <end position="4636"/>
    </location>
</feature>
<feature type="binding site" evidence="3">
    <location>
        <position position="1127"/>
    </location>
    <ligand>
        <name>Ca(2+)</name>
        <dbReference type="ChEBI" id="CHEBI:29108"/>
    </ligand>
</feature>
<feature type="binding site" evidence="3">
    <location>
        <position position="1130"/>
    </location>
    <ligand>
        <name>Ca(2+)</name>
        <dbReference type="ChEBI" id="CHEBI:29108"/>
    </ligand>
</feature>
<feature type="binding site" evidence="3">
    <location>
        <position position="1132"/>
    </location>
    <ligand>
        <name>Ca(2+)</name>
        <dbReference type="ChEBI" id="CHEBI:29108"/>
    </ligand>
</feature>
<feature type="binding site" evidence="3">
    <location>
        <position position="1134"/>
    </location>
    <ligand>
        <name>Ca(2+)</name>
        <dbReference type="ChEBI" id="CHEBI:29108"/>
    </ligand>
</feature>
<feature type="binding site" evidence="3">
    <location>
        <position position="1140"/>
    </location>
    <ligand>
        <name>Ca(2+)</name>
        <dbReference type="ChEBI" id="CHEBI:29108"/>
    </ligand>
</feature>
<feature type="binding site" evidence="3">
    <location>
        <position position="1141"/>
    </location>
    <ligand>
        <name>Ca(2+)</name>
        <dbReference type="ChEBI" id="CHEBI:29108"/>
    </ligand>
</feature>
<feature type="binding site" evidence="2">
    <location>
        <position position="1206"/>
    </location>
    <ligand>
        <name>Ca(2+)</name>
        <dbReference type="ChEBI" id="CHEBI:29108"/>
    </ligand>
</feature>
<feature type="binding site" evidence="2">
    <location>
        <position position="1209"/>
    </location>
    <ligand>
        <name>Ca(2+)</name>
        <dbReference type="ChEBI" id="CHEBI:29108"/>
    </ligand>
</feature>
<feature type="binding site" evidence="2">
    <location>
        <position position="1211"/>
    </location>
    <ligand>
        <name>Ca(2+)</name>
        <dbReference type="ChEBI" id="CHEBI:29108"/>
    </ligand>
</feature>
<feature type="binding site" evidence="2">
    <location>
        <position position="1213"/>
    </location>
    <ligand>
        <name>Ca(2+)</name>
        <dbReference type="ChEBI" id="CHEBI:29108"/>
    </ligand>
</feature>
<feature type="binding site" evidence="2">
    <location>
        <position position="1219"/>
    </location>
    <ligand>
        <name>Ca(2+)</name>
        <dbReference type="ChEBI" id="CHEBI:29108"/>
    </ligand>
</feature>
<feature type="binding site" evidence="2">
    <location>
        <position position="1220"/>
    </location>
    <ligand>
        <name>Ca(2+)</name>
        <dbReference type="ChEBI" id="CHEBI:29108"/>
    </ligand>
</feature>
<feature type="modified residue" description="Phosphoserine" evidence="37">
    <location>
        <position position="4464"/>
    </location>
</feature>
<feature type="modified residue" description="Phosphoserine" evidence="37">
    <location>
        <position position="4467"/>
    </location>
</feature>
<feature type="modified residue" description="Phosphoserine" evidence="37">
    <location>
        <position position="4577"/>
    </location>
</feature>
<feature type="modified residue" description="Phosphoserine" evidence="2">
    <location>
        <position position="4624"/>
    </location>
</feature>
<feature type="modified residue" description="Phosphothreonine" evidence="37">
    <location>
        <position position="4637"/>
    </location>
</feature>
<feature type="modified residue" description="Phosphoserine" evidence="37">
    <location>
        <position position="4658"/>
    </location>
</feature>
<feature type="glycosylation site" description="N-linked (GlcNAc...) asparagine" evidence="4">
    <location>
        <position position="159"/>
    </location>
</feature>
<feature type="glycosylation site" description="N-linked (GlcNAc...) asparagine" evidence="4">
    <location>
        <position position="178"/>
    </location>
</feature>
<feature type="glycosylation site" description="N-linked (GlcNAc...) asparagine" evidence="4">
    <location>
        <position position="299"/>
    </location>
</feature>
<feature type="glycosylation site" description="N-linked (GlcNAc...) asparagine" evidence="4">
    <location>
        <position position="340"/>
    </location>
</feature>
<feature type="glycosylation site" description="N-linked (GlcNAc...) asparagine" evidence="23">
    <location>
        <position position="387"/>
    </location>
</feature>
<feature type="glycosylation site" description="N-linked (GlcNAc...) asparagine" evidence="4">
    <location>
        <position position="462"/>
    </location>
</feature>
<feature type="glycosylation site" description="N-linked (GlcNAc...) asparagine" evidence="4">
    <location>
        <position position="657"/>
    </location>
</feature>
<feature type="glycosylation site" description="N-linked (GlcNAc...) asparagine" evidence="4">
    <location>
        <position position="865"/>
    </location>
</feature>
<feature type="glycosylation site" description="N-linked (GlcNAc...) asparagine" evidence="4">
    <location>
        <position position="1063"/>
    </location>
</feature>
<feature type="glycosylation site" description="N-linked (GlcNAc...) asparagine" evidence="4">
    <location>
        <position position="1187"/>
    </location>
</feature>
<feature type="glycosylation site" description="N-linked (GlcNAc...) asparagine" evidence="4">
    <location>
        <position position="1328"/>
    </location>
</feature>
<feature type="glycosylation site" description="N-linked (GlcNAc...) asparagine" evidence="4">
    <location>
        <position position="1341"/>
    </location>
</feature>
<feature type="glycosylation site" description="N-linked (GlcNAc...) asparagine" evidence="4">
    <location>
        <position position="1384"/>
    </location>
</feature>
<feature type="glycosylation site" description="N-linked (GlcNAc...) asparagine" evidence="4">
    <location>
        <position position="1451"/>
    </location>
</feature>
<feature type="glycosylation site" description="N-linked (GlcNAc...) asparagine" evidence="4">
    <location>
        <position position="1497"/>
    </location>
</feature>
<feature type="glycosylation site" description="N-linked (GlcNAc...) asparagine" evidence="4">
    <location>
        <position position="1551"/>
    </location>
</feature>
<feature type="glycosylation site" description="N-linked (GlcNAc...) asparagine" evidence="4">
    <location>
        <position position="1676"/>
    </location>
</feature>
<feature type="glycosylation site" description="N-linked (GlcNAc...) asparagine" evidence="4">
    <location>
        <position position="1733"/>
    </location>
</feature>
<feature type="glycosylation site" description="N-linked (GlcNAc...) asparagine" evidence="4">
    <location>
        <position position="1811"/>
    </location>
</feature>
<feature type="glycosylation site" description="N-linked (GlcNAc...) asparagine" evidence="4">
    <location>
        <position position="2131"/>
    </location>
</feature>
<feature type="glycosylation site" description="N-linked (GlcNAc...) asparagine" evidence="4">
    <location>
        <position position="2134"/>
    </location>
</feature>
<feature type="glycosylation site" description="N-linked (GlcNAc...) asparagine" evidence="4">
    <location>
        <position position="2178"/>
    </location>
</feature>
<feature type="glycosylation site" description="N-linked (GlcNAc...) asparagine" evidence="4">
    <location>
        <position position="2225"/>
    </location>
</feature>
<feature type="glycosylation site" description="N-linked (GlcNAc...) asparagine" evidence="4">
    <location>
        <position position="2396"/>
    </location>
</feature>
<feature type="glycosylation site" description="N-linked (GlcNAc...) asparagine" evidence="4">
    <location>
        <position position="2488"/>
    </location>
</feature>
<feature type="glycosylation site" description="N-linked (GlcNAc...) asparagine" evidence="4">
    <location>
        <position position="2548"/>
    </location>
</feature>
<feature type="glycosylation site" description="N-linked (GlcNAc...) asparagine" evidence="4">
    <location>
        <position position="2782"/>
    </location>
</feature>
<feature type="glycosylation site" description="N-linked (GlcNAc...) asparagine" evidence="4">
    <location>
        <position position="2810"/>
    </location>
</feature>
<feature type="glycosylation site" description="N-linked (GlcNAc...) asparagine" evidence="4">
    <location>
        <position position="2949"/>
    </location>
</feature>
<feature type="glycosylation site" description="N-linked (GlcNAc...) asparagine" evidence="4">
    <location>
        <position position="2989"/>
    </location>
</feature>
<feature type="glycosylation site" description="N-linked (GlcNAc...) asparagine" evidence="4">
    <location>
        <position position="3127"/>
    </location>
</feature>
<feature type="glycosylation site" description="N-linked (GlcNAc...) asparagine" evidence="4">
    <location>
        <position position="3213"/>
    </location>
</feature>
<feature type="glycosylation site" description="N-linked (GlcNAc...) asparagine" evidence="4">
    <location>
        <position position="3259"/>
    </location>
</feature>
<feature type="glycosylation site" description="N-linked (GlcNAc...) asparagine" evidence="4">
    <location>
        <position position="3317"/>
    </location>
</feature>
<feature type="glycosylation site" description="N-linked (GlcNAc...) asparagine" evidence="4">
    <location>
        <position position="3357"/>
    </location>
</feature>
<feature type="glycosylation site" description="N-linked (GlcNAc...) asparagine" evidence="4">
    <location>
        <position position="3448"/>
    </location>
</feature>
<feature type="glycosylation site" description="N-linked (GlcNAc...) asparagine" evidence="4">
    <location>
        <position position="3566"/>
    </location>
</feature>
<feature type="glycosylation site" description="N-linked (GlcNAc...) asparagine" evidence="4">
    <location>
        <position position="3682"/>
    </location>
</feature>
<feature type="glycosylation site" description="N-linked (GlcNAc...) asparagine" evidence="4">
    <location>
        <position position="3840"/>
    </location>
</feature>
<feature type="glycosylation site" description="N-linked (GlcNAc...) asparagine" evidence="4">
    <location>
        <position position="3969"/>
    </location>
</feature>
<feature type="glycosylation site" description="N-linked (GlcNAc...) asparagine" evidence="4">
    <location>
        <position position="3980"/>
    </location>
</feature>
<feature type="glycosylation site" description="N-linked (GlcNAc...) asparagine" evidence="4">
    <location>
        <position position="4070"/>
    </location>
</feature>
<feature type="glycosylation site" description="N-linked (GlcNAc...) asparagine" evidence="4">
    <location>
        <position position="4329"/>
    </location>
</feature>
<feature type="disulfide bond" evidence="6">
    <location>
        <begin position="28"/>
        <end position="40"/>
    </location>
</feature>
<feature type="disulfide bond" evidence="6">
    <location>
        <begin position="35"/>
        <end position="53"/>
    </location>
</feature>
<feature type="disulfide bond" evidence="6">
    <location>
        <begin position="47"/>
        <end position="62"/>
    </location>
</feature>
<feature type="disulfide bond" evidence="6">
    <location>
        <begin position="67"/>
        <end position="80"/>
    </location>
</feature>
<feature type="disulfide bond" evidence="6">
    <location>
        <begin position="74"/>
        <end position="93"/>
    </location>
</feature>
<feature type="disulfide bond" evidence="6">
    <location>
        <begin position="87"/>
        <end position="103"/>
    </location>
</feature>
<feature type="disulfide bond" evidence="6">
    <location>
        <begin position="108"/>
        <end position="120"/>
    </location>
</feature>
<feature type="disulfide bond" evidence="6">
    <location>
        <begin position="115"/>
        <end position="133"/>
    </location>
</feature>
<feature type="disulfide bond" evidence="6">
    <location>
        <begin position="127"/>
        <end position="142"/>
    </location>
</feature>
<feature type="disulfide bond" evidence="6">
    <location>
        <begin position="147"/>
        <end position="157"/>
    </location>
</feature>
<feature type="disulfide bond" evidence="6">
    <location>
        <begin position="152"/>
        <end position="170"/>
    </location>
</feature>
<feature type="disulfide bond" evidence="6">
    <location>
        <begin position="164"/>
        <end position="179"/>
    </location>
</feature>
<feature type="disulfide bond" evidence="6">
    <location>
        <begin position="183"/>
        <end position="195"/>
    </location>
</feature>
<feature type="disulfide bond" evidence="6">
    <location>
        <begin position="190"/>
        <end position="208"/>
    </location>
</feature>
<feature type="disulfide bond" evidence="6">
    <location>
        <begin position="202"/>
        <end position="217"/>
    </location>
</feature>
<feature type="disulfide bond" evidence="6">
    <location>
        <begin position="222"/>
        <end position="234"/>
    </location>
</feature>
<feature type="disulfide bond" evidence="6">
    <location>
        <begin position="229"/>
        <end position="247"/>
    </location>
</feature>
<feature type="disulfide bond" evidence="6">
    <location>
        <begin position="241"/>
        <end position="256"/>
    </location>
</feature>
<feature type="disulfide bond" evidence="6">
    <location>
        <begin position="265"/>
        <end position="278"/>
    </location>
</feature>
<feature type="disulfide bond" evidence="6">
    <location>
        <begin position="272"/>
        <end position="291"/>
    </location>
</feature>
<feature type="disulfide bond" evidence="6">
    <location>
        <begin position="285"/>
        <end position="306"/>
    </location>
</feature>
<feature type="disulfide bond" evidence="6">
    <location>
        <begin position="1025"/>
        <end position="1037"/>
    </location>
</feature>
<feature type="disulfide bond" evidence="6">
    <location>
        <begin position="1032"/>
        <end position="1050"/>
    </location>
</feature>
<feature type="disulfide bond" evidence="6">
    <location>
        <begin position="1044"/>
        <end position="1059"/>
    </location>
</feature>
<feature type="disulfide bond" evidence="6">
    <location>
        <begin position="1066"/>
        <end position="1079"/>
    </location>
</feature>
<feature type="disulfide bond" evidence="6">
    <location>
        <begin position="1073"/>
        <end position="1092"/>
    </location>
</feature>
<feature type="disulfide bond" evidence="6">
    <location>
        <begin position="1086"/>
        <end position="1101"/>
    </location>
</feature>
<feature type="disulfide bond" evidence="6">
    <location>
        <begin position="1110"/>
        <end position="1122"/>
    </location>
</feature>
<feature type="disulfide bond" evidence="6">
    <location>
        <begin position="1117"/>
        <end position="1135"/>
    </location>
</feature>
<feature type="disulfide bond" evidence="6">
    <location>
        <begin position="1129"/>
        <end position="1144"/>
    </location>
</feature>
<feature type="disulfide bond" evidence="6">
    <location>
        <begin position="1150"/>
        <end position="1162"/>
    </location>
</feature>
<feature type="disulfide bond" evidence="6">
    <location>
        <begin position="1157"/>
        <end position="1175"/>
    </location>
</feature>
<feature type="disulfide bond" evidence="6">
    <location>
        <begin position="1169"/>
        <end position="1184"/>
    </location>
</feature>
<feature type="disulfide bond" evidence="6">
    <location>
        <begin position="1188"/>
        <end position="1201"/>
    </location>
</feature>
<feature type="disulfide bond" evidence="6">
    <location>
        <begin position="1195"/>
        <end position="1214"/>
    </location>
</feature>
<feature type="disulfide bond" evidence="6">
    <location>
        <begin position="1208"/>
        <end position="1223"/>
    </location>
</feature>
<feature type="disulfide bond" evidence="6">
    <location>
        <begin position="1231"/>
        <end position="1244"/>
    </location>
</feature>
<feature type="disulfide bond" evidence="6">
    <location>
        <begin position="1238"/>
        <end position="1257"/>
    </location>
</feature>
<feature type="disulfide bond" evidence="6">
    <location>
        <begin position="1251"/>
        <end position="1267"/>
    </location>
</feature>
<feature type="disulfide bond" evidence="6">
    <location>
        <begin position="1272"/>
        <end position="1284"/>
    </location>
</feature>
<feature type="disulfide bond" evidence="6">
    <location>
        <begin position="1279"/>
        <end position="1297"/>
    </location>
</feature>
<feature type="disulfide bond" evidence="6">
    <location>
        <begin position="1291"/>
        <end position="1306"/>
    </location>
</feature>
<feature type="disulfide bond" evidence="6">
    <location>
        <begin position="1313"/>
        <end position="1326"/>
    </location>
</feature>
<feature type="disulfide bond" evidence="6">
    <location>
        <begin position="1320"/>
        <end position="1339"/>
    </location>
</feature>
<feature type="disulfide bond" evidence="6">
    <location>
        <begin position="1333"/>
        <end position="1349"/>
    </location>
</feature>
<feature type="disulfide bond" evidence="5">
    <location>
        <begin position="1354"/>
        <end position="1365"/>
    </location>
</feature>
<feature type="disulfide bond" evidence="5">
    <location>
        <begin position="1361"/>
        <end position="1374"/>
    </location>
</feature>
<feature type="disulfide bond" evidence="5">
    <location>
        <begin position="1376"/>
        <end position="1389"/>
    </location>
</feature>
<feature type="disulfide bond" evidence="5">
    <location>
        <begin position="1395"/>
        <end position="1405"/>
    </location>
</feature>
<feature type="disulfide bond" evidence="5">
    <location>
        <begin position="1401"/>
        <end position="1414"/>
    </location>
</feature>
<feature type="disulfide bond" evidence="5">
    <location>
        <begin position="1416"/>
        <end position="1429"/>
    </location>
</feature>
<feature type="disulfide bond" evidence="6">
    <location>
        <begin position="2701"/>
        <end position="2713"/>
    </location>
</feature>
<feature type="disulfide bond" evidence="6">
    <location>
        <begin position="2708"/>
        <end position="2726"/>
    </location>
</feature>
<feature type="disulfide bond" evidence="6">
    <location>
        <begin position="2720"/>
        <end position="2737"/>
    </location>
</feature>
<feature type="disulfide bond" evidence="6">
    <location>
        <begin position="2742"/>
        <end position="2754"/>
    </location>
</feature>
<feature type="disulfide bond" evidence="6">
    <location>
        <begin position="2749"/>
        <end position="2767"/>
    </location>
</feature>
<feature type="disulfide bond" evidence="6">
    <location>
        <begin position="2761"/>
        <end position="2776"/>
    </location>
</feature>
<feature type="disulfide bond" evidence="6">
    <location>
        <begin position="2781"/>
        <end position="2794"/>
    </location>
</feature>
<feature type="disulfide bond" evidence="6">
    <location>
        <begin position="2789"/>
        <end position="2807"/>
    </location>
</feature>
<feature type="disulfide bond" evidence="6">
    <location>
        <begin position="2801"/>
        <end position="2818"/>
    </location>
</feature>
<feature type="disulfide bond" evidence="6">
    <location>
        <begin position="2823"/>
        <end position="2836"/>
    </location>
</feature>
<feature type="disulfide bond" evidence="6">
    <location>
        <begin position="2830"/>
        <end position="2849"/>
    </location>
</feature>
<feature type="disulfide bond" evidence="6">
    <location>
        <begin position="2843"/>
        <end position="2860"/>
    </location>
</feature>
<feature type="disulfide bond" evidence="6">
    <location>
        <begin position="2865"/>
        <end position="2878"/>
    </location>
</feature>
<feature type="disulfide bond" evidence="6">
    <location>
        <begin position="2872"/>
        <end position="2891"/>
    </location>
</feature>
<feature type="disulfide bond" evidence="6">
    <location>
        <begin position="2885"/>
        <end position="2901"/>
    </location>
</feature>
<feature type="disulfide bond" evidence="6">
    <location>
        <begin position="2908"/>
        <end position="2920"/>
    </location>
</feature>
<feature type="disulfide bond" evidence="6">
    <location>
        <begin position="2915"/>
        <end position="2933"/>
    </location>
</feature>
<feature type="disulfide bond" evidence="6">
    <location>
        <begin position="2927"/>
        <end position="2945"/>
    </location>
</feature>
<feature type="disulfide bond" evidence="6">
    <location>
        <begin position="2950"/>
        <end position="2967"/>
    </location>
</feature>
<feature type="disulfide bond" evidence="6">
    <location>
        <begin position="2957"/>
        <end position="2980"/>
    </location>
</feature>
<feature type="disulfide bond" evidence="6">
    <location>
        <begin position="2974"/>
        <end position="2990"/>
    </location>
</feature>
<feature type="disulfide bond" evidence="6">
    <location>
        <begin position="2995"/>
        <end position="3007"/>
    </location>
</feature>
<feature type="disulfide bond" evidence="6">
    <location>
        <begin position="3002"/>
        <end position="3020"/>
    </location>
</feature>
<feature type="disulfide bond" evidence="6">
    <location>
        <begin position="3014"/>
        <end position="3029"/>
    </location>
</feature>
<feature type="disulfide bond" evidence="6">
    <location>
        <begin position="3034"/>
        <end position="3046"/>
    </location>
</feature>
<feature type="disulfide bond" evidence="6">
    <location>
        <begin position="3041"/>
        <end position="3059"/>
    </location>
</feature>
<feature type="disulfide bond" evidence="6">
    <location>
        <begin position="3053"/>
        <end position="3070"/>
    </location>
</feature>
<feature type="disulfide bond" evidence="6">
    <location>
        <begin position="3077"/>
        <end position="3089"/>
    </location>
</feature>
<feature type="disulfide bond" evidence="6">
    <location>
        <begin position="3084"/>
        <end position="3102"/>
    </location>
</feature>
<feature type="disulfide bond" evidence="6">
    <location>
        <begin position="3096"/>
        <end position="3111"/>
    </location>
</feature>
<feature type="disulfide bond" evidence="5">
    <location>
        <begin position="3116"/>
        <end position="3128"/>
    </location>
</feature>
<feature type="disulfide bond" evidence="5">
    <location>
        <begin position="3124"/>
        <end position="3137"/>
    </location>
</feature>
<feature type="disulfide bond" evidence="5">
    <location>
        <begin position="3139"/>
        <end position="3152"/>
    </location>
</feature>
<feature type="disulfide bond" evidence="5">
    <location>
        <begin position="3158"/>
        <end position="3169"/>
    </location>
</feature>
<feature type="disulfide bond" evidence="5">
    <location>
        <begin position="3165"/>
        <end position="3178"/>
    </location>
</feature>
<feature type="disulfide bond" evidence="5">
    <location>
        <begin position="3180"/>
        <end position="3193"/>
    </location>
</feature>
<feature type="disulfide bond" evidence="6">
    <location>
        <begin position="3514"/>
        <end position="3527"/>
    </location>
</feature>
<feature type="disulfide bond" evidence="6">
    <location>
        <begin position="3521"/>
        <end position="3540"/>
    </location>
</feature>
<feature type="disulfide bond" evidence="6">
    <location>
        <begin position="3534"/>
        <end position="3550"/>
    </location>
</feature>
<feature type="disulfide bond" evidence="6">
    <location>
        <begin position="3555"/>
        <end position="3567"/>
    </location>
</feature>
<feature type="disulfide bond" evidence="6">
    <location>
        <begin position="3562"/>
        <end position="3580"/>
    </location>
</feature>
<feature type="disulfide bond" evidence="6">
    <location>
        <begin position="3574"/>
        <end position="3591"/>
    </location>
</feature>
<feature type="disulfide bond" evidence="6">
    <location>
        <begin position="3596"/>
        <end position="3608"/>
    </location>
</feature>
<feature type="disulfide bond" evidence="6">
    <location>
        <begin position="3603"/>
        <end position="3621"/>
    </location>
</feature>
<feature type="disulfide bond" evidence="6">
    <location>
        <begin position="3615"/>
        <end position="3632"/>
    </location>
</feature>
<feature type="disulfide bond" evidence="6">
    <location>
        <begin position="3637"/>
        <end position="3649"/>
    </location>
</feature>
<feature type="disulfide bond" evidence="6">
    <location>
        <begin position="3644"/>
        <end position="3662"/>
    </location>
</feature>
<feature type="disulfide bond" evidence="6">
    <location>
        <begin position="3656"/>
        <end position="3673"/>
    </location>
</feature>
<feature type="disulfide bond" evidence="6">
    <location>
        <begin position="3680"/>
        <end position="3694"/>
    </location>
</feature>
<feature type="disulfide bond" evidence="6">
    <location>
        <begin position="3688"/>
        <end position="3707"/>
    </location>
</feature>
<feature type="disulfide bond" evidence="6">
    <location>
        <begin position="3701"/>
        <end position="3716"/>
    </location>
</feature>
<feature type="disulfide bond" evidence="6">
    <location>
        <begin position="3721"/>
        <end position="3734"/>
    </location>
</feature>
<feature type="disulfide bond" evidence="6">
    <location>
        <begin position="3729"/>
        <end position="3747"/>
    </location>
</feature>
<feature type="disulfide bond" evidence="6">
    <location>
        <begin position="3741"/>
        <end position="3756"/>
    </location>
</feature>
<feature type="disulfide bond" evidence="6">
    <location>
        <begin position="3761"/>
        <end position="3773"/>
    </location>
</feature>
<feature type="disulfide bond" evidence="6">
    <location>
        <begin position="3768"/>
        <end position="3786"/>
    </location>
</feature>
<feature type="disulfide bond" evidence="6">
    <location>
        <begin position="3780"/>
        <end position="3795"/>
    </location>
</feature>
<feature type="disulfide bond" evidence="6">
    <location>
        <begin position="3800"/>
        <end position="3812"/>
    </location>
</feature>
<feature type="disulfide bond" evidence="6">
    <location>
        <begin position="3807"/>
        <end position="3825"/>
    </location>
</feature>
<feature type="disulfide bond" evidence="6">
    <location>
        <begin position="3819"/>
        <end position="3834"/>
    </location>
</feature>
<feature type="disulfide bond" evidence="6">
    <location>
        <begin position="3844"/>
        <end position="3856"/>
    </location>
</feature>
<feature type="disulfide bond" evidence="6">
    <location>
        <begin position="3851"/>
        <end position="3869"/>
    </location>
</feature>
<feature type="disulfide bond" evidence="6">
    <location>
        <begin position="3863"/>
        <end position="3880"/>
    </location>
</feature>
<feature type="disulfide bond" evidence="6">
    <location>
        <begin position="3885"/>
        <end position="3898"/>
    </location>
</feature>
<feature type="disulfide bond" evidence="6">
    <location>
        <begin position="3893"/>
        <end position="3911"/>
    </location>
</feature>
<feature type="disulfide bond" evidence="6">
    <location>
        <begin position="3905"/>
        <end position="3922"/>
    </location>
</feature>
<feature type="disulfide bond" evidence="6">
    <location>
        <begin position="3930"/>
        <end position="3942"/>
    </location>
</feature>
<feature type="disulfide bond" evidence="6">
    <location>
        <begin position="3937"/>
        <end position="3955"/>
    </location>
</feature>
<feature type="disulfide bond" evidence="6">
    <location>
        <begin position="3949"/>
        <end position="3964"/>
    </location>
</feature>
<feature type="disulfide bond" evidence="5">
    <location>
        <begin position="4013"/>
        <end position="4023"/>
    </location>
</feature>
<feature type="disulfide bond" evidence="5">
    <location>
        <begin position="4019"/>
        <end position="4032"/>
    </location>
</feature>
<feature type="disulfide bond" evidence="5">
    <location>
        <begin position="4034"/>
        <end position="4049"/>
    </location>
</feature>
<feature type="disulfide bond" evidence="5">
    <location>
        <begin position="4383"/>
        <end position="4391"/>
    </location>
</feature>
<feature type="disulfide bond" evidence="5">
    <location>
        <begin position="4385"/>
        <end position="4401"/>
    </location>
</feature>
<feature type="disulfide bond" evidence="5">
    <location>
        <begin position="4403"/>
        <end position="4412"/>
    </location>
</feature>
<feature type="sequence conflict" description="In Ref. 3; CAA69877." evidence="36" ref="3">
    <original>L</original>
    <variation>F</variation>
    <location>
        <position position="4198"/>
    </location>
</feature>
<feature type="strand" evidence="38">
    <location>
        <begin position="33"/>
        <end position="35"/>
    </location>
</feature>
<feature type="turn" evidence="38">
    <location>
        <begin position="36"/>
        <end position="38"/>
    </location>
</feature>
<feature type="strand" evidence="38">
    <location>
        <begin position="39"/>
        <end position="41"/>
    </location>
</feature>
<feature type="helix" evidence="38">
    <location>
        <begin position="43"/>
        <end position="45"/>
    </location>
</feature>
<feature type="strand" evidence="38">
    <location>
        <begin position="48"/>
        <end position="51"/>
    </location>
</feature>
<feature type="helix" evidence="39">
    <location>
        <begin position="57"/>
        <end position="60"/>
    </location>
</feature>
<feature type="strand" evidence="38">
    <location>
        <begin position="71"/>
        <end position="74"/>
    </location>
</feature>
<feature type="turn" evidence="38">
    <location>
        <begin position="75"/>
        <end position="78"/>
    </location>
</feature>
<feature type="strand" evidence="38">
    <location>
        <begin position="79"/>
        <end position="82"/>
    </location>
</feature>
<feature type="helix" evidence="38">
    <location>
        <begin position="83"/>
        <end position="87"/>
    </location>
</feature>
<feature type="strand" evidence="38">
    <location>
        <begin position="88"/>
        <end position="90"/>
    </location>
</feature>
<feature type="strand" evidence="38">
    <location>
        <begin position="93"/>
        <end position="98"/>
    </location>
</feature>
<feature type="helix" evidence="38">
    <location>
        <begin position="99"/>
        <end position="101"/>
    </location>
</feature>
<feature type="strand" evidence="39">
    <location>
        <begin position="112"/>
        <end position="115"/>
    </location>
</feature>
<feature type="turn" evidence="39">
    <location>
        <begin position="116"/>
        <end position="118"/>
    </location>
</feature>
<feature type="strand" evidence="39">
    <location>
        <begin position="119"/>
        <end position="122"/>
    </location>
</feature>
<feature type="helix" evidence="39">
    <location>
        <begin position="123"/>
        <end position="127"/>
    </location>
</feature>
<feature type="turn" evidence="39">
    <location>
        <begin position="137"/>
        <end position="141"/>
    </location>
</feature>
<feature type="strand" evidence="39">
    <location>
        <begin position="149"/>
        <end position="151"/>
    </location>
</feature>
<feature type="helix" evidence="39">
    <location>
        <begin position="160"/>
        <end position="164"/>
    </location>
</feature>
<feature type="strand" evidence="39">
    <location>
        <begin position="165"/>
        <end position="167"/>
    </location>
</feature>
<feature type="helix" evidence="39">
    <location>
        <begin position="174"/>
        <end position="177"/>
    </location>
</feature>
<feature type="strand" evidence="39">
    <location>
        <begin position="185"/>
        <end position="190"/>
    </location>
</feature>
<feature type="turn" evidence="39">
    <location>
        <begin position="191"/>
        <end position="193"/>
    </location>
</feature>
<feature type="strand" evidence="39">
    <location>
        <begin position="194"/>
        <end position="197"/>
    </location>
</feature>
<feature type="turn" evidence="39">
    <location>
        <begin position="198"/>
        <end position="202"/>
    </location>
</feature>
<feature type="strand" evidence="39">
    <location>
        <begin position="203"/>
        <end position="205"/>
    </location>
</feature>
<feature type="strand" evidence="39">
    <location>
        <begin position="208"/>
        <end position="210"/>
    </location>
</feature>
<feature type="turn" evidence="39">
    <location>
        <begin position="212"/>
        <end position="216"/>
    </location>
</feature>
<feature type="strand" evidence="38">
    <location>
        <begin position="226"/>
        <end position="229"/>
    </location>
</feature>
<feature type="turn" evidence="38">
    <location>
        <begin position="230"/>
        <end position="232"/>
    </location>
</feature>
<feature type="strand" evidence="38">
    <location>
        <begin position="233"/>
        <end position="236"/>
    </location>
</feature>
<feature type="helix" evidence="38">
    <location>
        <begin position="237"/>
        <end position="241"/>
    </location>
</feature>
<feature type="strand" evidence="38">
    <location>
        <begin position="242"/>
        <end position="244"/>
    </location>
</feature>
<feature type="strand" evidence="38">
    <location>
        <begin position="269"/>
        <end position="271"/>
    </location>
</feature>
<feature type="turn" evidence="38">
    <location>
        <begin position="273"/>
        <end position="275"/>
    </location>
</feature>
<feature type="strand" evidence="38">
    <location>
        <begin position="277"/>
        <end position="280"/>
    </location>
</feature>
<feature type="helix" evidence="38">
    <location>
        <begin position="281"/>
        <end position="284"/>
    </location>
</feature>
<feature type="strand" evidence="38">
    <location>
        <begin position="286"/>
        <end position="288"/>
    </location>
</feature>
<feature type="strand" evidence="39">
    <location>
        <begin position="295"/>
        <end position="300"/>
    </location>
</feature>
<feature type="turn" evidence="39">
    <location>
        <begin position="301"/>
        <end position="303"/>
    </location>
</feature>
<feature type="helix" evidence="38">
    <location>
        <begin position="309"/>
        <end position="313"/>
    </location>
</feature>
<feature type="turn" evidence="38">
    <location>
        <begin position="324"/>
        <end position="326"/>
    </location>
</feature>
<feature type="strand" evidence="38">
    <location>
        <begin position="333"/>
        <end position="338"/>
    </location>
</feature>
<feature type="turn" evidence="39">
    <location>
        <begin position="339"/>
        <end position="341"/>
    </location>
</feature>
<feature type="strand" evidence="38">
    <location>
        <begin position="345"/>
        <end position="347"/>
    </location>
</feature>
<feature type="helix" evidence="39">
    <location>
        <begin position="350"/>
        <end position="352"/>
    </location>
</feature>
<feature type="strand" evidence="38">
    <location>
        <begin position="356"/>
        <end position="364"/>
    </location>
</feature>
<feature type="strand" evidence="38">
    <location>
        <begin position="367"/>
        <end position="371"/>
    </location>
</feature>
<feature type="strand" evidence="38">
    <location>
        <begin position="376"/>
        <end position="379"/>
    </location>
</feature>
<feature type="turn" evidence="38">
    <location>
        <begin position="380"/>
        <end position="382"/>
    </location>
</feature>
<feature type="strand" evidence="38">
    <location>
        <begin position="383"/>
        <end position="386"/>
    </location>
</feature>
<feature type="strand" evidence="38">
    <location>
        <begin position="394"/>
        <end position="398"/>
    </location>
</feature>
<feature type="strand" evidence="38">
    <location>
        <begin position="400"/>
        <end position="407"/>
    </location>
</feature>
<feature type="strand" evidence="38">
    <location>
        <begin position="413"/>
        <end position="418"/>
    </location>
</feature>
<feature type="strand" evidence="38">
    <location>
        <begin position="428"/>
        <end position="431"/>
    </location>
</feature>
<feature type="turn" evidence="38">
    <location>
        <begin position="432"/>
        <end position="435"/>
    </location>
</feature>
<feature type="strand" evidence="38">
    <location>
        <begin position="436"/>
        <end position="441"/>
    </location>
</feature>
<feature type="turn" evidence="38">
    <location>
        <begin position="442"/>
        <end position="445"/>
    </location>
</feature>
<feature type="strand" evidence="38">
    <location>
        <begin position="446"/>
        <end position="451"/>
    </location>
</feature>
<feature type="strand" evidence="38">
    <location>
        <begin position="458"/>
        <end position="461"/>
    </location>
</feature>
<feature type="strand" evidence="38">
    <location>
        <begin position="466"/>
        <end position="474"/>
    </location>
</feature>
<feature type="turn" evidence="38">
    <location>
        <begin position="475"/>
        <end position="478"/>
    </location>
</feature>
<feature type="strand" evidence="38">
    <location>
        <begin position="479"/>
        <end position="484"/>
    </location>
</feature>
<feature type="turn" evidence="38">
    <location>
        <begin position="485"/>
        <end position="488"/>
    </location>
</feature>
<feature type="strand" evidence="38">
    <location>
        <begin position="489"/>
        <end position="494"/>
    </location>
</feature>
<feature type="strand" evidence="38">
    <location>
        <begin position="500"/>
        <end position="504"/>
    </location>
</feature>
<feature type="strand" evidence="38">
    <location>
        <begin position="509"/>
        <end position="517"/>
    </location>
</feature>
<feature type="turn" evidence="38">
    <location>
        <begin position="518"/>
        <end position="521"/>
    </location>
</feature>
<feature type="strand" evidence="38">
    <location>
        <begin position="522"/>
        <end position="529"/>
    </location>
</feature>
<feature type="turn" evidence="39">
    <location>
        <begin position="530"/>
        <end position="532"/>
    </location>
</feature>
<feature type="strand" evidence="38">
    <location>
        <begin position="536"/>
        <end position="541"/>
    </location>
</feature>
<feature type="strand" evidence="38">
    <location>
        <begin position="546"/>
        <end position="551"/>
    </location>
</feature>
<feature type="strand" evidence="38">
    <location>
        <begin position="558"/>
        <end position="564"/>
    </location>
</feature>
<feature type="turn" evidence="38">
    <location>
        <begin position="565"/>
        <end position="568"/>
    </location>
</feature>
<feature type="strand" evidence="38">
    <location>
        <begin position="569"/>
        <end position="574"/>
    </location>
</feature>
<feature type="turn" evidence="38">
    <location>
        <begin position="575"/>
        <end position="578"/>
    </location>
</feature>
<feature type="strand" evidence="38">
    <location>
        <begin position="579"/>
        <end position="584"/>
    </location>
</feature>
<feature type="strand" evidence="38">
    <location>
        <begin position="591"/>
        <end position="595"/>
    </location>
</feature>
<feature type="turn" evidence="38">
    <location>
        <begin position="597"/>
        <end position="599"/>
    </location>
</feature>
<feature type="strand" evidence="38">
    <location>
        <begin position="600"/>
        <end position="609"/>
    </location>
</feature>
<feature type="strand" evidence="38">
    <location>
        <begin position="612"/>
        <end position="617"/>
    </location>
</feature>
<feature type="turn" evidence="38">
    <location>
        <begin position="618"/>
        <end position="621"/>
    </location>
</feature>
<feature type="strand" evidence="38">
    <location>
        <begin position="622"/>
        <end position="629"/>
    </location>
</feature>
<feature type="strand" evidence="38">
    <location>
        <begin position="635"/>
        <end position="639"/>
    </location>
</feature>
<feature type="strand" evidence="38">
    <location>
        <begin position="647"/>
        <end position="650"/>
    </location>
</feature>
<feature type="helix" evidence="38">
    <location>
        <begin position="652"/>
        <end position="654"/>
    </location>
</feature>
<feature type="helix" evidence="38">
    <location>
        <begin position="661"/>
        <end position="663"/>
    </location>
</feature>
<feature type="helix" evidence="38">
    <location>
        <begin position="666"/>
        <end position="668"/>
    </location>
</feature>
<feature type="strand" evidence="38">
    <location>
        <begin position="670"/>
        <end position="675"/>
    </location>
</feature>
<feature type="turn" evidence="38">
    <location>
        <begin position="678"/>
        <end position="684"/>
    </location>
</feature>
<feature type="strand" evidence="38">
    <location>
        <begin position="686"/>
        <end position="689"/>
    </location>
</feature>
<feature type="strand" evidence="38">
    <location>
        <begin position="694"/>
        <end position="696"/>
    </location>
</feature>
<feature type="strand" evidence="38">
    <location>
        <begin position="703"/>
        <end position="705"/>
    </location>
</feature>
<feature type="strand" evidence="38">
    <location>
        <begin position="708"/>
        <end position="716"/>
    </location>
</feature>
<feature type="strand" evidence="38">
    <location>
        <begin position="718"/>
        <end position="721"/>
    </location>
</feature>
<feature type="strand" evidence="38">
    <location>
        <begin position="742"/>
        <end position="748"/>
    </location>
</feature>
<feature type="turn" evidence="38">
    <location>
        <begin position="749"/>
        <end position="752"/>
    </location>
</feature>
<feature type="strand" evidence="38">
    <location>
        <begin position="753"/>
        <end position="758"/>
    </location>
</feature>
<feature type="turn" evidence="38">
    <location>
        <begin position="759"/>
        <end position="762"/>
    </location>
</feature>
<feature type="strand" evidence="38">
    <location>
        <begin position="763"/>
        <end position="768"/>
    </location>
</feature>
<feature type="strand" evidence="38">
    <location>
        <begin position="774"/>
        <end position="778"/>
    </location>
</feature>
<feature type="strand" evidence="38">
    <location>
        <begin position="783"/>
        <end position="791"/>
    </location>
</feature>
<feature type="turn" evidence="38">
    <location>
        <begin position="792"/>
        <end position="795"/>
    </location>
</feature>
<feature type="strand" evidence="38">
    <location>
        <begin position="796"/>
        <end position="801"/>
    </location>
</feature>
<feature type="turn" evidence="38">
    <location>
        <begin position="802"/>
        <end position="805"/>
    </location>
</feature>
<feature type="strand" evidence="38">
    <location>
        <begin position="806"/>
        <end position="811"/>
    </location>
</feature>
<feature type="turn" evidence="38">
    <location>
        <begin position="812"/>
        <end position="815"/>
    </location>
</feature>
<feature type="strand" evidence="38">
    <location>
        <begin position="816"/>
        <end position="822"/>
    </location>
</feature>
<feature type="strand" evidence="38">
    <location>
        <begin position="825"/>
        <end position="833"/>
    </location>
</feature>
<feature type="turn" evidence="38">
    <location>
        <begin position="834"/>
        <end position="837"/>
    </location>
</feature>
<feature type="strand" evidence="38">
    <location>
        <begin position="838"/>
        <end position="843"/>
    </location>
</feature>
<feature type="strand" evidence="38">
    <location>
        <begin position="845"/>
        <end position="847"/>
    </location>
</feature>
<feature type="strand" evidence="38">
    <location>
        <begin position="849"/>
        <end position="854"/>
    </location>
</feature>
<feature type="strand" evidence="38">
    <location>
        <begin position="860"/>
        <end position="864"/>
    </location>
</feature>
<feature type="strand" evidence="38">
    <location>
        <begin position="871"/>
        <end position="877"/>
    </location>
</feature>
<feature type="turn" evidence="38">
    <location>
        <begin position="878"/>
        <end position="881"/>
    </location>
</feature>
<feature type="strand" evidence="38">
    <location>
        <begin position="882"/>
        <end position="887"/>
    </location>
</feature>
<feature type="turn" evidence="38">
    <location>
        <begin position="888"/>
        <end position="891"/>
    </location>
</feature>
<feature type="strand" evidence="38">
    <location>
        <begin position="892"/>
        <end position="897"/>
    </location>
</feature>
<feature type="strand" evidence="38">
    <location>
        <begin position="902"/>
        <end position="905"/>
    </location>
</feature>
<feature type="strand" evidence="38">
    <location>
        <begin position="913"/>
        <end position="921"/>
    </location>
</feature>
<feature type="strand" evidence="38">
    <location>
        <begin position="924"/>
        <end position="929"/>
    </location>
</feature>
<feature type="turn" evidence="38">
    <location>
        <begin position="930"/>
        <end position="933"/>
    </location>
</feature>
<feature type="strand" evidence="38">
    <location>
        <begin position="934"/>
        <end position="939"/>
    </location>
</feature>
<feature type="turn" evidence="38">
    <location>
        <begin position="940"/>
        <end position="942"/>
    </location>
</feature>
<feature type="strand" evidence="38">
    <location>
        <begin position="947"/>
        <end position="950"/>
    </location>
</feature>
<feature type="strand" evidence="38">
    <location>
        <begin position="956"/>
        <end position="963"/>
    </location>
</feature>
<feature type="turn" evidence="38">
    <location>
        <begin position="964"/>
        <end position="967"/>
    </location>
</feature>
<feature type="turn" evidence="39">
    <location>
        <begin position="972"/>
        <end position="974"/>
    </location>
</feature>
<feature type="helix" evidence="38">
    <location>
        <begin position="979"/>
        <end position="982"/>
    </location>
</feature>
<feature type="strand" evidence="38">
    <location>
        <begin position="984"/>
        <end position="990"/>
    </location>
</feature>
<feature type="turn" evidence="38">
    <location>
        <begin position="991"/>
        <end position="993"/>
    </location>
</feature>
<feature type="strand" evidence="38">
    <location>
        <begin position="994"/>
        <end position="998"/>
    </location>
</feature>
<feature type="strand" evidence="38">
    <location>
        <begin position="1003"/>
        <end position="1005"/>
    </location>
</feature>
<feature type="strand" evidence="38">
    <location>
        <begin position="1012"/>
        <end position="1014"/>
    </location>
</feature>
<feature type="turn" evidence="38">
    <location>
        <begin position="1016"/>
        <end position="1018"/>
    </location>
</feature>
<feature type="strand" evidence="38">
    <location>
        <begin position="1027"/>
        <end position="1032"/>
    </location>
</feature>
<feature type="turn" evidence="38">
    <location>
        <begin position="1033"/>
        <end position="1035"/>
    </location>
</feature>
<feature type="strand" evidence="38">
    <location>
        <begin position="1036"/>
        <end position="1038"/>
    </location>
</feature>
<feature type="helix" evidence="38">
    <location>
        <begin position="1040"/>
        <end position="1042"/>
    </location>
</feature>
<feature type="strand" evidence="38">
    <location>
        <begin position="1045"/>
        <end position="1047"/>
    </location>
</feature>
<feature type="turn" evidence="39">
    <location>
        <begin position="1051"/>
        <end position="1053"/>
    </location>
</feature>
<feature type="turn" evidence="38">
    <location>
        <begin position="1055"/>
        <end position="1058"/>
    </location>
</feature>
<feature type="strand" evidence="38">
    <location>
        <begin position="1070"/>
        <end position="1072"/>
    </location>
</feature>
<feature type="turn" evidence="38">
    <location>
        <begin position="1074"/>
        <end position="1076"/>
    </location>
</feature>
<feature type="strand" evidence="38">
    <location>
        <begin position="1079"/>
        <end position="1081"/>
    </location>
</feature>
<feature type="helix" evidence="38">
    <location>
        <begin position="1082"/>
        <end position="1085"/>
    </location>
</feature>
<feature type="strand" evidence="38">
    <location>
        <begin position="1086"/>
        <end position="1089"/>
    </location>
</feature>
<feature type="turn" evidence="38">
    <location>
        <begin position="1097"/>
        <end position="1099"/>
    </location>
</feature>
<feature type="strand" evidence="38">
    <location>
        <begin position="1114"/>
        <end position="1117"/>
    </location>
</feature>
<feature type="turn" evidence="38">
    <location>
        <begin position="1118"/>
        <end position="1120"/>
    </location>
</feature>
<feature type="strand" evidence="38">
    <location>
        <begin position="1121"/>
        <end position="1124"/>
    </location>
</feature>
<feature type="helix" evidence="38">
    <location>
        <begin position="1125"/>
        <end position="1127"/>
    </location>
</feature>
<feature type="strand" evidence="38">
    <location>
        <begin position="1130"/>
        <end position="1132"/>
    </location>
</feature>
<feature type="helix" evidence="38">
    <location>
        <begin position="1139"/>
        <end position="1141"/>
    </location>
</feature>
<feature type="strand" evidence="38">
    <location>
        <begin position="1154"/>
        <end position="1156"/>
    </location>
</feature>
<feature type="turn" evidence="39">
    <location>
        <begin position="1158"/>
        <end position="1160"/>
    </location>
</feature>
<feature type="strand" evidence="39">
    <location>
        <begin position="1161"/>
        <end position="1163"/>
    </location>
</feature>
<feature type="helix" evidence="38">
    <location>
        <begin position="1165"/>
        <end position="1167"/>
    </location>
</feature>
<feature type="strand" evidence="38">
    <location>
        <begin position="1168"/>
        <end position="1172"/>
    </location>
</feature>
<feature type="turn" evidence="38">
    <location>
        <begin position="1180"/>
        <end position="1183"/>
    </location>
</feature>
<feature type="strand" evidence="38">
    <location>
        <begin position="1192"/>
        <end position="1194"/>
    </location>
</feature>
<feature type="strand" evidence="38">
    <location>
        <begin position="1201"/>
        <end position="1203"/>
    </location>
</feature>
<feature type="helix" evidence="38">
    <location>
        <begin position="1204"/>
        <end position="1206"/>
    </location>
</feature>
<feature type="strand" evidence="38">
    <location>
        <begin position="1209"/>
        <end position="1211"/>
    </location>
</feature>
<feature type="helix" evidence="38">
    <location>
        <begin position="1215"/>
        <end position="1217"/>
    </location>
</feature>
<feature type="helix" evidence="38">
    <location>
        <begin position="1218"/>
        <end position="1221"/>
    </location>
</feature>
<feature type="helix" evidence="39">
    <location>
        <begin position="1228"/>
        <end position="1230"/>
    </location>
</feature>
<feature type="strand" evidence="38">
    <location>
        <begin position="1235"/>
        <end position="1237"/>
    </location>
</feature>
<feature type="turn" evidence="38">
    <location>
        <begin position="1239"/>
        <end position="1241"/>
    </location>
</feature>
<feature type="strand" evidence="38">
    <location>
        <begin position="1244"/>
        <end position="1246"/>
    </location>
</feature>
<feature type="helix" evidence="38">
    <location>
        <begin position="1247"/>
        <end position="1249"/>
    </location>
</feature>
<feature type="strand" evidence="38">
    <location>
        <begin position="1252"/>
        <end position="1254"/>
    </location>
</feature>
<feature type="strand" evidence="38">
    <location>
        <begin position="1257"/>
        <end position="1259"/>
    </location>
</feature>
<feature type="helix" evidence="38">
    <location>
        <begin position="1261"/>
        <end position="1263"/>
    </location>
</feature>
<feature type="strand" evidence="39">
    <location>
        <begin position="1276"/>
        <end position="1278"/>
    </location>
</feature>
<feature type="strand" evidence="39">
    <location>
        <begin position="1284"/>
        <end position="1286"/>
    </location>
</feature>
<feature type="helix" evidence="39">
    <location>
        <begin position="1287"/>
        <end position="1291"/>
    </location>
</feature>
<feature type="strand" evidence="39">
    <location>
        <begin position="1292"/>
        <end position="1294"/>
    </location>
</feature>
<feature type="turn" evidence="39">
    <location>
        <begin position="1298"/>
        <end position="1300"/>
    </location>
</feature>
<feature type="helix" evidence="39">
    <location>
        <begin position="1302"/>
        <end position="1304"/>
    </location>
</feature>
<feature type="strand" evidence="39">
    <location>
        <begin position="1317"/>
        <end position="1319"/>
    </location>
</feature>
<feature type="turn" evidence="39">
    <location>
        <begin position="1321"/>
        <end position="1323"/>
    </location>
</feature>
<feature type="strand" evidence="39">
    <location>
        <begin position="1326"/>
        <end position="1328"/>
    </location>
</feature>
<feature type="helix" evidence="39">
    <location>
        <begin position="1329"/>
        <end position="1331"/>
    </location>
</feature>
<feature type="helix" evidence="39">
    <location>
        <begin position="1347"/>
        <end position="1350"/>
    </location>
</feature>
<feature type="helix" evidence="38">
    <location>
        <begin position="1354"/>
        <end position="1357"/>
    </location>
</feature>
<feature type="helix" evidence="38">
    <location>
        <begin position="1358"/>
        <end position="1360"/>
    </location>
</feature>
<feature type="strand" evidence="38">
    <location>
        <begin position="1362"/>
        <end position="1368"/>
    </location>
</feature>
<feature type="strand" evidence="38">
    <location>
        <begin position="1371"/>
        <end position="1375"/>
    </location>
</feature>
<feature type="strand" evidence="38">
    <location>
        <begin position="1380"/>
        <end position="1382"/>
    </location>
</feature>
<feature type="strand" evidence="39">
    <location>
        <begin position="1384"/>
        <end position="1387"/>
    </location>
</feature>
<feature type="strand" evidence="38">
    <location>
        <begin position="1389"/>
        <end position="1391"/>
    </location>
</feature>
<feature type="helix" evidence="38">
    <location>
        <begin position="1394"/>
        <end position="1396"/>
    </location>
</feature>
<feature type="strand" evidence="38">
    <location>
        <begin position="1400"/>
        <end position="1408"/>
    </location>
</feature>
<feature type="strand" evidence="38">
    <location>
        <begin position="1411"/>
        <end position="1415"/>
    </location>
</feature>
<feature type="strand" evidence="38">
    <location>
        <begin position="1420"/>
        <end position="1422"/>
    </location>
</feature>
<feature type="strand" evidence="38">
    <location>
        <begin position="1424"/>
        <end position="1427"/>
    </location>
</feature>
<feature type="strand" evidence="38">
    <location>
        <begin position="1429"/>
        <end position="1431"/>
    </location>
</feature>
<feature type="strand" evidence="38">
    <location>
        <begin position="1437"/>
        <end position="1443"/>
    </location>
</feature>
<feature type="strand" evidence="38">
    <location>
        <begin position="1446"/>
        <end position="1453"/>
    </location>
</feature>
<feature type="strand" evidence="38">
    <location>
        <begin position="1456"/>
        <end position="1461"/>
    </location>
</feature>
<feature type="strand" evidence="38">
    <location>
        <begin position="1469"/>
        <end position="1475"/>
    </location>
</feature>
<feature type="turn" evidence="38">
    <location>
        <begin position="1476"/>
        <end position="1479"/>
    </location>
</feature>
<feature type="strand" evidence="38">
    <location>
        <begin position="1480"/>
        <end position="1485"/>
    </location>
</feature>
<feature type="turn" evidence="38">
    <location>
        <begin position="1486"/>
        <end position="1489"/>
    </location>
</feature>
<feature type="strand" evidence="38">
    <location>
        <begin position="1490"/>
        <end position="1495"/>
    </location>
</feature>
<feature type="strand" evidence="38">
    <location>
        <begin position="1502"/>
        <end position="1505"/>
    </location>
</feature>
<feature type="strand" evidence="38">
    <location>
        <begin position="1512"/>
        <end position="1518"/>
    </location>
</feature>
<feature type="turn" evidence="38">
    <location>
        <begin position="1519"/>
        <end position="1522"/>
    </location>
</feature>
<feature type="strand" evidence="38">
    <location>
        <begin position="1523"/>
        <end position="1528"/>
    </location>
</feature>
<feature type="turn" evidence="38">
    <location>
        <begin position="1529"/>
        <end position="1532"/>
    </location>
</feature>
<feature type="strand" evidence="38">
    <location>
        <begin position="1533"/>
        <end position="1538"/>
    </location>
</feature>
<feature type="strand" evidence="38">
    <location>
        <begin position="1541"/>
        <end position="1548"/>
    </location>
</feature>
<feature type="strand" evidence="38">
    <location>
        <begin position="1555"/>
        <end position="1561"/>
    </location>
</feature>
<feature type="turn" evidence="38">
    <location>
        <begin position="1564"/>
        <end position="1566"/>
    </location>
</feature>
<feature type="strand" evidence="38">
    <location>
        <begin position="1568"/>
        <end position="1573"/>
    </location>
</feature>
<feature type="strand" evidence="38">
    <location>
        <begin position="1575"/>
        <end position="1577"/>
    </location>
</feature>
<feature type="strand" evidence="38">
    <location>
        <begin position="1579"/>
        <end position="1584"/>
    </location>
</feature>
<feature type="strand" evidence="38">
    <location>
        <begin position="1590"/>
        <end position="1594"/>
    </location>
</feature>
<feature type="strand" evidence="38">
    <location>
        <begin position="1599"/>
        <end position="1607"/>
    </location>
</feature>
<feature type="turn" evidence="38">
    <location>
        <begin position="1608"/>
        <end position="1611"/>
    </location>
</feature>
<feature type="strand" evidence="38">
    <location>
        <begin position="1612"/>
        <end position="1617"/>
    </location>
</feature>
<feature type="turn" evidence="38">
    <location>
        <begin position="1618"/>
        <end position="1621"/>
    </location>
</feature>
<feature type="strand" evidence="38">
    <location>
        <begin position="1622"/>
        <end position="1627"/>
    </location>
</feature>
<feature type="strand" evidence="38">
    <location>
        <begin position="1632"/>
        <end position="1637"/>
    </location>
</feature>
<feature type="turn" evidence="39">
    <location>
        <begin position="1640"/>
        <end position="1642"/>
    </location>
</feature>
<feature type="strand" evidence="38">
    <location>
        <begin position="1644"/>
        <end position="1652"/>
    </location>
</feature>
<feature type="strand" evidence="38">
    <location>
        <begin position="1655"/>
        <end position="1660"/>
    </location>
</feature>
<feature type="turn" evidence="38">
    <location>
        <begin position="1661"/>
        <end position="1664"/>
    </location>
</feature>
<feature type="strand" evidence="38">
    <location>
        <begin position="1665"/>
        <end position="1670"/>
    </location>
</feature>
<feature type="turn" evidence="38">
    <location>
        <begin position="1671"/>
        <end position="1673"/>
    </location>
</feature>
<feature type="strand" evidence="38">
    <location>
        <begin position="1676"/>
        <end position="1682"/>
    </location>
</feature>
<feature type="strand" evidence="38">
    <location>
        <begin position="1689"/>
        <end position="1694"/>
    </location>
</feature>
<feature type="helix" evidence="38">
    <location>
        <begin position="1695"/>
        <end position="1697"/>
    </location>
</feature>
<feature type="helix" evidence="38">
    <location>
        <begin position="1704"/>
        <end position="1707"/>
    </location>
</feature>
<feature type="strand" evidence="38">
    <location>
        <begin position="1711"/>
        <end position="1716"/>
    </location>
</feature>
<feature type="turn" evidence="38">
    <location>
        <begin position="1720"/>
        <end position="1722"/>
    </location>
</feature>
<feature type="strand" evidence="38">
    <location>
        <begin position="1724"/>
        <end position="1727"/>
    </location>
</feature>
<feature type="strand" evidence="38">
    <location>
        <begin position="1732"/>
        <end position="1734"/>
    </location>
</feature>
<feature type="strand" evidence="38">
    <location>
        <begin position="1741"/>
        <end position="1743"/>
    </location>
</feature>
<feature type="strand" evidence="38">
    <location>
        <begin position="1748"/>
        <end position="1755"/>
    </location>
</feature>
<feature type="strand" evidence="38">
    <location>
        <begin position="1757"/>
        <end position="1763"/>
    </location>
</feature>
<feature type="strand" evidence="38">
    <location>
        <begin position="1785"/>
        <end position="1787"/>
    </location>
</feature>
<feature type="turn" evidence="38">
    <location>
        <begin position="1788"/>
        <end position="1791"/>
    </location>
</feature>
<feature type="strand" evidence="38">
    <location>
        <begin position="1792"/>
        <end position="1797"/>
    </location>
</feature>
<feature type="turn" evidence="38">
    <location>
        <begin position="1798"/>
        <end position="1800"/>
    </location>
</feature>
<feature type="strand" evidence="38">
    <location>
        <begin position="1801"/>
        <end position="1806"/>
    </location>
</feature>
<feature type="strand" evidence="38">
    <location>
        <begin position="1812"/>
        <end position="1817"/>
    </location>
</feature>
<feature type="strand" evidence="38">
    <location>
        <begin position="1820"/>
        <end position="1822"/>
    </location>
</feature>
<feature type="strand" evidence="38">
    <location>
        <begin position="1826"/>
        <end position="1830"/>
    </location>
</feature>
<feature type="turn" evidence="38">
    <location>
        <begin position="1831"/>
        <end position="1834"/>
    </location>
</feature>
<feature type="strand" evidence="38">
    <location>
        <begin position="1835"/>
        <end position="1840"/>
    </location>
</feature>
<feature type="turn" evidence="38">
    <location>
        <begin position="1841"/>
        <end position="1844"/>
    </location>
</feature>
<feature type="strand" evidence="38">
    <location>
        <begin position="1845"/>
        <end position="1850"/>
    </location>
</feature>
<feature type="strand" evidence="38">
    <location>
        <begin position="1852"/>
        <end position="1855"/>
    </location>
</feature>
<feature type="strand" evidence="38">
    <location>
        <begin position="1858"/>
        <end position="1863"/>
    </location>
</feature>
<feature type="strand" evidence="38">
    <location>
        <begin position="1872"/>
        <end position="1880"/>
    </location>
</feature>
<feature type="turn" evidence="38">
    <location>
        <begin position="1881"/>
        <end position="1884"/>
    </location>
</feature>
<feature type="strand" evidence="38">
    <location>
        <begin position="1885"/>
        <end position="1890"/>
    </location>
</feature>
<feature type="strand" evidence="38">
    <location>
        <begin position="1899"/>
        <end position="1905"/>
    </location>
</feature>
<feature type="strand" evidence="38">
    <location>
        <begin position="1911"/>
        <end position="1918"/>
    </location>
</feature>
<feature type="strand" evidence="38">
    <location>
        <begin position="1920"/>
        <end position="1928"/>
    </location>
</feature>
<feature type="turn" evidence="38">
    <location>
        <begin position="1929"/>
        <end position="1932"/>
    </location>
</feature>
<feature type="strand" evidence="38">
    <location>
        <begin position="1933"/>
        <end position="1938"/>
    </location>
</feature>
<feature type="turn" evidence="38">
    <location>
        <begin position="1939"/>
        <end position="1942"/>
    </location>
</feature>
<feature type="strand" evidence="38">
    <location>
        <begin position="1943"/>
        <end position="1948"/>
    </location>
</feature>
<feature type="strand" evidence="38">
    <location>
        <begin position="1955"/>
        <end position="1958"/>
    </location>
</feature>
<feature type="strand" evidence="38">
    <location>
        <begin position="1964"/>
        <end position="1970"/>
    </location>
</feature>
<feature type="strand" evidence="38">
    <location>
        <begin position="1973"/>
        <end position="1978"/>
    </location>
</feature>
<feature type="turn" evidence="38">
    <location>
        <begin position="1979"/>
        <end position="1982"/>
    </location>
</feature>
<feature type="strand" evidence="38">
    <location>
        <begin position="1983"/>
        <end position="1988"/>
    </location>
</feature>
<feature type="turn" evidence="38">
    <location>
        <begin position="1989"/>
        <end position="1991"/>
    </location>
</feature>
<feature type="strand" evidence="38">
    <location>
        <begin position="1995"/>
        <end position="2001"/>
    </location>
</feature>
<feature type="strand" evidence="38">
    <location>
        <begin position="2003"/>
        <end position="2011"/>
    </location>
</feature>
<feature type="turn" evidence="38">
    <location>
        <begin position="2016"/>
        <end position="2019"/>
    </location>
</feature>
<feature type="helix" evidence="38">
    <location>
        <begin position="2022"/>
        <end position="2025"/>
    </location>
</feature>
<feature type="strand" evidence="38">
    <location>
        <begin position="2030"/>
        <end position="2036"/>
    </location>
</feature>
<feature type="helix" evidence="38">
    <location>
        <begin position="2038"/>
        <end position="2040"/>
    </location>
</feature>
<feature type="strand" evidence="38">
    <location>
        <begin position="2042"/>
        <end position="2045"/>
    </location>
</feature>
<feature type="strand" evidence="38">
    <location>
        <begin position="2050"/>
        <end position="2052"/>
    </location>
</feature>
<feature type="strand" evidence="38">
    <location>
        <begin position="2059"/>
        <end position="2061"/>
    </location>
</feature>
<feature type="strand" evidence="38">
    <location>
        <begin position="2064"/>
        <end position="2070"/>
    </location>
</feature>
<feature type="strand" evidence="38">
    <location>
        <begin position="2073"/>
        <end position="2080"/>
    </location>
</feature>
<feature type="strand" evidence="38">
    <location>
        <begin position="2085"/>
        <end position="2088"/>
    </location>
</feature>
<feature type="strand" evidence="38">
    <location>
        <begin position="2091"/>
        <end position="2093"/>
    </location>
</feature>
<feature type="strand" evidence="38">
    <location>
        <begin position="2098"/>
        <end position="2104"/>
    </location>
</feature>
<feature type="turn" evidence="38">
    <location>
        <begin position="2105"/>
        <end position="2108"/>
    </location>
</feature>
<feature type="strand" evidence="38">
    <location>
        <begin position="2109"/>
        <end position="2114"/>
    </location>
</feature>
<feature type="helix" evidence="38">
    <location>
        <begin position="2120"/>
        <end position="2122"/>
    </location>
</feature>
<feature type="strand" evidence="38">
    <location>
        <begin position="2124"/>
        <end position="2128"/>
    </location>
</feature>
<feature type="strand" evidence="38">
    <location>
        <begin position="2136"/>
        <end position="2139"/>
    </location>
</feature>
<feature type="strand" evidence="38">
    <location>
        <begin position="2147"/>
        <end position="2154"/>
    </location>
</feature>
<feature type="turn" evidence="38">
    <location>
        <begin position="2155"/>
        <end position="2158"/>
    </location>
</feature>
<feature type="strand" evidence="38">
    <location>
        <begin position="2159"/>
        <end position="2165"/>
    </location>
</feature>
<feature type="strand" evidence="38">
    <location>
        <begin position="2170"/>
        <end position="2176"/>
    </location>
</feature>
<feature type="turn" evidence="38">
    <location>
        <begin position="2177"/>
        <end position="2180"/>
    </location>
</feature>
<feature type="strand" evidence="38">
    <location>
        <begin position="2181"/>
        <end position="2191"/>
    </location>
</feature>
<feature type="strand" evidence="38">
    <location>
        <begin position="2193"/>
        <end position="2199"/>
    </location>
</feature>
<feature type="turn" evidence="38">
    <location>
        <begin position="2200"/>
        <end position="2203"/>
    </location>
</feature>
<feature type="strand" evidence="38">
    <location>
        <begin position="2204"/>
        <end position="2209"/>
    </location>
</feature>
<feature type="strand" evidence="38">
    <location>
        <begin position="2211"/>
        <end position="2213"/>
    </location>
</feature>
<feature type="strand" evidence="38">
    <location>
        <begin position="2215"/>
        <end position="2219"/>
    </location>
</feature>
<feature type="strand" evidence="38">
    <location>
        <begin position="2226"/>
        <end position="2230"/>
    </location>
</feature>
<feature type="strand" evidence="38">
    <location>
        <begin position="2237"/>
        <end position="2243"/>
    </location>
</feature>
<feature type="turn" evidence="38">
    <location>
        <begin position="2244"/>
        <end position="2247"/>
    </location>
</feature>
<feature type="strand" evidence="38">
    <location>
        <begin position="2248"/>
        <end position="2253"/>
    </location>
</feature>
<feature type="turn" evidence="38">
    <location>
        <begin position="2254"/>
        <end position="2257"/>
    </location>
</feature>
<feature type="strand" evidence="38">
    <location>
        <begin position="2258"/>
        <end position="2263"/>
    </location>
</feature>
<feature type="strand" evidence="38">
    <location>
        <begin position="2269"/>
        <end position="2278"/>
    </location>
</feature>
<feature type="strand" evidence="38">
    <location>
        <begin position="2281"/>
        <end position="2287"/>
    </location>
</feature>
<feature type="strand" evidence="38">
    <location>
        <begin position="2290"/>
        <end position="2295"/>
    </location>
</feature>
<feature type="turn" evidence="38">
    <location>
        <begin position="2296"/>
        <end position="2299"/>
    </location>
</feature>
<feature type="strand" evidence="38">
    <location>
        <begin position="2300"/>
        <end position="2305"/>
    </location>
</feature>
<feature type="strand" evidence="38">
    <location>
        <begin position="2315"/>
        <end position="2319"/>
    </location>
</feature>
<feature type="strand" evidence="38">
    <location>
        <begin position="2323"/>
        <end position="2332"/>
    </location>
</feature>
<feature type="turn" evidence="38">
    <location>
        <begin position="2339"/>
        <end position="2343"/>
    </location>
</feature>
<feature type="helix" evidence="38">
    <location>
        <begin position="2346"/>
        <end position="2348"/>
    </location>
</feature>
<feature type="helix" evidence="38">
    <location>
        <begin position="2350"/>
        <end position="2353"/>
    </location>
</feature>
<feature type="strand" evidence="38">
    <location>
        <begin position="2355"/>
        <end position="2359"/>
    </location>
</feature>
<feature type="strand" evidence="38">
    <location>
        <begin position="2368"/>
        <end position="2370"/>
    </location>
</feature>
<feature type="strand" evidence="38">
    <location>
        <begin position="2372"/>
        <end position="2376"/>
    </location>
</feature>
<feature type="strand" evidence="38">
    <location>
        <begin position="2390"/>
        <end position="2395"/>
    </location>
</feature>
<feature type="strand" evidence="38">
    <location>
        <begin position="2398"/>
        <end position="2402"/>
    </location>
</feature>
<feature type="strand" evidence="38">
    <location>
        <begin position="2419"/>
        <end position="2422"/>
    </location>
</feature>
<feature type="strand" evidence="38">
    <location>
        <begin position="2426"/>
        <end position="2428"/>
    </location>
</feature>
<feature type="turn" evidence="38">
    <location>
        <begin position="2429"/>
        <end position="2432"/>
    </location>
</feature>
<feature type="strand" evidence="38">
    <location>
        <begin position="2433"/>
        <end position="2456"/>
    </location>
</feature>
<feature type="strand" evidence="38">
    <location>
        <begin position="2460"/>
        <end position="2475"/>
    </location>
</feature>
<feature type="turn" evidence="38">
    <location>
        <begin position="2476"/>
        <end position="2479"/>
    </location>
</feature>
<feature type="strand" evidence="38">
    <location>
        <begin position="2480"/>
        <end position="2485"/>
    </location>
</feature>
<feature type="turn" evidence="38">
    <location>
        <begin position="2486"/>
        <end position="2489"/>
    </location>
</feature>
<feature type="strand" evidence="38">
    <location>
        <begin position="2490"/>
        <end position="2495"/>
    </location>
</feature>
<feature type="strand" evidence="38">
    <location>
        <begin position="2501"/>
        <end position="2505"/>
    </location>
</feature>
<feature type="strand" evidence="38">
    <location>
        <begin position="2508"/>
        <end position="2516"/>
    </location>
</feature>
<feature type="turn" evidence="38">
    <location>
        <begin position="2517"/>
        <end position="2520"/>
    </location>
</feature>
<feature type="strand" evidence="38">
    <location>
        <begin position="2521"/>
        <end position="2526"/>
    </location>
</feature>
<feature type="strand" evidence="38">
    <location>
        <begin position="2528"/>
        <end position="2530"/>
    </location>
</feature>
<feature type="strand" evidence="38">
    <location>
        <begin position="2532"/>
        <end position="2537"/>
    </location>
</feature>
<feature type="strand" evidence="38">
    <location>
        <begin position="2543"/>
        <end position="2547"/>
    </location>
</feature>
<feature type="strand" evidence="38">
    <location>
        <begin position="2554"/>
        <end position="2560"/>
    </location>
</feature>
<feature type="turn" evidence="38">
    <location>
        <begin position="2561"/>
        <end position="2564"/>
    </location>
</feature>
<feature type="strand" evidence="38">
    <location>
        <begin position="2565"/>
        <end position="2570"/>
    </location>
</feature>
<feature type="turn" evidence="38">
    <location>
        <begin position="2571"/>
        <end position="2574"/>
    </location>
</feature>
<feature type="strand" evidence="38">
    <location>
        <begin position="2575"/>
        <end position="2580"/>
    </location>
</feature>
<feature type="strand" evidence="38">
    <location>
        <begin position="2586"/>
        <end position="2591"/>
    </location>
</feature>
<feature type="strand" evidence="38">
    <location>
        <begin position="2594"/>
        <end position="2602"/>
    </location>
</feature>
<feature type="strand" evidence="38">
    <location>
        <begin position="2605"/>
        <end position="2610"/>
    </location>
</feature>
<feature type="turn" evidence="38">
    <location>
        <begin position="2611"/>
        <end position="2614"/>
    </location>
</feature>
<feature type="strand" evidence="38">
    <location>
        <begin position="2615"/>
        <end position="2620"/>
    </location>
</feature>
<feature type="turn" evidence="38">
    <location>
        <begin position="2621"/>
        <end position="2623"/>
    </location>
</feature>
<feature type="strand" evidence="38">
    <location>
        <begin position="2628"/>
        <end position="2631"/>
    </location>
</feature>
<feature type="strand" evidence="38">
    <location>
        <begin position="2638"/>
        <end position="2644"/>
    </location>
</feature>
<feature type="helix" evidence="38">
    <location>
        <begin position="2655"/>
        <end position="2657"/>
    </location>
</feature>
<feature type="helix" evidence="38">
    <location>
        <begin position="2659"/>
        <end position="2662"/>
    </location>
</feature>
<feature type="strand" evidence="38">
    <location>
        <begin position="2664"/>
        <end position="2668"/>
    </location>
</feature>
<feature type="strand" evidence="38">
    <location>
        <begin position="2675"/>
        <end position="2677"/>
    </location>
</feature>
<feature type="strand" evidence="39">
    <location>
        <begin position="2680"/>
        <end position="2682"/>
    </location>
</feature>
<feature type="strand" evidence="38">
    <location>
        <begin position="2684"/>
        <end position="2687"/>
    </location>
</feature>
<feature type="turn" evidence="38">
    <location>
        <begin position="2688"/>
        <end position="2691"/>
    </location>
</feature>
<feature type="strand" evidence="38">
    <location>
        <begin position="2692"/>
        <end position="2695"/>
    </location>
</feature>
<feature type="strand" evidence="38">
    <location>
        <begin position="2705"/>
        <end position="2708"/>
    </location>
</feature>
<feature type="turn" evidence="38">
    <location>
        <begin position="2709"/>
        <end position="2711"/>
    </location>
</feature>
<feature type="strand" evidence="38">
    <location>
        <begin position="2712"/>
        <end position="2715"/>
    </location>
</feature>
<feature type="helix" evidence="38">
    <location>
        <begin position="2716"/>
        <end position="2718"/>
    </location>
</feature>
<feature type="strand" evidence="38">
    <location>
        <begin position="2721"/>
        <end position="2723"/>
    </location>
</feature>
<feature type="strand" evidence="38">
    <location>
        <begin position="2726"/>
        <end position="2729"/>
    </location>
</feature>
<feature type="helix" evidence="38">
    <location>
        <begin position="2730"/>
        <end position="2732"/>
    </location>
</feature>
<feature type="helix" evidence="38">
    <location>
        <begin position="2734"/>
        <end position="2737"/>
    </location>
</feature>
<feature type="strand" evidence="38">
    <location>
        <begin position="2746"/>
        <end position="2749"/>
    </location>
</feature>
<feature type="turn" evidence="38">
    <location>
        <begin position="2750"/>
        <end position="2752"/>
    </location>
</feature>
<feature type="strand" evidence="38">
    <location>
        <begin position="2753"/>
        <end position="2756"/>
    </location>
</feature>
<feature type="helix" evidence="38">
    <location>
        <begin position="2757"/>
        <end position="2759"/>
    </location>
</feature>
<feature type="strand" evidence="38">
    <location>
        <begin position="2762"/>
        <end position="2764"/>
    </location>
</feature>
<feature type="strand" evidence="38">
    <location>
        <begin position="2767"/>
        <end position="2769"/>
    </location>
</feature>
<feature type="helix" evidence="38">
    <location>
        <begin position="2770"/>
        <end position="2773"/>
    </location>
</feature>
<feature type="turn" evidence="39">
    <location>
        <begin position="2783"/>
        <end position="2785"/>
    </location>
</feature>
<feature type="strand" evidence="39">
    <location>
        <begin position="2786"/>
        <end position="2788"/>
    </location>
</feature>
<feature type="strand" evidence="39">
    <location>
        <begin position="2794"/>
        <end position="2796"/>
    </location>
</feature>
<feature type="helix" evidence="39">
    <location>
        <begin position="2797"/>
        <end position="2799"/>
    </location>
</feature>
<feature type="strand" evidence="39">
    <location>
        <begin position="2802"/>
        <end position="2804"/>
    </location>
</feature>
<feature type="turn" evidence="39">
    <location>
        <begin position="2813"/>
        <end position="2817"/>
    </location>
</feature>
<feature type="strand" evidence="39">
    <location>
        <begin position="2827"/>
        <end position="2829"/>
    </location>
</feature>
<feature type="strand" evidence="39">
    <location>
        <begin position="2831"/>
        <end position="2834"/>
    </location>
</feature>
<feature type="strand" evidence="39">
    <location>
        <begin position="2836"/>
        <end position="2838"/>
    </location>
</feature>
<feature type="helix" evidence="39">
    <location>
        <begin position="2839"/>
        <end position="2843"/>
    </location>
</feature>
<feature type="strand" evidence="39">
    <location>
        <begin position="2844"/>
        <end position="2846"/>
    </location>
</feature>
<feature type="helix" evidence="39">
    <location>
        <begin position="2857"/>
        <end position="2860"/>
    </location>
</feature>
<feature type="strand" evidence="39">
    <location>
        <begin position="2867"/>
        <end position="2870"/>
    </location>
</feature>
<feature type="strand" evidence="39">
    <location>
        <begin position="2873"/>
        <end position="2876"/>
    </location>
</feature>
<feature type="helix" evidence="39">
    <location>
        <begin position="2881"/>
        <end position="2886"/>
    </location>
</feature>
<feature type="helix" evidence="39">
    <location>
        <begin position="2899"/>
        <end position="2901"/>
    </location>
</feature>
<feature type="strand" evidence="39">
    <location>
        <begin position="2912"/>
        <end position="2914"/>
    </location>
</feature>
<feature type="strand" evidence="39">
    <location>
        <begin position="2920"/>
        <end position="2922"/>
    </location>
</feature>
<feature type="helix" evidence="39">
    <location>
        <begin position="2923"/>
        <end position="2925"/>
    </location>
</feature>
<feature type="strand" evidence="39">
    <location>
        <begin position="2928"/>
        <end position="2930"/>
    </location>
</feature>
<feature type="strand" evidence="39">
    <location>
        <begin position="2934"/>
        <end position="2936"/>
    </location>
</feature>
<feature type="helix" evidence="39">
    <location>
        <begin position="2941"/>
        <end position="2943"/>
    </location>
</feature>
<feature type="helix" evidence="39">
    <location>
        <begin position="2945"/>
        <end position="2947"/>
    </location>
</feature>
<feature type="strand" evidence="39">
    <location>
        <begin position="2954"/>
        <end position="2956"/>
    </location>
</feature>
<feature type="strand" evidence="39">
    <location>
        <begin position="2966"/>
        <end position="2969"/>
    </location>
</feature>
<feature type="helix" evidence="39">
    <location>
        <begin position="2970"/>
        <end position="2972"/>
    </location>
</feature>
<feature type="strand" evidence="39">
    <location>
        <begin position="2973"/>
        <end position="2977"/>
    </location>
</feature>
<feature type="helix" evidence="39">
    <location>
        <begin position="2984"/>
        <end position="2986"/>
    </location>
</feature>
<feature type="strand" evidence="39">
    <location>
        <begin position="2987"/>
        <end position="2990"/>
    </location>
</feature>
<feature type="strand" evidence="39">
    <location>
        <begin position="2999"/>
        <end position="3002"/>
    </location>
</feature>
<feature type="turn" evidence="39">
    <location>
        <begin position="3003"/>
        <end position="3005"/>
    </location>
</feature>
<feature type="strand" evidence="39">
    <location>
        <begin position="3006"/>
        <end position="3009"/>
    </location>
</feature>
<feature type="helix" evidence="39">
    <location>
        <begin position="3010"/>
        <end position="3012"/>
    </location>
</feature>
<feature type="strand" evidence="39">
    <location>
        <begin position="3013"/>
        <end position="3017"/>
    </location>
</feature>
<feature type="strand" evidence="39">
    <location>
        <begin position="3019"/>
        <end position="3023"/>
    </location>
</feature>
<feature type="turn" evidence="39">
    <location>
        <begin position="3024"/>
        <end position="3028"/>
    </location>
</feature>
<feature type="strand" evidence="38">
    <location>
        <begin position="3038"/>
        <end position="3040"/>
    </location>
</feature>
<feature type="turn" evidence="39">
    <location>
        <begin position="3042"/>
        <end position="3044"/>
    </location>
</feature>
<feature type="strand" evidence="38">
    <location>
        <begin position="3046"/>
        <end position="3048"/>
    </location>
</feature>
<feature type="helix" evidence="38">
    <location>
        <begin position="3049"/>
        <end position="3051"/>
    </location>
</feature>
<feature type="strand" evidence="38">
    <location>
        <begin position="3054"/>
        <end position="3056"/>
    </location>
</feature>
<feature type="helix" evidence="38">
    <location>
        <begin position="3063"/>
        <end position="3065"/>
    </location>
</feature>
<feature type="helix" evidence="38">
    <location>
        <begin position="3067"/>
        <end position="3070"/>
    </location>
</feature>
<feature type="strand" evidence="38">
    <location>
        <begin position="3081"/>
        <end position="3084"/>
    </location>
</feature>
<feature type="turn" evidence="38">
    <location>
        <begin position="3085"/>
        <end position="3087"/>
    </location>
</feature>
<feature type="strand" evidence="38">
    <location>
        <begin position="3088"/>
        <end position="3091"/>
    </location>
</feature>
<feature type="turn" evidence="38">
    <location>
        <begin position="3092"/>
        <end position="3096"/>
    </location>
</feature>
<feature type="strand" evidence="38">
    <location>
        <begin position="3097"/>
        <end position="3099"/>
    </location>
</feature>
<feature type="turn" evidence="38">
    <location>
        <begin position="3106"/>
        <end position="3112"/>
    </location>
</feature>
<feature type="helix" evidence="38">
    <location>
        <begin position="3115"/>
        <end position="3117"/>
    </location>
</feature>
<feature type="strand" evidence="38">
    <location>
        <begin position="3119"/>
        <end position="3122"/>
    </location>
</feature>
<feature type="strand" evidence="38">
    <location>
        <begin position="3125"/>
        <end position="3130"/>
    </location>
</feature>
<feature type="strand" evidence="38">
    <location>
        <begin position="3132"/>
        <end position="3138"/>
    </location>
</feature>
<feature type="strand" evidence="38">
    <location>
        <begin position="3143"/>
        <end position="3145"/>
    </location>
</feature>
<feature type="strand" evidence="38">
    <location>
        <begin position="3152"/>
        <end position="3154"/>
    </location>
</feature>
<feature type="helix" evidence="38">
    <location>
        <begin position="3157"/>
        <end position="3160"/>
    </location>
</feature>
<feature type="helix" evidence="38">
    <location>
        <begin position="3162"/>
        <end position="3164"/>
    </location>
</feature>
<feature type="strand" evidence="38">
    <location>
        <begin position="3165"/>
        <end position="3172"/>
    </location>
</feature>
<feature type="strand" evidence="38">
    <location>
        <begin position="3175"/>
        <end position="3179"/>
    </location>
</feature>
<feature type="strand" evidence="38">
    <location>
        <begin position="3184"/>
        <end position="3186"/>
    </location>
</feature>
<feature type="strand" evidence="38">
    <location>
        <begin position="3193"/>
        <end position="3195"/>
    </location>
</feature>
<feature type="strand" evidence="38">
    <location>
        <begin position="3202"/>
        <end position="3206"/>
    </location>
</feature>
<feature type="strand" evidence="38">
    <location>
        <begin position="3208"/>
        <end position="3214"/>
    </location>
</feature>
<feature type="strand" evidence="38">
    <location>
        <begin position="3221"/>
        <end position="3227"/>
    </location>
</feature>
<feature type="strand" evidence="38">
    <location>
        <begin position="3231"/>
        <end position="3237"/>
    </location>
</feature>
<feature type="turn" evidence="38">
    <location>
        <begin position="3238"/>
        <end position="3241"/>
    </location>
</feature>
<feature type="strand" evidence="38">
    <location>
        <begin position="3242"/>
        <end position="3247"/>
    </location>
</feature>
<feature type="turn" evidence="38">
    <location>
        <begin position="3248"/>
        <end position="3251"/>
    </location>
</feature>
<feature type="strand" evidence="38">
    <location>
        <begin position="3252"/>
        <end position="3257"/>
    </location>
</feature>
<feature type="strand" evidence="38">
    <location>
        <begin position="3263"/>
        <end position="3267"/>
    </location>
</feature>
<feature type="strand" evidence="38">
    <location>
        <begin position="3272"/>
        <end position="3280"/>
    </location>
</feature>
<feature type="turn" evidence="38">
    <location>
        <begin position="3281"/>
        <end position="3284"/>
    </location>
</feature>
<feature type="strand" evidence="38">
    <location>
        <begin position="3285"/>
        <end position="3290"/>
    </location>
</feature>
<feature type="turn" evidence="38">
    <location>
        <begin position="3291"/>
        <end position="3294"/>
    </location>
</feature>
<feature type="strand" evidence="38">
    <location>
        <begin position="3295"/>
        <end position="3300"/>
    </location>
</feature>
<feature type="strand" evidence="38">
    <location>
        <begin position="3306"/>
        <end position="3310"/>
    </location>
</feature>
<feature type="strand" evidence="38">
    <location>
        <begin position="3314"/>
        <end position="3320"/>
    </location>
</feature>
<feature type="strand" evidence="38">
    <location>
        <begin position="3322"/>
        <end position="3331"/>
    </location>
</feature>
<feature type="turn" evidence="38">
    <location>
        <begin position="3332"/>
        <end position="3335"/>
    </location>
</feature>
<feature type="strand" evidence="38">
    <location>
        <begin position="3336"/>
        <end position="3341"/>
    </location>
</feature>
<feature type="strand" evidence="38">
    <location>
        <begin position="3343"/>
        <end position="3345"/>
    </location>
</feature>
<feature type="strand" evidence="38">
    <location>
        <begin position="3347"/>
        <end position="3352"/>
    </location>
</feature>
<feature type="strand" evidence="38">
    <location>
        <begin position="3359"/>
        <end position="3362"/>
    </location>
</feature>
<feature type="strand" evidence="38">
    <location>
        <begin position="3371"/>
        <end position="3375"/>
    </location>
</feature>
<feature type="turn" evidence="38">
    <location>
        <begin position="3376"/>
        <end position="3379"/>
    </location>
</feature>
<feature type="strand" evidence="38">
    <location>
        <begin position="3380"/>
        <end position="3385"/>
    </location>
</feature>
<feature type="turn" evidence="38">
    <location>
        <begin position="3386"/>
        <end position="3389"/>
    </location>
</feature>
<feature type="strand" evidence="38">
    <location>
        <begin position="3390"/>
        <end position="3395"/>
    </location>
</feature>
<feature type="strand" evidence="38">
    <location>
        <begin position="3401"/>
        <end position="3407"/>
    </location>
</feature>
<feature type="strand" evidence="38">
    <location>
        <begin position="3412"/>
        <end position="3418"/>
    </location>
</feature>
<feature type="strand" evidence="38">
    <location>
        <begin position="3421"/>
        <end position="3426"/>
    </location>
</feature>
<feature type="turn" evidence="38">
    <location>
        <begin position="3427"/>
        <end position="3430"/>
    </location>
</feature>
<feature type="strand" evidence="38">
    <location>
        <begin position="3431"/>
        <end position="3436"/>
    </location>
</feature>
<feature type="turn" evidence="38">
    <location>
        <begin position="3437"/>
        <end position="3439"/>
    </location>
</feature>
<feature type="strand" evidence="38">
    <location>
        <begin position="3444"/>
        <end position="3448"/>
    </location>
</feature>
<feature type="strand" evidence="38">
    <location>
        <begin position="3456"/>
        <end position="3460"/>
    </location>
</feature>
<feature type="helix" evidence="38">
    <location>
        <begin position="3461"/>
        <end position="3463"/>
    </location>
</feature>
<feature type="turn" evidence="38">
    <location>
        <begin position="3470"/>
        <end position="3472"/>
    </location>
</feature>
<feature type="helix" evidence="38">
    <location>
        <begin position="3473"/>
        <end position="3477"/>
    </location>
</feature>
<feature type="strand" evidence="38">
    <location>
        <begin position="3479"/>
        <end position="3484"/>
    </location>
</feature>
<feature type="strand" evidence="38">
    <location>
        <begin position="3488"/>
        <end position="3494"/>
    </location>
</feature>
<feature type="strand" evidence="38">
    <location>
        <begin position="3499"/>
        <end position="3504"/>
    </location>
</feature>
<feature type="strand" evidence="38">
    <location>
        <begin position="3507"/>
        <end position="3512"/>
    </location>
</feature>
<feature type="strand" evidence="38">
    <location>
        <begin position="3518"/>
        <end position="3520"/>
    </location>
</feature>
<feature type="helix" evidence="39">
    <location>
        <begin position="3522"/>
        <end position="3524"/>
    </location>
</feature>
<feature type="strand" evidence="38">
    <location>
        <begin position="3527"/>
        <end position="3529"/>
    </location>
</feature>
<feature type="helix" evidence="38">
    <location>
        <begin position="3530"/>
        <end position="3532"/>
    </location>
</feature>
<feature type="strand" evidence="38">
    <location>
        <begin position="3535"/>
        <end position="3537"/>
    </location>
</feature>
<feature type="strand" evidence="39">
    <location>
        <begin position="3540"/>
        <end position="3542"/>
    </location>
</feature>
<feature type="strand" evidence="38">
    <location>
        <begin position="3560"/>
        <end position="3562"/>
    </location>
</feature>
<feature type="turn" evidence="38">
    <location>
        <begin position="3563"/>
        <end position="3565"/>
    </location>
</feature>
<feature type="strand" evidence="38">
    <location>
        <begin position="3566"/>
        <end position="3568"/>
    </location>
</feature>
<feature type="helix" evidence="38">
    <location>
        <begin position="3570"/>
        <end position="3572"/>
    </location>
</feature>
<feature type="strand" evidence="38">
    <location>
        <begin position="3575"/>
        <end position="3577"/>
    </location>
</feature>
<feature type="helix" evidence="38">
    <location>
        <begin position="3584"/>
        <end position="3586"/>
    </location>
</feature>
<feature type="helix" evidence="38">
    <location>
        <begin position="3588"/>
        <end position="3591"/>
    </location>
</feature>
<feature type="strand" evidence="38">
    <location>
        <begin position="3600"/>
        <end position="3602"/>
    </location>
</feature>
<feature type="turn" evidence="39">
    <location>
        <begin position="3604"/>
        <end position="3606"/>
    </location>
</feature>
<feature type="strand" evidence="38">
    <location>
        <begin position="3608"/>
        <end position="3610"/>
    </location>
</feature>
<feature type="helix" evidence="38">
    <location>
        <begin position="3611"/>
        <end position="3613"/>
    </location>
</feature>
<feature type="strand" evidence="38">
    <location>
        <begin position="3616"/>
        <end position="3618"/>
    </location>
</feature>
<feature type="helix" evidence="39">
    <location>
        <begin position="3624"/>
        <end position="3626"/>
    </location>
</feature>
<feature type="helix" evidence="38">
    <location>
        <begin position="3629"/>
        <end position="3634"/>
    </location>
</feature>
<feature type="strand" evidence="38">
    <location>
        <begin position="3641"/>
        <end position="3643"/>
    </location>
</feature>
<feature type="turn" evidence="39">
    <location>
        <begin position="3645"/>
        <end position="3647"/>
    </location>
</feature>
<feature type="strand" evidence="38">
    <location>
        <begin position="3649"/>
        <end position="3651"/>
    </location>
</feature>
<feature type="helix" evidence="38">
    <location>
        <begin position="3652"/>
        <end position="3654"/>
    </location>
</feature>
<feature type="strand" evidence="38">
    <location>
        <begin position="3655"/>
        <end position="3659"/>
    </location>
</feature>
<feature type="helix" evidence="38">
    <location>
        <begin position="3665"/>
        <end position="3667"/>
    </location>
</feature>
<feature type="helix" evidence="38">
    <location>
        <begin position="3670"/>
        <end position="3673"/>
    </location>
</feature>
<feature type="helix" evidence="38">
    <location>
        <begin position="3676"/>
        <end position="3678"/>
    </location>
</feature>
<feature type="turn" evidence="38">
    <location>
        <begin position="3682"/>
        <end position="3684"/>
    </location>
</feature>
<feature type="strand" evidence="38">
    <location>
        <begin position="3685"/>
        <end position="3687"/>
    </location>
</feature>
<feature type="strand" evidence="39">
    <location>
        <begin position="3689"/>
        <end position="3692"/>
    </location>
</feature>
<feature type="strand" evidence="38">
    <location>
        <begin position="3694"/>
        <end position="3696"/>
    </location>
</feature>
<feature type="helix" evidence="38">
    <location>
        <begin position="3697"/>
        <end position="3699"/>
    </location>
</feature>
<feature type="strand" evidence="38">
    <location>
        <begin position="3702"/>
        <end position="3704"/>
    </location>
</feature>
<feature type="helix" evidence="38">
    <location>
        <begin position="3711"/>
        <end position="3713"/>
    </location>
</feature>
<feature type="helix" evidence="38">
    <location>
        <begin position="3716"/>
        <end position="3718"/>
    </location>
</feature>
<feature type="turn" evidence="38">
    <location>
        <begin position="3723"/>
        <end position="3725"/>
    </location>
</feature>
<feature type="strand" evidence="38">
    <location>
        <begin position="3726"/>
        <end position="3729"/>
    </location>
</feature>
<feature type="turn" evidence="38">
    <location>
        <begin position="3730"/>
        <end position="3732"/>
    </location>
</feature>
<feature type="strand" evidence="38">
    <location>
        <begin position="3733"/>
        <end position="3736"/>
    </location>
</feature>
<feature type="helix" evidence="39">
    <location>
        <begin position="3737"/>
        <end position="3741"/>
    </location>
</feature>
<feature type="strand" evidence="38">
    <location>
        <begin position="3742"/>
        <end position="3744"/>
    </location>
</feature>
<feature type="strand" evidence="39">
    <location>
        <begin position="3747"/>
        <end position="3750"/>
    </location>
</feature>
<feature type="turn" evidence="38">
    <location>
        <begin position="3751"/>
        <end position="3755"/>
    </location>
</feature>
<feature type="strand" evidence="38">
    <location>
        <begin position="3765"/>
        <end position="3768"/>
    </location>
</feature>
<feature type="turn" evidence="38">
    <location>
        <begin position="3769"/>
        <end position="3771"/>
    </location>
</feature>
<feature type="strand" evidence="38">
    <location>
        <begin position="3772"/>
        <end position="3775"/>
    </location>
</feature>
<feature type="helix" evidence="38">
    <location>
        <begin position="3776"/>
        <end position="3778"/>
    </location>
</feature>
<feature type="strand" evidence="38">
    <location>
        <begin position="3781"/>
        <end position="3783"/>
    </location>
</feature>
<feature type="helix" evidence="38">
    <location>
        <begin position="3790"/>
        <end position="3792"/>
    </location>
</feature>
<feature type="helix" evidence="38">
    <location>
        <begin position="3795"/>
        <end position="3797"/>
    </location>
</feature>
<feature type="strand" evidence="38">
    <location>
        <begin position="3804"/>
        <end position="3806"/>
    </location>
</feature>
<feature type="turn" evidence="39">
    <location>
        <begin position="3808"/>
        <end position="3810"/>
    </location>
</feature>
<feature type="strand" evidence="38">
    <location>
        <begin position="3812"/>
        <end position="3814"/>
    </location>
</feature>
<feature type="helix" evidence="38">
    <location>
        <begin position="3815"/>
        <end position="3817"/>
    </location>
</feature>
<feature type="strand" evidence="38">
    <location>
        <begin position="3820"/>
        <end position="3822"/>
    </location>
</feature>
<feature type="turn" evidence="38">
    <location>
        <begin position="3829"/>
        <end position="3831"/>
    </location>
</feature>
<feature type="strand" evidence="38">
    <location>
        <begin position="3832"/>
        <end position="3834"/>
    </location>
</feature>
<feature type="strand" evidence="38">
    <location>
        <begin position="3848"/>
        <end position="3851"/>
    </location>
</feature>
<feature type="turn" evidence="38">
    <location>
        <begin position="3852"/>
        <end position="3854"/>
    </location>
</feature>
<feature type="strand" evidence="38">
    <location>
        <begin position="3855"/>
        <end position="3857"/>
    </location>
</feature>
<feature type="helix" evidence="38">
    <location>
        <begin position="3859"/>
        <end position="3861"/>
    </location>
</feature>
<feature type="strand" evidence="38">
    <location>
        <begin position="3864"/>
        <end position="3866"/>
    </location>
</feature>
<feature type="strand" evidence="38">
    <location>
        <begin position="3868"/>
        <end position="3872"/>
    </location>
</feature>
<feature type="helix" evidence="39">
    <location>
        <begin position="3873"/>
        <end position="3875"/>
    </location>
</feature>
<feature type="turn" evidence="38">
    <location>
        <begin position="3877"/>
        <end position="3879"/>
    </location>
</feature>
<feature type="turn" evidence="39">
    <location>
        <begin position="3887"/>
        <end position="3889"/>
    </location>
</feature>
<feature type="strand" evidence="39">
    <location>
        <begin position="3890"/>
        <end position="3892"/>
    </location>
</feature>
<feature type="strand" evidence="39">
    <location>
        <begin position="3898"/>
        <end position="3900"/>
    </location>
</feature>
<feature type="helix" evidence="39">
    <location>
        <begin position="3902"/>
        <end position="3905"/>
    </location>
</feature>
<feature type="strand" evidence="39">
    <location>
        <begin position="3906"/>
        <end position="3908"/>
    </location>
</feature>
<feature type="helix" evidence="39">
    <location>
        <begin position="3919"/>
        <end position="3922"/>
    </location>
</feature>
<feature type="strand" evidence="39">
    <location>
        <begin position="3934"/>
        <end position="3937"/>
    </location>
</feature>
<feature type="turn" evidence="39">
    <location>
        <begin position="3938"/>
        <end position="3940"/>
    </location>
</feature>
<feature type="strand" evidence="39">
    <location>
        <begin position="3941"/>
        <end position="3944"/>
    </location>
</feature>
<feature type="helix" evidence="39">
    <location>
        <begin position="3946"/>
        <end position="3949"/>
    </location>
</feature>
<feature type="strand" evidence="39">
    <location>
        <begin position="3950"/>
        <end position="3952"/>
    </location>
</feature>
<feature type="strand" evidence="39">
    <location>
        <begin position="3955"/>
        <end position="3958"/>
    </location>
</feature>
<feature type="turn" evidence="39">
    <location>
        <begin position="3959"/>
        <end position="3963"/>
    </location>
</feature>
<feature type="helix" evidence="39">
    <location>
        <begin position="3972"/>
        <end position="3974"/>
    </location>
</feature>
<feature type="strand" evidence="39">
    <location>
        <begin position="3977"/>
        <end position="3979"/>
    </location>
</feature>
<feature type="strand" evidence="39">
    <location>
        <begin position="3981"/>
        <end position="3983"/>
    </location>
</feature>
<feature type="strand" evidence="39">
    <location>
        <begin position="3989"/>
        <end position="3991"/>
    </location>
</feature>
<feature type="strand" evidence="38">
    <location>
        <begin position="3997"/>
        <end position="3999"/>
    </location>
</feature>
<feature type="strand" evidence="38">
    <location>
        <begin position="4006"/>
        <end position="4009"/>
    </location>
</feature>
<feature type="helix" evidence="38">
    <location>
        <begin position="4012"/>
        <end position="4014"/>
    </location>
</feature>
<feature type="strand" evidence="38">
    <location>
        <begin position="4018"/>
        <end position="4026"/>
    </location>
</feature>
<feature type="strand" evidence="38">
    <location>
        <begin position="4029"/>
        <end position="4033"/>
    </location>
</feature>
<feature type="strand" evidence="38">
    <location>
        <begin position="4038"/>
        <end position="4043"/>
    </location>
</feature>
<feature type="strand" evidence="38">
    <location>
        <begin position="4046"/>
        <end position="4051"/>
    </location>
</feature>
<feature type="strand" evidence="38">
    <location>
        <begin position="4057"/>
        <end position="4061"/>
    </location>
</feature>
<feature type="strand" evidence="38">
    <location>
        <begin position="4066"/>
        <end position="4070"/>
    </location>
</feature>
<feature type="turn" evidence="38">
    <location>
        <begin position="4071"/>
        <end position="4074"/>
    </location>
</feature>
<feature type="strand" evidence="38">
    <location>
        <begin position="4075"/>
        <end position="4080"/>
    </location>
</feature>
<feature type="strand" evidence="38">
    <location>
        <begin position="4086"/>
        <end position="4093"/>
    </location>
</feature>
<feature type="strand" evidence="38">
    <location>
        <begin position="4095"/>
        <end position="4107"/>
    </location>
</feature>
<feature type="strand" evidence="38">
    <location>
        <begin position="4111"/>
        <end position="4113"/>
    </location>
</feature>
<feature type="strand" evidence="38">
    <location>
        <begin position="4116"/>
        <end position="4126"/>
    </location>
</feature>
<feature type="strand" evidence="38">
    <location>
        <begin position="4148"/>
        <end position="4152"/>
    </location>
</feature>
<feature type="turn" evidence="38">
    <location>
        <begin position="4153"/>
        <end position="4156"/>
    </location>
</feature>
<feature type="strand" evidence="38">
    <location>
        <begin position="4157"/>
        <end position="4162"/>
    </location>
</feature>
<feature type="turn" evidence="38">
    <location>
        <begin position="4163"/>
        <end position="4166"/>
    </location>
</feature>
<feature type="strand" evidence="38">
    <location>
        <begin position="4167"/>
        <end position="4172"/>
    </location>
</feature>
<feature type="strand" evidence="38">
    <location>
        <begin position="4178"/>
        <end position="4182"/>
    </location>
</feature>
<feature type="strand" evidence="38">
    <location>
        <begin position="4187"/>
        <end position="4195"/>
    </location>
</feature>
<feature type="turn" evidence="38">
    <location>
        <begin position="4196"/>
        <end position="4199"/>
    </location>
</feature>
<feature type="strand" evidence="38">
    <location>
        <begin position="4200"/>
        <end position="4205"/>
    </location>
</feature>
<feature type="strand" evidence="38">
    <location>
        <begin position="4207"/>
        <end position="4209"/>
    </location>
</feature>
<feature type="strand" evidence="38">
    <location>
        <begin position="4211"/>
        <end position="4216"/>
    </location>
</feature>
<feature type="strand" evidence="38">
    <location>
        <begin position="4222"/>
        <end position="4226"/>
    </location>
</feature>
<feature type="strand" evidence="38">
    <location>
        <begin position="4233"/>
        <end position="4250"/>
    </location>
</feature>
<feature type="turn" evidence="38">
    <location>
        <begin position="4251"/>
        <end position="4254"/>
    </location>
</feature>
<feature type="strand" evidence="38">
    <location>
        <begin position="4255"/>
        <end position="4260"/>
    </location>
</feature>
<feature type="strand" evidence="38">
    <location>
        <begin position="4267"/>
        <end position="4272"/>
    </location>
</feature>
<feature type="strand" evidence="38">
    <location>
        <begin position="4275"/>
        <end position="4282"/>
    </location>
</feature>
<feature type="strand" evidence="38">
    <location>
        <begin position="4285"/>
        <end position="4290"/>
    </location>
</feature>
<feature type="turn" evidence="38">
    <location>
        <begin position="4291"/>
        <end position="4294"/>
    </location>
</feature>
<feature type="strand" evidence="38">
    <location>
        <begin position="4295"/>
        <end position="4300"/>
    </location>
</feature>
<feature type="strand" evidence="38">
    <location>
        <begin position="4308"/>
        <end position="4312"/>
    </location>
</feature>
<feature type="strand" evidence="38">
    <location>
        <begin position="4321"/>
        <end position="4323"/>
    </location>
</feature>
<feature type="turn" evidence="39">
    <location>
        <begin position="4335"/>
        <end position="4338"/>
    </location>
</feature>
<feature type="strand" evidence="38">
    <location>
        <begin position="4341"/>
        <end position="4347"/>
    </location>
</feature>
<feature type="strand" evidence="38">
    <location>
        <begin position="4350"/>
        <end position="4354"/>
    </location>
</feature>
<feature type="strand" evidence="38">
    <location>
        <begin position="4369"/>
        <end position="4371"/>
    </location>
</feature>
<feature type="strand" evidence="38">
    <location>
        <begin position="4390"/>
        <end position="4393"/>
    </location>
</feature>
<feature type="strand" evidence="38">
    <location>
        <begin position="4399"/>
        <end position="4402"/>
    </location>
</feature>
<reference key="1">
    <citation type="journal article" date="2009" name="PLoS Biol.">
        <title>Lineage-specific biology revealed by a finished genome assembly of the mouse.</title>
        <authorList>
            <person name="Church D.M."/>
            <person name="Goodstadt L."/>
            <person name="Hillier L.W."/>
            <person name="Zody M.C."/>
            <person name="Goldstein S."/>
            <person name="She X."/>
            <person name="Bult C.J."/>
            <person name="Agarwala R."/>
            <person name="Cherry J.L."/>
            <person name="DiCuccio M."/>
            <person name="Hlavina W."/>
            <person name="Kapustin Y."/>
            <person name="Meric P."/>
            <person name="Maglott D."/>
            <person name="Birtle Z."/>
            <person name="Marques A.C."/>
            <person name="Graves T."/>
            <person name="Zhou S."/>
            <person name="Teague B."/>
            <person name="Potamousis K."/>
            <person name="Churas C."/>
            <person name="Place M."/>
            <person name="Herschleb J."/>
            <person name="Runnheim R."/>
            <person name="Forrest D."/>
            <person name="Amos-Landgraf J."/>
            <person name="Schwartz D.C."/>
            <person name="Cheng Z."/>
            <person name="Lindblad-Toh K."/>
            <person name="Eichler E.E."/>
            <person name="Ponting C.P."/>
        </authorList>
    </citation>
    <scope>NUCLEOTIDE SEQUENCE [LARGE SCALE GENOMIC DNA]</scope>
    <source>
        <strain>C57BL/6J</strain>
    </source>
</reference>
<reference key="2">
    <citation type="journal article" date="2005" name="Science">
        <title>The transcriptional landscape of the mammalian genome.</title>
        <authorList>
            <person name="Carninci P."/>
            <person name="Kasukawa T."/>
            <person name="Katayama S."/>
            <person name="Gough J."/>
            <person name="Frith M.C."/>
            <person name="Maeda N."/>
            <person name="Oyama R."/>
            <person name="Ravasi T."/>
            <person name="Lenhard B."/>
            <person name="Wells C."/>
            <person name="Kodzius R."/>
            <person name="Shimokawa K."/>
            <person name="Bajic V.B."/>
            <person name="Brenner S.E."/>
            <person name="Batalov S."/>
            <person name="Forrest A.R."/>
            <person name="Zavolan M."/>
            <person name="Davis M.J."/>
            <person name="Wilming L.G."/>
            <person name="Aidinis V."/>
            <person name="Allen J.E."/>
            <person name="Ambesi-Impiombato A."/>
            <person name="Apweiler R."/>
            <person name="Aturaliya R.N."/>
            <person name="Bailey T.L."/>
            <person name="Bansal M."/>
            <person name="Baxter L."/>
            <person name="Beisel K.W."/>
            <person name="Bersano T."/>
            <person name="Bono H."/>
            <person name="Chalk A.M."/>
            <person name="Chiu K.P."/>
            <person name="Choudhary V."/>
            <person name="Christoffels A."/>
            <person name="Clutterbuck D.R."/>
            <person name="Crowe M.L."/>
            <person name="Dalla E."/>
            <person name="Dalrymple B.P."/>
            <person name="de Bono B."/>
            <person name="Della Gatta G."/>
            <person name="di Bernardo D."/>
            <person name="Down T."/>
            <person name="Engstrom P."/>
            <person name="Fagiolini M."/>
            <person name="Faulkner G."/>
            <person name="Fletcher C.F."/>
            <person name="Fukushima T."/>
            <person name="Furuno M."/>
            <person name="Futaki S."/>
            <person name="Gariboldi M."/>
            <person name="Georgii-Hemming P."/>
            <person name="Gingeras T.R."/>
            <person name="Gojobori T."/>
            <person name="Green R.E."/>
            <person name="Gustincich S."/>
            <person name="Harbers M."/>
            <person name="Hayashi Y."/>
            <person name="Hensch T.K."/>
            <person name="Hirokawa N."/>
            <person name="Hill D."/>
            <person name="Huminiecki L."/>
            <person name="Iacono M."/>
            <person name="Ikeo K."/>
            <person name="Iwama A."/>
            <person name="Ishikawa T."/>
            <person name="Jakt M."/>
            <person name="Kanapin A."/>
            <person name="Katoh M."/>
            <person name="Kawasawa Y."/>
            <person name="Kelso J."/>
            <person name="Kitamura H."/>
            <person name="Kitano H."/>
            <person name="Kollias G."/>
            <person name="Krishnan S.P."/>
            <person name="Kruger A."/>
            <person name="Kummerfeld S.K."/>
            <person name="Kurochkin I.V."/>
            <person name="Lareau L.F."/>
            <person name="Lazarevic D."/>
            <person name="Lipovich L."/>
            <person name="Liu J."/>
            <person name="Liuni S."/>
            <person name="McWilliam S."/>
            <person name="Madan Babu M."/>
            <person name="Madera M."/>
            <person name="Marchionni L."/>
            <person name="Matsuda H."/>
            <person name="Matsuzawa S."/>
            <person name="Miki H."/>
            <person name="Mignone F."/>
            <person name="Miyake S."/>
            <person name="Morris K."/>
            <person name="Mottagui-Tabar S."/>
            <person name="Mulder N."/>
            <person name="Nakano N."/>
            <person name="Nakauchi H."/>
            <person name="Ng P."/>
            <person name="Nilsson R."/>
            <person name="Nishiguchi S."/>
            <person name="Nishikawa S."/>
            <person name="Nori F."/>
            <person name="Ohara O."/>
            <person name="Okazaki Y."/>
            <person name="Orlando V."/>
            <person name="Pang K.C."/>
            <person name="Pavan W.J."/>
            <person name="Pavesi G."/>
            <person name="Pesole G."/>
            <person name="Petrovsky N."/>
            <person name="Piazza S."/>
            <person name="Reed J."/>
            <person name="Reid J.F."/>
            <person name="Ring B.Z."/>
            <person name="Ringwald M."/>
            <person name="Rost B."/>
            <person name="Ruan Y."/>
            <person name="Salzberg S.L."/>
            <person name="Sandelin A."/>
            <person name="Schneider C."/>
            <person name="Schoenbach C."/>
            <person name="Sekiguchi K."/>
            <person name="Semple C.A."/>
            <person name="Seno S."/>
            <person name="Sessa L."/>
            <person name="Sheng Y."/>
            <person name="Shibata Y."/>
            <person name="Shimada H."/>
            <person name="Shimada K."/>
            <person name="Silva D."/>
            <person name="Sinclair B."/>
            <person name="Sperling S."/>
            <person name="Stupka E."/>
            <person name="Sugiura K."/>
            <person name="Sultana R."/>
            <person name="Takenaka Y."/>
            <person name="Taki K."/>
            <person name="Tammoja K."/>
            <person name="Tan S.L."/>
            <person name="Tang S."/>
            <person name="Taylor M.S."/>
            <person name="Tegner J."/>
            <person name="Teichmann S.A."/>
            <person name="Ueda H.R."/>
            <person name="van Nimwegen E."/>
            <person name="Verardo R."/>
            <person name="Wei C.L."/>
            <person name="Yagi K."/>
            <person name="Yamanishi H."/>
            <person name="Zabarovsky E."/>
            <person name="Zhu S."/>
            <person name="Zimmer A."/>
            <person name="Hide W."/>
            <person name="Bult C."/>
            <person name="Grimmond S.M."/>
            <person name="Teasdale R.D."/>
            <person name="Liu E.T."/>
            <person name="Brusic V."/>
            <person name="Quackenbush J."/>
            <person name="Wahlestedt C."/>
            <person name="Mattick J.S."/>
            <person name="Hume D.A."/>
            <person name="Kai C."/>
            <person name="Sasaki D."/>
            <person name="Tomaru Y."/>
            <person name="Fukuda S."/>
            <person name="Kanamori-Katayama M."/>
            <person name="Suzuki M."/>
            <person name="Aoki J."/>
            <person name="Arakawa T."/>
            <person name="Iida J."/>
            <person name="Imamura K."/>
            <person name="Itoh M."/>
            <person name="Kato T."/>
            <person name="Kawaji H."/>
            <person name="Kawagashira N."/>
            <person name="Kawashima T."/>
            <person name="Kojima M."/>
            <person name="Kondo S."/>
            <person name="Konno H."/>
            <person name="Nakano K."/>
            <person name="Ninomiya N."/>
            <person name="Nishio T."/>
            <person name="Okada M."/>
            <person name="Plessy C."/>
            <person name="Shibata K."/>
            <person name="Shiraki T."/>
            <person name="Suzuki S."/>
            <person name="Tagami M."/>
            <person name="Waki K."/>
            <person name="Watahiki A."/>
            <person name="Okamura-Oho Y."/>
            <person name="Suzuki H."/>
            <person name="Kawai J."/>
            <person name="Hayashizaki Y."/>
        </authorList>
    </citation>
    <scope>NUCLEOTIDE SEQUENCE [LARGE SCALE MRNA] OF 4054-4660</scope>
    <source>
        <strain>C57BL/6J</strain>
    </source>
</reference>
<reference key="3">
    <citation type="submission" date="1996-10" db="EMBL/GenBank/DDBJ databases">
        <title>Tubular modulation of clusterin in lupus-like glomerulonephritis.</title>
        <authorList>
            <person name="Moll S."/>
            <person name="Menoud P.A."/>
            <person name="Izui S."/>
        </authorList>
    </citation>
    <scope>NUCLEOTIDE SEQUENCE [MRNA] OF 4198-4320</scope>
    <source>
        <strain>NMRI</strain>
        <tissue>Kidney</tissue>
    </source>
</reference>
<reference key="4">
    <citation type="journal article" date="2000" name="J. Biol. Chem.">
        <title>Megalin acts in concert with cubilin to mediate endocytosis of high density lipoproteins.</title>
        <authorList>
            <person name="Hammad S.M."/>
            <person name="Barth J.L."/>
            <person name="Knaak C."/>
            <person name="Argraves W.S."/>
        </authorList>
    </citation>
    <scope>NUCLEOTIDE SEQUENCE [MRNA] OF 4465-4660</scope>
    <scope>FUNCTION</scope>
</reference>
<reference key="5">
    <citation type="journal article" date="1999" name="Cell">
        <title>An endocytic pathway essential for renal uptake and activation of the steroid 25-(OH) vitamin D3.</title>
        <authorList>
            <person name="Nykjaer A."/>
            <person name="Dragun D."/>
            <person name="Walther D."/>
            <person name="Vorum H."/>
            <person name="Jacobsen C."/>
            <person name="Herz J."/>
            <person name="Melsen F."/>
            <person name="Christensen E.I."/>
            <person name="Willnow T.E."/>
        </authorList>
    </citation>
    <scope>FUNCTION</scope>
    <scope>INTERACTION WITH GC</scope>
    <scope>DISRUPTION PHENOTYPE</scope>
</reference>
<reference key="6">
    <citation type="journal article" date="2000" name="Biochem. Biophys. Res. Commun.">
        <title>LDL receptor-related protein as a component of the midkine receptor.</title>
        <authorList>
            <person name="Muramatsu H."/>
            <person name="Zou K."/>
            <person name="Sakaguchi N."/>
            <person name="Ikematsu S."/>
            <person name="Sakuma S."/>
            <person name="Muramatsu T."/>
        </authorList>
    </citation>
    <scope>INTERACTION WITH MDK</scope>
</reference>
<reference key="7">
    <citation type="journal article" date="2001" name="Traffic">
        <title>Disabled-2 colocalizes with the LDLR in clathrin-coated pits and interacts with AP-2.</title>
        <authorList>
            <person name="Morris S.M."/>
            <person name="Cooper J.A."/>
        </authorList>
    </citation>
    <scope>INTERACTION WITH DAB2</scope>
</reference>
<reference key="8">
    <citation type="journal article" date="2002" name="J. Biol. Chem.">
        <title>Megalin functions as an endocytic sonic hedgehog receptor.</title>
        <authorList>
            <person name="McCarthy R.A."/>
            <person name="Barth J.L."/>
            <person name="Chintalapudi M.R."/>
            <person name="Knaak C."/>
            <person name="Argraves W.S."/>
        </authorList>
    </citation>
    <scope>INTERACTION WITH SHH</scope>
</reference>
<reference key="9">
    <citation type="journal article" date="2003" name="Am. J. Physiol.">
        <title>Renal uptake of myoglobin is mediated by the endocytic receptors megalin and cubilin.</title>
        <authorList>
            <person name="Gburek J."/>
            <person name="Birn H."/>
            <person name="Verroust P.J."/>
            <person name="Goj B."/>
            <person name="Jacobsen C."/>
            <person name="Moestrup S.K."/>
            <person name="Willnow T.E."/>
            <person name="Christensen E.I."/>
        </authorList>
    </citation>
    <scope>FUNCTION</scope>
    <scope>DISRUPTION PHENOTYPE</scope>
</reference>
<reference key="10">
    <citation type="journal article" date="2005" name="Am. J. Physiol.">
        <title>Megalin binds and internalizes angiotensin II.</title>
        <authorList>
            <person name="Gonzalez-Villalobos R."/>
            <person name="Klassen R.B."/>
            <person name="Allen P.L."/>
            <person name="Navar L.G."/>
            <person name="Hammond T.G."/>
        </authorList>
    </citation>
    <scope>INTERACTION WITH ANGIOTENSIN-2</scope>
</reference>
<reference key="11">
    <citation type="journal article" date="2005" name="Cell">
        <title>Role of endocytosis in cellular uptake of sex steroids.</title>
        <authorList>
            <person name="Hammes A."/>
            <person name="Andreassen T.K."/>
            <person name="Spoelgen R."/>
            <person name="Raila J."/>
            <person name="Hubner N."/>
            <person name="Schulz H."/>
            <person name="Metzger J."/>
            <person name="Schweigert F.J."/>
            <person name="Luppa P.B."/>
            <person name="Nykjaer A."/>
            <person name="Willnow T.E."/>
        </authorList>
    </citation>
    <scope>FUNCTION</scope>
    <scope>SUBCELLULAR LOCATION</scope>
    <scope>TISSUE SPECIFICITY</scope>
    <scope>DEVELOPMENTAL STAGE</scope>
    <scope>DISRUPTION PHENOTYPE</scope>
</reference>
<reference key="12">
    <citation type="journal article" date="2005" name="Development">
        <title>LRP2/megalin is required for patterning of the ventral telencephalon.</title>
        <authorList>
            <person name="Spoelgen R."/>
            <person name="Hammes A."/>
            <person name="Anzenberger U."/>
            <person name="Zechner D."/>
            <person name="Andersen O.M."/>
            <person name="Jerchow B."/>
            <person name="Willnow T.E."/>
        </authorList>
    </citation>
    <scope>FUNCTION</scope>
    <scope>INTERACTION WITH BMP4</scope>
    <scope>DISRUPTION PHENOTYPE</scope>
</reference>
<reference key="13">
    <citation type="journal article" date="2006" name="Am. J. Physiol.">
        <title>Megalin binds and internalizes angiotensin-(1-7).</title>
        <authorList>
            <person name="Gonzalez-Villalobos R."/>
            <person name="Klassen R.B."/>
            <person name="Allen P.L."/>
            <person name="Johanson K."/>
            <person name="Baker C.B."/>
            <person name="Kobori H."/>
            <person name="Navar L.G."/>
            <person name="Hammond T.G."/>
        </authorList>
    </citation>
    <scope>INTERACTION WITH ANGIOTENSIN 1-7</scope>
</reference>
<reference key="14">
    <citation type="journal article" date="2006" name="Mol. Endocrinol.">
        <title>Megalin is a receptor for apolipoprotein M, and kidney-specific megalin-deficiency confers urinary excretion of apolipoprotein M.</title>
        <authorList>
            <person name="Faber K."/>
            <person name="Hvidberg V."/>
            <person name="Moestrup S.K."/>
            <person name="Dahlbaeck B."/>
            <person name="Nielsen L.B."/>
        </authorList>
    </citation>
    <scope>INTERACTION WITH APOM</scope>
    <scope>DISRUPTION PHENOTYPE</scope>
</reference>
<reference key="15">
    <citation type="journal article" date="2007" name="Biochem. Biophys. Res. Commun.">
        <title>Megalin-mediated endocytosis of cystatin C in proximal tubule cells.</title>
        <authorList>
            <person name="Kaseda R."/>
            <person name="Iino N."/>
            <person name="Hosojima M."/>
            <person name="Takeda T."/>
            <person name="Hosaka K."/>
            <person name="Kobayashi A."/>
            <person name="Yamamoto K."/>
            <person name="Suzuki A."/>
            <person name="Kasai A."/>
            <person name="Suzuki Y."/>
            <person name="Gejyo F."/>
            <person name="Saito A."/>
        </authorList>
    </citation>
    <scope>FUNCTION</scope>
    <scope>DISRUPTION PHENOTYPE</scope>
</reference>
<reference key="16">
    <citation type="journal article" date="2008" name="FASEB J.">
        <title>Estrogen and the inner ear: megalin knockout mice suffer progressive hearing loss.</title>
        <authorList>
            <person name="Koenig O."/>
            <person name="Ruettiger L."/>
            <person name="Mueller M."/>
            <person name="Zimmermann U."/>
            <person name="Erdmann B."/>
            <person name="Kalbacher H."/>
            <person name="Gross M."/>
            <person name="Knipper M."/>
        </authorList>
    </citation>
    <scope>FUNCTION</scope>
    <scope>TISSUE SPECIFICITY</scope>
    <scope>DISRUPTION PHENOTYPE</scope>
</reference>
<reference key="17">
    <citation type="journal article" date="2008" name="J. Biol. Chem.">
        <title>Megalin mediates selenoprotein P uptake by kidney proximal tubule epithelial cells.</title>
        <authorList>
            <person name="Olson G.E."/>
            <person name="Winfrey V.P."/>
            <person name="Hill K.E."/>
            <person name="Burk R.F."/>
        </authorList>
    </citation>
    <scope>FUNCTION</scope>
    <scope>INTERACTION WITH SEPP1</scope>
</reference>
<reference key="18">
    <citation type="journal article" date="2009" name="Nat. Biotechnol.">
        <title>Mass-spectrometric identification and relative quantification of N-linked cell surface glycoproteins.</title>
        <authorList>
            <person name="Wollscheid B."/>
            <person name="Bausch-Fluck D."/>
            <person name="Henderson C."/>
            <person name="O'Brien R."/>
            <person name="Bibel M."/>
            <person name="Schiess R."/>
            <person name="Aebersold R."/>
            <person name="Watts J.D."/>
        </authorList>
    </citation>
    <scope>GLYCOSYLATION [LARGE SCALE ANALYSIS] AT ASN-387</scope>
</reference>
<reference key="19">
    <citation type="journal article" date="2010" name="Cell">
        <title>A tissue-specific atlas of mouse protein phosphorylation and expression.</title>
        <authorList>
            <person name="Huttlin E.L."/>
            <person name="Jedrychowski M.P."/>
            <person name="Elias J.E."/>
            <person name="Goswami T."/>
            <person name="Rad R."/>
            <person name="Beausoleil S.A."/>
            <person name="Villen J."/>
            <person name="Haas W."/>
            <person name="Sowa M.E."/>
            <person name="Gygi S.P."/>
        </authorList>
    </citation>
    <scope>PHOSPHORYLATION [LARGE SCALE ANALYSIS] AT SER-4464; SER-4467; SER-4577; THR-4637 AND SER-4658</scope>
    <scope>IDENTIFICATION BY MASS SPECTROMETRY [LARGE SCALE ANALYSIS]</scope>
    <source>
        <tissue>Kidney</tissue>
        <tissue>Liver</tissue>
        <tissue>Lung</tissue>
    </source>
</reference>
<reference key="20">
    <citation type="journal article" date="2010" name="J. Cell Sci.">
        <title>LRP2 in ependymal cells regulates BMP signaling in the adult neurogenic niche.</title>
        <authorList>
            <person name="Gajera C.R."/>
            <person name="Emich H."/>
            <person name="Lioubinski O."/>
            <person name="Christ A."/>
            <person name="Beckervordersandforth-Bonk R."/>
            <person name="Yoshikawa K."/>
            <person name="Bachmann S."/>
            <person name="Christensen E.I."/>
            <person name="Goetz M."/>
            <person name="Kempermann G."/>
            <person name="Peterson A.S."/>
            <person name="Willnow T.E."/>
            <person name="Hammes A."/>
        </authorList>
    </citation>
    <scope>FUNCTION</scope>
    <scope>SUBCELLULAR LOCATION</scope>
    <scope>TISSUE SPECIFICITY</scope>
    <scope>DISRUPTION PHENOTYPE</scope>
</reference>
<reference key="21">
    <citation type="journal article" date="2010" name="Mol. Cell. Neurosci.">
        <title>Megalin interacts with APP and the intracellular adapter protein FE65 in neurons.</title>
        <authorList>
            <person name="Alvira-Botero X."/>
            <person name="Perez-Gonzalez R."/>
            <person name="Spuch C."/>
            <person name="Vargas T."/>
            <person name="Antequera D."/>
            <person name="Garzon M."/>
            <person name="Bermejo-Pareja F."/>
            <person name="Carro E."/>
        </authorList>
    </citation>
    <scope>FUNCTION</scope>
    <scope>INTERACTION WITH APPB1 AND APP</scope>
    <scope>SUBCELLULAR LOCATION</scope>
    <scope>TISSUE SPECIFICITY</scope>
</reference>
<reference key="22">
    <citation type="journal article" date="2012" name="Cell Metab.">
        <title>Peripheral cannabinoid-1 receptor inverse agonism reduces obesity by reversing leptin resistance.</title>
        <authorList>
            <person name="Tam J."/>
            <person name="Cinar R."/>
            <person name="Liu J."/>
            <person name="Godlewski G."/>
            <person name="Wesley D."/>
            <person name="Jourdan T."/>
            <person name="Szanda G."/>
            <person name="Mukhopadhyay B."/>
            <person name="Chedester L."/>
            <person name="Liow J.S."/>
            <person name="Innis R.B."/>
            <person name="Cheng K."/>
            <person name="Rice K.C."/>
            <person name="Deschamps J.R."/>
            <person name="Chorvat R.J."/>
            <person name="McElroy J.F."/>
            <person name="Kunos G."/>
        </authorList>
    </citation>
    <scope>FUNCTION</scope>
    <scope>INDUCTION BY CANNABINOIDS</scope>
</reference>
<reference key="23">
    <citation type="journal article" date="2012" name="Dev. Cell">
        <title>LRP2 is an auxiliary SHH receptor required to condition the forebrain ventral midline for inductive signals.</title>
        <authorList>
            <person name="Christ A."/>
            <person name="Christa A."/>
            <person name="Kur E."/>
            <person name="Lioubinski O."/>
            <person name="Bachmann S."/>
            <person name="Willnow T.E."/>
            <person name="Hammes A."/>
        </authorList>
    </citation>
    <scope>FUNCTION</scope>
    <scope>SUBCELLULAR LOCATION</scope>
    <scope>DEVELOPMENTAL STAGE</scope>
    <scope>DISRUPTION PHENOTYPE</scope>
</reference>
<reference key="24">
    <citation type="journal article" date="2012" name="Glia">
        <title>Megalin mediates the influence of sonic hedgehog on oligodendrocyte precursor cell migration and proliferation during development.</title>
        <authorList>
            <person name="Ortega M.C."/>
            <person name="Cases O."/>
            <person name="Merchan P."/>
            <person name="Kozyraki R."/>
            <person name="Clemente D."/>
            <person name="de Castro F."/>
        </authorList>
    </citation>
    <scope>FUNCTION</scope>
    <scope>SUBCELLULAR LOCATION</scope>
    <scope>TISSUE SPECIFICITY</scope>
    <scope>DEVELOPMENTAL STAGE</scope>
</reference>
<reference key="25">
    <citation type="journal article" date="2013" name="Am. J. Physiol.">
        <title>Renal uptake of the antiapoptotic protein survivin is mediated by megalin at the apical membrane of the proximal tubule.</title>
        <authorList>
            <person name="Jobst-Schwan T."/>
            <person name="Knaup K.X."/>
            <person name="Nielsen R."/>
            <person name="Hackenbeck T."/>
            <person name="Buettner-Herold M."/>
            <person name="Lechler P."/>
            <person name="Kroening S."/>
            <person name="Goppelt-Struebe M."/>
            <person name="Schloetzer-Schrehardt U."/>
            <person name="Fuernrohr B.G."/>
            <person name="Voll R.E."/>
            <person name="Amann K."/>
            <person name="Eckardt K.U."/>
            <person name="Christensen E.I."/>
            <person name="Wiesener M.S."/>
        </authorList>
    </citation>
    <scope>FUNCTION</scope>
    <scope>DISRUPTION PHENOTYPE</scope>
</reference>
<reference key="26">
    <citation type="journal article" date="2014" name="EMBO Rep.">
        <title>Clusterin/ApoJ enhances central leptin signaling through Lrp2-mediated endocytosis.</title>
        <authorList>
            <person name="Byun K."/>
            <person name="Gil S.Y."/>
            <person name="Namkoong C."/>
            <person name="Youn B.S."/>
            <person name="Huang H."/>
            <person name="Shin M.S."/>
            <person name="Kang G.M."/>
            <person name="Kim H.K."/>
            <person name="Lee B."/>
            <person name="Kim Y.B."/>
            <person name="Kim M.S."/>
        </authorList>
    </citation>
    <scope>FUNCTION</scope>
</reference>
<reference key="27">
    <citation type="journal article" date="2014" name="J. Cell Sci.">
        <title>LRP2 mediates folate uptake in the developing neural tube.</title>
        <authorList>
            <person name="Kur E."/>
            <person name="Mecklenburg N."/>
            <person name="Cabrera R.M."/>
            <person name="Willnow T.E."/>
            <person name="Hammes A."/>
        </authorList>
    </citation>
    <scope>FUNCTION</scope>
    <scope>DISRUPTION PHENOTYPE</scope>
</reference>
<reference key="28">
    <citation type="journal article" date="2015" name="Dev. Cell">
        <title>LRP2 acts as SHH clearance receptor to protect the retinal margin from mitogenic stimuli.</title>
        <authorList>
            <person name="Christ A."/>
            <person name="Christa A."/>
            <person name="Klippert J."/>
            <person name="Eule J.C."/>
            <person name="Bachmann S."/>
            <person name="Wallace V.A."/>
            <person name="Hammes A."/>
            <person name="Willnow T.E."/>
        </authorList>
    </citation>
    <scope>FUNCTION</scope>
    <scope>DISRUPTION PHENOTYPE</scope>
</reference>
<reference key="29">
    <citation type="journal article" date="2016" name="Dis. Model. Mech.">
        <title>Common arterial trunk and ventricular non-compaction in Lrp2 knockout mice indicate a crucial role of LRP2 in cardiac development.</title>
        <authorList>
            <person name="Baardman M.E."/>
            <person name="Zwier M.V."/>
            <person name="Wisse L.J."/>
            <person name="Gittenberger-de Groot A.C."/>
            <person name="Kerstjens-Frederikse W.S."/>
            <person name="Hofstra R.M."/>
            <person name="Jurdzinski A."/>
            <person name="Hierck B.P."/>
            <person name="Jongbloed M.R."/>
            <person name="Berger R.M."/>
            <person name="Ploesch T."/>
            <person name="DeRuiter M.C."/>
        </authorList>
    </citation>
    <scope>FUNCTION</scope>
    <scope>DISRUPTION PHENOTYPE</scope>
</reference>
<reference key="30">
    <citation type="journal article" date="2017" name="Biochim. Biophys. Acta">
        <title>N-glycoform-dependent interactions of megalin with its ligands.</title>
        <authorList>
            <person name="Hirano M."/>
            <person name="Totani K."/>
            <person name="Fukuda T."/>
            <person name="Gu J."/>
            <person name="Suzuki A."/>
        </authorList>
    </citation>
    <scope>GLYCOSYLATION</scope>
</reference>
<reference key="31">
    <citation type="journal article" date="2017" name="Sci. Rep.">
        <title>Cellular uptake of proMMP-2:TIMP-2 complexes by the endocytic receptor megalin/LRP-2.</title>
        <authorList>
            <person name="Johanns M."/>
            <person name="Lemoine P."/>
            <person name="Janssens V."/>
            <person name="Grieco G."/>
            <person name="Moestrup S.K."/>
            <person name="Nielsen R."/>
            <person name="Christensen E.I."/>
            <person name="Courtoy P.J."/>
            <person name="Emonard H."/>
            <person name="Marbaix E."/>
            <person name="Henriet P."/>
        </authorList>
    </citation>
    <scope>FUNCTION</scope>
    <scope>DISRUPTION PHENOTYPE</scope>
</reference>
<protein>
    <recommendedName>
        <fullName>Low-density lipoprotein receptor-related protein 2</fullName>
        <shortName>LRP-2</shortName>
    </recommendedName>
    <alternativeName>
        <fullName>Glycoprotein 330</fullName>
        <shortName>gp330</shortName>
    </alternativeName>
    <alternativeName>
        <fullName>Megalin</fullName>
    </alternativeName>
</protein>
<gene>
    <name type="primary">Lrp2</name>
</gene>
<accession>A2ARV4</accession>
<accession>P70215</accession>
<accession>Q3TL35</accession>
<accession>Q9JLB3</accession>